<comment type="function">
    <text evidence="56 62">Promotes microtubule assembly and stability, and might be involved in the establishment and maintenance of neuronal polarity (PubMed:21985311). The C-terminus binds axonal microtubules while the N-terminus binds neural plasma membrane components, suggesting that tau functions as a linker protein between both (PubMed:21985311, PubMed:32961270). Axonal polarity is predetermined by TAU/MAPT localization (in the neuronal cell) in the domain of the cell body defined by the centrosome. The short isoforms allow plasticity of the cytoskeleton whereas the longer isoforms may preferentially play a role in its stabilization.</text>
</comment>
<comment type="subunit">
    <text evidence="2 3 22 36 44 49 53 57 58 61">Interacts with MARK1, MARK2, MARK3 and MARK4 (PubMed:23666762). Interacts with PSMC2 through SQSTM1 (By similarity). Interacts with SQSTM1 when polyubiquitinated (PubMed:15953362). Interacts with FKBP4 (By similarity). Binds to CSNK1D (PubMed:14761950). Interacts with SGK1 (PubMed:16982696). Interacts with EPM2A; the interaction dephosphorylates MAPT at Ser-396 (PubMed:19542233). Interacts with PIN1 (PubMed:11313338). Interacts with LRRK2 (PubMed:26014385). Interacts with LRP1, leading to endocytosis; this interaction is reduced in the presence of LRPAP1/RAP (PubMed:32296178).</text>
</comment>
<comment type="interaction">
    <interactant intactId="EBI-366182">
        <id>P10636</id>
    </interactant>
    <interactant intactId="EBI-296087">
        <id>P31749</id>
        <label>AKT1</label>
    </interactant>
    <organismsDiffer>false</organismsDiffer>
    <experiments>2</experiments>
</comment>
<comment type="interaction">
    <interactant intactId="EBI-366182">
        <id>P10636</id>
    </interactant>
    <interactant intactId="EBI-9209835">
        <id>PRO_0000001987</id>
        <label>APOE</label>
        <dbReference type="UniProtKB" id="P02649"/>
    </interactant>
    <organismsDiffer>false</organismsDiffer>
    <experiments>3</experiments>
</comment>
<comment type="interaction">
    <interactant intactId="EBI-366182">
        <id>P10636</id>
    </interactant>
    <interactant intactId="EBI-77613">
        <id>P05067</id>
        <label>APP</label>
    </interactant>
    <organismsDiffer>false</organismsDiffer>
    <experiments>8</experiments>
</comment>
<comment type="interaction">
    <interactant intactId="EBI-366182">
        <id>P10636</id>
    </interactant>
    <interactant intactId="EBI-821758">
        <id>PRO_0000000092</id>
        <label>APP</label>
        <dbReference type="UniProtKB" id="P05067"/>
    </interactant>
    <organismsDiffer>false</organismsDiffer>
    <experiments>5</experiments>
</comment>
<comment type="interaction">
    <interactant intactId="EBI-366182">
        <id>P10636</id>
    </interactant>
    <interactant intactId="EBI-3915761">
        <id>Q9HC96</id>
        <label>CAPN10</label>
    </interactant>
    <organismsDiffer>false</organismsDiffer>
    <experiments>3</experiments>
</comment>
<comment type="interaction">
    <interactant intactId="EBI-366182">
        <id>P10636</id>
    </interactant>
    <interactant intactId="EBI-357942">
        <id>Q9NR30</id>
        <label>DDX21</label>
    </interactant>
    <organismsDiffer>false</organismsDiffer>
    <experiments>3</experiments>
</comment>
<comment type="interaction">
    <interactant intactId="EBI-366182">
        <id>P10636</id>
    </interactant>
    <interactant intactId="EBI-716083">
        <id>O43583</id>
        <label>DENR</label>
    </interactant>
    <organismsDiffer>false</organismsDiffer>
    <experiments>2</experiments>
</comment>
<comment type="interaction">
    <interactant intactId="EBI-366182">
        <id>P10636</id>
    </interactant>
    <interactant intactId="EBI-25875570">
        <id>Q92608-2</id>
        <label>DOCK2</label>
    </interactant>
    <organismsDiffer>false</organismsDiffer>
    <experiments>3</experiments>
</comment>
<comment type="interaction">
    <interactant intactId="EBI-366182">
        <id>P10636</id>
    </interactant>
    <interactant intactId="EBI-515315">
        <id>P06241</id>
        <label>FYN</label>
    </interactant>
    <organismsDiffer>false</organismsDiffer>
    <experiments>3</experiments>
</comment>
<comment type="interaction">
    <interactant intactId="EBI-366182">
        <id>P10636</id>
    </interactant>
    <interactant intactId="EBI-373586">
        <id>P49841</id>
        <label>GSK3B</label>
    </interactant>
    <organismsDiffer>false</organismsDiffer>
    <experiments>4</experiments>
</comment>
<comment type="interaction">
    <interactant intactId="EBI-366182">
        <id>P10636</id>
    </interactant>
    <interactant intactId="EBI-351896">
        <id>P11142</id>
        <label>HSPA8</label>
    </interactant>
    <organismsDiffer>false</organismsDiffer>
    <experiments>6</experiments>
</comment>
<comment type="interaction">
    <interactant intactId="EBI-366182">
        <id>P10636</id>
    </interactant>
    <interactant intactId="EBI-10274069">
        <id>Q8TCE9</id>
        <label>LGALS14</label>
    </interactant>
    <organismsDiffer>false</organismsDiffer>
    <experiments>3</experiments>
</comment>
<comment type="interaction">
    <interactant intactId="EBI-366182">
        <id>P10636</id>
    </interactant>
    <interactant intactId="EBI-726739">
        <id>Q9UPY8</id>
        <label>MAPRE3</label>
    </interactant>
    <organismsDiffer>false</organismsDiffer>
    <experiments>3</experiments>
</comment>
<comment type="interaction">
    <interactant intactId="EBI-366182">
        <id>P10636</id>
    </interactant>
    <interactant intactId="EBI-366182">
        <id>P10636</id>
        <label>MAPT</label>
    </interactant>
    <organismsDiffer>false</organismsDiffer>
    <experiments>3</experiments>
</comment>
<comment type="interaction">
    <interactant intactId="EBI-366182">
        <id>P10636</id>
    </interactant>
    <interactant intactId="EBI-977302">
        <id>P04156</id>
        <label>PRNP</label>
    </interactant>
    <organismsDiffer>false</organismsDiffer>
    <experiments>2</experiments>
</comment>
<comment type="interaction">
    <interactant intactId="EBI-366182">
        <id>P10636</id>
    </interactant>
    <interactant intactId="EBI-366357">
        <id>P46779</id>
        <label>RPL28</label>
    </interactant>
    <organismsDiffer>false</organismsDiffer>
    <experiments>4</experiments>
</comment>
<comment type="interaction">
    <interactant intactId="EBI-366182">
        <id>P10636</id>
    </interactant>
    <interactant intactId="EBI-3440986">
        <id>P43004</id>
        <label>SLC1A2</label>
    </interactant>
    <organismsDiffer>false</organismsDiffer>
    <experiments>4</experiments>
</comment>
<comment type="interaction">
    <interactant intactId="EBI-366182">
        <id>P10636</id>
    </interactant>
    <interactant intactId="EBI-357085">
        <id>Q9UNE7</id>
        <label>STUB1</label>
    </interactant>
    <organismsDiffer>false</organismsDiffer>
    <experiments>2</experiments>
</comment>
<comment type="interaction">
    <interactant intactId="EBI-366182">
        <id>P10636</id>
    </interactant>
    <interactant intactId="EBI-15687717">
        <id>Q9UNE7-1</id>
        <label>STUB1</label>
    </interactant>
    <organismsDiffer>false</organismsDiffer>
    <experiments>5</experiments>
</comment>
<comment type="interaction">
    <interactant intactId="EBI-366182">
        <id>P10636</id>
    </interactant>
    <interactant intactId="EBI-21845957">
        <id>O15195-2</id>
        <label>VILL</label>
    </interactant>
    <organismsDiffer>false</organismsDiffer>
    <experiments>3</experiments>
</comment>
<comment type="interaction">
    <interactant intactId="EBI-366182">
        <id>P10636</id>
    </interactant>
    <interactant intactId="EBI-347088">
        <id>P63104</id>
        <label>YWHAZ</label>
    </interactant>
    <organismsDiffer>false</organismsDiffer>
    <experiments>8</experiments>
</comment>
<comment type="interaction">
    <interactant intactId="EBI-366182">
        <id>P10636</id>
    </interactant>
    <interactant intactId="EBI-25850811">
        <id>Q9C0A1</id>
        <label>ZFHX2</label>
    </interactant>
    <organismsDiffer>false</organismsDiffer>
    <experiments>3</experiments>
</comment>
<comment type="interaction">
    <interactant intactId="EBI-7796412">
        <id>P10636-2</id>
    </interactant>
    <interactant intactId="EBI-515315">
        <id>P06241</id>
        <label>FYN</label>
    </interactant>
    <organismsDiffer>false</organismsDiffer>
    <experiments>2</experiments>
</comment>
<comment type="interaction">
    <interactant intactId="EBI-7796412">
        <id>P10636-2</id>
    </interactant>
    <interactant intactId="EBI-5323863">
        <id>Q5S007</id>
        <label>LRRK2</label>
    </interactant>
    <organismsDiffer>false</organismsDiffer>
    <experiments>3</experiments>
</comment>
<comment type="interaction">
    <interactant intactId="EBI-7796412">
        <id>P10636-2</id>
    </interactant>
    <interactant intactId="EBI-476295">
        <id>P31947</id>
        <label>SFN</label>
    </interactant>
    <organismsDiffer>false</organismsDiffer>
    <experiments>2</experiments>
</comment>
<comment type="interaction">
    <interactant intactId="EBI-7796412">
        <id>P10636-2</id>
    </interactant>
    <interactant intactId="EBI-347088">
        <id>P63104</id>
        <label>YWHAZ</label>
    </interactant>
    <organismsDiffer>false</organismsDiffer>
    <experiments>2</experiments>
</comment>
<comment type="interaction">
    <interactant intactId="EBI-7145070">
        <id>P10636-3</id>
    </interactant>
    <interactant intactId="EBI-347088">
        <id>P63104</id>
        <label>YWHAZ</label>
    </interactant>
    <organismsDiffer>false</organismsDiffer>
    <experiments>9</experiments>
</comment>
<comment type="interaction">
    <interactant intactId="EBI-21313635">
        <id>P10636-5</id>
    </interactant>
    <interactant intactId="EBI-515315">
        <id>P06241</id>
        <label>FYN</label>
    </interactant>
    <organismsDiffer>false</organismsDiffer>
    <experiments>2</experiments>
</comment>
<comment type="interaction">
    <interactant intactId="EBI-7796455">
        <id>P10636-6</id>
    </interactant>
    <interactant intactId="EBI-1222467">
        <id>P02649</id>
        <label>APOE</label>
    </interactant>
    <organismsDiffer>false</organismsDiffer>
    <experiments>3</experiments>
</comment>
<comment type="interaction">
    <interactant intactId="EBI-7796455">
        <id>P10636-6</id>
    </interactant>
    <interactant intactId="EBI-25840379">
        <id>Q14203-5</id>
        <label>DCTN1</label>
    </interactant>
    <organismsDiffer>false</organismsDiffer>
    <experiments>3</experiments>
</comment>
<comment type="interaction">
    <interactant intactId="EBI-7796455">
        <id>P10636-6</id>
    </interactant>
    <interactant intactId="EBI-25875570">
        <id>Q92608-2</id>
        <label>DOCK2</label>
    </interactant>
    <organismsDiffer>false</organismsDiffer>
    <experiments>3</experiments>
</comment>
<comment type="interaction">
    <interactant intactId="EBI-7796455">
        <id>P10636-6</id>
    </interactant>
    <interactant intactId="EBI-515315">
        <id>P06241</id>
        <label>FYN</label>
    </interactant>
    <organismsDiffer>false</organismsDiffer>
    <experiments>3</experiments>
</comment>
<comment type="interaction">
    <interactant intactId="EBI-7796455">
        <id>P10636-6</id>
    </interactant>
    <interactant intactId="EBI-351896">
        <id>P11142</id>
        <label>HSPA8</label>
    </interactant>
    <organismsDiffer>false</organismsDiffer>
    <experiments>3</experiments>
</comment>
<comment type="interaction">
    <interactant intactId="EBI-7796455">
        <id>P10636-6</id>
    </interactant>
    <interactant intactId="EBI-21251460">
        <id>O60260-5</id>
        <label>PRKN</label>
    </interactant>
    <organismsDiffer>false</organismsDiffer>
    <experiments>3</experiments>
</comment>
<comment type="interaction">
    <interactant intactId="EBI-7796455">
        <id>P10636-6</id>
    </interactant>
    <interactant intactId="EBI-985879">
        <id>P37840</id>
        <label>SNCA</label>
    </interactant>
    <organismsDiffer>false</organismsDiffer>
    <experiments>3</experiments>
</comment>
<comment type="interaction">
    <interactant intactId="EBI-7796455">
        <id>P10636-6</id>
    </interactant>
    <interactant intactId="EBI-25850811">
        <id>Q9C0A1</id>
        <label>ZFHX2</label>
    </interactant>
    <organismsDiffer>false</organismsDiffer>
    <experiments>3</experiments>
</comment>
<comment type="interaction">
    <interactant intactId="EBI-6926270">
        <id>P10636-7</id>
    </interactant>
    <interactant intactId="EBI-6926280">
        <id>O00499-1</id>
        <label>BIN1</label>
    </interactant>
    <organismsDiffer>false</organismsDiffer>
    <experiments>5</experiments>
</comment>
<comment type="interaction">
    <interactant intactId="EBI-366233">
        <id>P10636-8</id>
    </interactant>
    <interactant intactId="EBI-352622">
        <id>P07355</id>
        <label>ANXA2</label>
    </interactant>
    <organismsDiffer>false</organismsDiffer>
    <experiments>10</experiments>
</comment>
<comment type="interaction">
    <interactant intactId="EBI-366233">
        <id>P10636-8</id>
    </interactant>
    <interactant intactId="EBI-352541">
        <id>P08133</id>
        <label>ANXA6</label>
    </interactant>
    <organismsDiffer>false</organismsDiffer>
    <experiments>5</experiments>
</comment>
<comment type="interaction">
    <interactant intactId="EBI-366233">
        <id>P10636-8</id>
    </interactant>
    <interactant intactId="EBI-77613">
        <id>P05067</id>
        <label>APP</label>
    </interactant>
    <organismsDiffer>false</organismsDiffer>
    <experiments>4</experiments>
</comment>
<comment type="interaction">
    <interactant intactId="EBI-366233">
        <id>P10636-8</id>
    </interactant>
    <interactant intactId="EBI-6926280">
        <id>O00499-1</id>
        <label>BIN1</label>
    </interactant>
    <organismsDiffer>false</organismsDiffer>
    <experiments>6</experiments>
</comment>
<comment type="interaction">
    <interactant intactId="EBI-366233">
        <id>P10636-8</id>
    </interactant>
    <interactant intactId="EBI-724352">
        <id>Q14203</id>
        <label>DCTN1</label>
    </interactant>
    <organismsDiffer>false</organismsDiffer>
    <experiments>9</experiments>
</comment>
<comment type="interaction">
    <interactant intactId="EBI-366233">
        <id>P10636-8</id>
    </interactant>
    <interactant intactId="EBI-351257">
        <id>P26196</id>
        <label>DDX6</label>
    </interactant>
    <organismsDiffer>false</organismsDiffer>
    <experiments>10</experiments>
</comment>
<comment type="interaction">
    <interactant intactId="EBI-366233">
        <id>P10636-8</id>
    </interactant>
    <interactant intactId="EBI-1047444">
        <id>Q02790</id>
        <label>FKBP4</label>
    </interactant>
    <organismsDiffer>false</organismsDiffer>
    <experiments>7</experiments>
</comment>
<comment type="interaction">
    <interactant intactId="EBI-366233">
        <id>P10636-8</id>
    </interactant>
    <interactant intactId="EBI-306914">
        <id>Q13451</id>
        <label>FKBP5</label>
    </interactant>
    <organismsDiffer>false</organismsDiffer>
    <experiments>8</experiments>
</comment>
<comment type="interaction">
    <interactant intactId="EBI-366233">
        <id>P10636-8</id>
    </interactant>
    <interactant intactId="EBI-515315">
        <id>P06241</id>
        <label>FYN</label>
    </interactant>
    <organismsDiffer>false</organismsDiffer>
    <experiments>9</experiments>
</comment>
<comment type="interaction">
    <interactant intactId="EBI-366233">
        <id>P10636-8</id>
    </interactant>
    <interactant intactId="EBI-1044067">
        <id>P49840</id>
        <label>GSK3A</label>
    </interactant>
    <organismsDiffer>false</organismsDiffer>
    <experiments>2</experiments>
</comment>
<comment type="interaction">
    <interactant intactId="EBI-366233">
        <id>P10636-8</id>
    </interactant>
    <interactant intactId="EBI-373586">
        <id>P49841</id>
        <label>GSK3B</label>
    </interactant>
    <organismsDiffer>false</organismsDiffer>
    <experiments>12</experiments>
</comment>
<comment type="interaction">
    <interactant intactId="EBI-366233">
        <id>P10636-8</id>
    </interactant>
    <interactant intactId="EBI-352572">
        <id>P08238</id>
        <label>HSP90AB1</label>
    </interactant>
    <organismsDiffer>false</organismsDiffer>
    <experiments>18</experiments>
</comment>
<comment type="interaction">
    <interactant intactId="EBI-366233">
        <id>P10636-8</id>
    </interactant>
    <interactant intactId="EBI-359129">
        <id>P14625</id>
        <label>HSP90B1</label>
    </interactant>
    <organismsDiffer>false</organismsDiffer>
    <experiments>5</experiments>
</comment>
<comment type="interaction">
    <interactant intactId="EBI-366233">
        <id>P10636-8</id>
    </interactant>
    <interactant intactId="EBI-352256">
        <id>Q92743</id>
        <label>HTRA1</label>
    </interactant>
    <organismsDiffer>false</organismsDiffer>
    <experiments>9</experiments>
</comment>
<comment type="interaction">
    <interactant intactId="EBI-366233">
        <id>P10636-8</id>
    </interactant>
    <interactant intactId="EBI-5323863">
        <id>Q5S007</id>
        <label>LRRK2</label>
    </interactant>
    <organismsDiffer>false</organismsDiffer>
    <experiments>9</experiments>
</comment>
<comment type="interaction">
    <interactant intactId="EBI-366233">
        <id>P10636-8</id>
    </interactant>
    <interactant intactId="EBI-366233">
        <id>P10636-8</id>
        <label>MAPT</label>
    </interactant>
    <organismsDiffer>false</organismsDiffer>
    <experiments>6</experiments>
</comment>
<comment type="interaction">
    <interactant intactId="EBI-366233">
        <id>P10636-8</id>
    </interactant>
    <interactant intactId="EBI-726515">
        <id>O43347</id>
        <label>MSI1</label>
    </interactant>
    <organismsDiffer>false</organismsDiffer>
    <experiments>2</experiments>
</comment>
<comment type="interaction">
    <interactant intactId="EBI-366233">
        <id>P10636-8</id>
    </interactant>
    <interactant intactId="EBI-2462339">
        <id>Q96DH6</id>
        <label>MSI2</label>
    </interactant>
    <organismsDiffer>false</organismsDiffer>
    <experiments>4</experiments>
</comment>
<comment type="interaction">
    <interactant intactId="EBI-366233">
        <id>P10636-8</id>
    </interactant>
    <interactant intactId="EBI-395883">
        <id>P07237</id>
        <label>P4HB</label>
    </interactant>
    <organismsDiffer>false</organismsDiffer>
    <experiments>6</experiments>
</comment>
<comment type="interaction">
    <interactant intactId="EBI-366233">
        <id>P10636-8</id>
    </interactant>
    <interactant intactId="EBI-2690712">
        <id>Q12765</id>
        <label>SCRN1</label>
    </interactant>
    <organismsDiffer>false</organismsDiffer>
    <experiments>5</experiments>
</comment>
<comment type="interaction">
    <interactant intactId="EBI-366233">
        <id>P10636-8</id>
    </interactant>
    <interactant intactId="EBI-985879">
        <id>P37840</id>
        <label>SNCA</label>
    </interactant>
    <organismsDiffer>false</organismsDiffer>
    <experiments>12</experiments>
</comment>
<comment type="interaction">
    <interactant intactId="EBI-366233">
        <id>P10636-8</id>
    </interactant>
    <interactant intactId="EBI-302552">
        <id>Q71U36</id>
        <label>TUBA1A</label>
    </interactant>
    <organismsDiffer>false</organismsDiffer>
    <experiments>7</experiments>
</comment>
<comment type="interaction">
    <interactant intactId="EBI-366233">
        <id>P10636-8</id>
    </interactant>
    <interactant intactId="EBI-350864">
        <id>P07437</id>
        <label>TUBB</label>
    </interactant>
    <organismsDiffer>false</organismsDiffer>
    <experiments>4</experiments>
</comment>
<comment type="subcellular location">
    <subcellularLocation>
        <location evidence="14 57 58">Cytoplasm</location>
        <location evidence="14 57 58">Cytosol</location>
    </subcellularLocation>
    <subcellularLocation>
        <location evidence="14">Cell membrane</location>
        <topology evidence="14">Peripheral membrane protein</topology>
        <orientation evidence="14">Cytoplasmic side</orientation>
    </subcellularLocation>
    <subcellularLocation>
        <location evidence="14">Cytoplasm</location>
        <location evidence="14">Cytoskeleton</location>
    </subcellularLocation>
    <subcellularLocation>
        <location evidence="14">Cell projection</location>
        <location evidence="14">Axon</location>
    </subcellularLocation>
    <subcellularLocation>
        <location evidence="57">Cell projection</location>
        <location evidence="57">Dendrite</location>
    </subcellularLocation>
    <subcellularLocation>
        <location evidence="60">Secreted</location>
    </subcellularLocation>
    <text evidence="14 60">Mostly found in the axons of neurons, in the cytosol and in association with plasma membrane components (PubMed:10747907). Can be secreted; the secretion is dependent on protein unfolding and facilitated by the cargo receptor TMED10; it results in protein translocation from the cytoplasm into the ERGIC (endoplasmic reticulum-Golgi intermediate compartment) followed by vesicle entry and secretion (PubMed:32272059).</text>
</comment>
<comment type="alternative products">
    <event type="alternative splicing"/>
    <isoform>
        <id>P10636-1</id>
        <name>PNS-tau</name>
        <sequence type="displayed"/>
    </isoform>
    <isoform>
        <id>P10636-2</id>
        <name>Fetal-tau</name>
        <name evidence="77">0N3R</name>
        <sequence type="described" ref="VSP_003176 VSP_003177 VSP_003179 VSP_003180 VSP_003181"/>
    </isoform>
    <isoform>
        <id>P10636-3</id>
        <name>Tau-A</name>
        <sequence type="described" ref="VSP_003175 VSP_003176 VSP_003177 VSP_003178 VSP_003179 VSP_003180 VSP_003181"/>
    </isoform>
    <isoform>
        <id>P10636-4</id>
        <name>Tau-B</name>
        <name evidence="77">1N3R</name>
        <sequence type="described" ref="VSP_003177 VSP_003179 VSP_003180 VSP_003181"/>
    </isoform>
    <isoform>
        <id>P10636-5</id>
        <name>Tau-C</name>
        <name>Tau-3</name>
        <name evidence="77">2N3R</name>
        <sequence type="described" ref="VSP_003179 VSP_003180 VSP_003181"/>
    </isoform>
    <isoform>
        <id>P10636-6</id>
        <name>Tau-D</name>
        <name evidence="77">0N4R</name>
        <sequence type="described" ref="VSP_003176 VSP_003177 VSP_003179 VSP_003180"/>
    </isoform>
    <isoform>
        <id>P10636-7</id>
        <name>Tau-E</name>
        <name evidence="77">1N4R</name>
        <sequence type="described" ref="VSP_003177 VSP_003179 VSP_003180"/>
    </isoform>
    <isoform>
        <id>P10636-8</id>
        <name>Tau-F</name>
        <name>Tau-4</name>
        <name evidence="77">2N4R</name>
        <sequence type="described" ref="VSP_003179 VSP_003180"/>
    </isoform>
    <isoform>
        <id>P10636-9</id>
        <name>Tau-G</name>
        <sequence type="described" ref="VSP_026780"/>
    </isoform>
    <text>Additional isoforms seem to exist. Isoforms differ from each other by the presence or absence of up to 5 of the 15 exons. One of these optional exons contains the additional tau/MAP repeat.</text>
</comment>
<comment type="tissue specificity">
    <text>Expressed in neurons. Isoform PNS-tau is expressed in the peripheral nervous system while the others are expressed in the central nervous system.</text>
</comment>
<comment type="developmental stage">
    <text>Four-repeat (type II) TAU/MAPT is expressed in an adult-specific manner and is not found in fetal brain, whereas three-repeat (type I) TAU/MAPT is found in both adult and fetal brain.</text>
</comment>
<comment type="domain">
    <text>The tau/MAP repeat binds to tubulin. Type I isoforms contain 3 repeats while type II isoforms contain 4 repeats.</text>
</comment>
<comment type="PTM">
    <text evidence="35 36 42 47 49 52 55 56 57 63 64 66">Phosphorylation at serine and threonine residues in S-P or T-P motifs by proline-directed protein kinases (PDPK1, CDK1, CDK5, GSK3, MAPK) (only 2-3 sites per protein in interphase, seven-fold increase in mitosis, and in the form associated with paired helical filaments (PHF-tau)), and at serine residues in K-X-G-S motifs by MAP/microtubule affinity-regulating kinase (MARK1, MARK2, MARK3 or MARK4), causing detachment from microtubules, and their disassembly (PubMed:23666762, PubMed:7706316). Phosphorylation decreases with age. Phosphorylation within tau/MAP's repeat domain or in flanking regions seems to reduce tau/MAP's interaction with, respectively, microtubules or plasma membrane components (PubMed:7706316). Phosphorylation on Ser-610, Ser-622, Ser-641 and Ser-673 in several isoforms during mitosis. Phosphorylation at Ser-548 by GSK3B reduces ability to bind and stabilize microtubules. Phosphorylation at Ser-579 by BRSK1 and BRSK2 in neurons affects ability to bind microtubules and plays a role in neuron polarization. Phosphorylated at Ser-554, Ser-579, Ser-602, Ser-606 and Ser-669 by PHK. Phosphorylation at Ser-214 by SGK1 mediates microtubule depolymerization and neurite formation in hippocampal neurons. There is a reciprocal down-regulation of phosphorylation and O-GlcNAcylation. Phosphorylation on Ser-717 completely abolishes the O-GlcNAcylation on this site, while phosphorylation on Ser-713 and Ser-721 reduces glycosylation by a factor of 2 and 4 respectively. Phosphorylation on Ser-721 is reduced by about 41.5% by GlcNAcylation on Ser-717. Dephosphorylated at several serine and threonine residues by the serine/threonine phosphatase PPP5C.</text>
</comment>
<comment type="PTM">
    <text evidence="1 44 47">Polyubiquitinated. Requires functional TRAF6 and may provoke SQSTM1-dependent degradation by the proteasome (By similarity). PHF-tau can be modified by three different forms of polyubiquitination. 'Lys-48'-linked polyubiquitination is the major form, 'Lys-6'-linked and 'Lys-11'-linked polyubiquitination also occur.</text>
</comment>
<comment type="PTM">
    <text evidence="36 42 47 52 55 66">O-glycosylated. O-GlcNAcylation content is around 8.2%. There is reciprocal down-regulation of phosphorylation and O-GlcNAcylation. Phosphorylation on Ser-717 completely abolishes the O-GlcNAcylation on this site, while phosphorylation on Ser-713 and Ser-721 reduces O-GlcNAcylation by a factor of 2 and 4 respectively. O-GlcNAcylation on Ser-717 decreases the phosphorylation on Ser-721 by about 41.5%.</text>
</comment>
<comment type="PTM">
    <text>Glycation of PHF-tau, but not normal brain TAU/MAPT. Glycation is a non-enzymatic post-translational modification that involves a covalent linkage between a sugar and an amino group of a protein molecule forming ketoamine. Subsequent oxidation, fragmentation and/or cross-linking of ketoamine leads to the production of advanced glycation endproducts (AGES). Glycation may play a role in stabilizing PHF aggregation leading to tangle formation in AD.</text>
</comment>
<comment type="disease">
    <text evidence="33 59">In Alzheimer disease, the neuronal cytoskeleton in the brain is progressively disrupted and replaced by tangles of paired helical filaments (PHF) and straight filaments, mainly composed of hyperphosphorylated forms of TAU (PHF-TAU or AD P-TAU). O-GlcNAcylation is greatly reduced in Alzheimer disease brain cerebral cortex leading to an increase in TAU/MAPT phosphorylations.</text>
</comment>
<comment type="disease" evidence="6 7 8 10 12 15 16 18 21 23 25 27 28 30 31 33 43 46 59 62 67 68 69 70 71">
    <disease id="DI-01632">
        <name>Frontotemporal dementia 1</name>
        <acronym>FTD1</acronym>
        <description>A form of dementia characterized by pathologic finding of frontotemporal lobar degeneration, presenile dementia with behavioral changes, deterioration of cognitive capacities and loss of memory. In some cases, parkinsonian symptoms are prominent. Neuropathological changes include frontotemporal atrophy often associated with atrophy of the basal ganglia, substantia nigra, amygdala. In most cases, protein tau deposits are found in glial cells and/or neurons.</description>
        <dbReference type="MIM" id="600274"/>
    </disease>
    <text>The disease is caused by variants affecting the gene represented in this entry.</text>
</comment>
<comment type="disease" evidence="13 17 19 24 26">
    <disease id="DI-02937">
        <name>Pick disease of the brain</name>
        <acronym>PIDB</acronym>
        <description>A rare form of dementia pathologically defined by severe atrophy, neuronal loss and gliosis. It is characterized by the occurrence of tau-positive inclusions, swollen neurons (Pick cells) and argentophilic neuronal inclusions known as Pick bodies that disproportionally affect the frontal and temporal cortical regions. Clinical features include aphasia, apraxia, confusion, anomia, memory loss and personality deterioration.</description>
        <dbReference type="MIM" id="172700"/>
    </disease>
    <text>The disease is caused by variants affecting the gene represented in this entry.</text>
</comment>
<comment type="disease">
    <text>Defects in MAPT are a cause of corticobasal degeneration (CBD). It is marked by extrapyramidal signs and apraxia and can be associated with memory loss. Neuropathologic features may overlap Alzheimer disease, progressive supranuclear palsy, and Parkinson disease.</text>
</comment>
<comment type="disease" evidence="11 20 29 37 38 45">
    <disease id="DI-02215">
        <name>Progressive supranuclear palsy 1</name>
        <acronym>PSNP1</acronym>
        <description>Characterized by akinetic-rigid syndrome, supranuclear gaze palsy, pyramidal tract dysfunction, pseudobulbar signs and cognitive capacities deterioration. Neurofibrillary tangles and gliosis but no amyloid plaques are found in diseased brains. Most cases appear to be sporadic, with a significant association with a common haplotype including the MAPT gene and the flanking regions. Familial cases show an autosomal dominant pattern of transmission with incomplete penetrance; genetic analysis of a few cases showed the occurrence of tau mutations, including a deletion of Asn-613.</description>
        <dbReference type="MIM" id="601104"/>
    </disease>
    <text>The disease is caused by variants affecting the gene represented in this entry.</text>
</comment>
<comment type="disease">
    <disease id="DI-03096">
        <name>Parkinson-dementia syndrome</name>
        <acronym>PARDE</acronym>
        <description>A syndrome characterized by parkinsonism, tremor, rigidity, dementia, ophthalmoparesis and pyramidal signs. Neurofibrillary degeneration occurs in the hippocampus, basal ganglia and brainstem nuclei.</description>
        <dbReference type="MIM" id="260540"/>
    </disease>
    <text>The disease is caused by variants affecting the gene represented in this entry.</text>
</comment>
<comment type="online information" name="Alzforum">
    <link uri="https://www.alzforum.org/mutations/mapt"/>
    <text>MAPT mutations</text>
</comment>
<comment type="online information" name="Protein Spotlight">
    <link uri="https://www.proteinspotlight.org/back_issues/068"/>
    <text>Vita minima - Issue 68 of March 2006</text>
</comment>
<comment type="online information" name="Wikipedia">
    <link uri="https://en.wikipedia.org/wiki/Tau_protein"/>
    <text>Tau protein entry</text>
</comment>
<sequence>MAEPRQEFEVMEDHAGTYGLGDRKDQGGYTMHQDQEGDTDAGLKESPLQTPTEDGSEEPGSETSDAKSTPTAEDVTAPLVDEGAPGKQAAAQPHTEIPEGTTAEEAGIGDTPSLEDEAAGHVTQEPESGKVVQEGFLREPGPPGLSHQLMSGMPGAPLLPEGPREATRQPSGTGPEDTEGGRHAPELLKHQLLGDLHQEGPPLKGAGGKERPGSKEEVDEDRDVDESSPQDSPPSKASPAQDGRPPQTAAREATSIPGFPAEGAIPLPVDFLSKVSTEIPASEPDGPSVGRAKGQDAPLEFTFHVEITPNVQKEQAHSEEHLGRAAFPGAPGEGPEARGPSLGEDTKEADLPEPSEKQPAAAPRGKPVSRVPQLKARMVSKSKDGTGSDDKKAKTSTRSSAKTLKNRPCLSPKHPTPGSSDPLIQPSSPAVCPEPPSSPKYVSSVTSRTGSSGAKEMKLKGADGKTKIATPRGAAPPGQKGQANATRIPAKTPPAPKTPPSSGEPPKSGDRSGYSSPGSPGTPGSRSRTPSLPTPPTREPKKVAVVRTPPKSPSSAKSRLQTAPVPMPDLKNVKSKIGSTENLKHQPGGGKVQIINKKLDLSNVQSKCGSKDNIKHVPGGGSVQIVYKPVDLSKVTSKCGSLGNIHHKPGGGQVEVKSEKLDFKDRVQSKIGSLDNITHVPGGGNKKIETHKLTFRENAKAKTDHGAEIVYKSPVVSGDTSPRHLSNVSSTGSIDMVDSPQLATLADEVSASLAKQGL</sequence>
<gene>
    <name evidence="82" type="primary">MAPT</name>
    <name type="synonym">MAPTL</name>
    <name type="synonym">MTBT1</name>
    <name type="synonym">TAU</name>
</gene>
<protein>
    <recommendedName>
        <fullName evidence="80">Microtubule-associated protein tau</fullName>
    </recommendedName>
    <alternativeName>
        <fullName>Neurofibrillary tangle protein</fullName>
    </alternativeName>
    <alternativeName>
        <fullName>Paired helical filament-tau</fullName>
        <shortName>PHF-tau</shortName>
    </alternativeName>
</protein>
<organism>
    <name type="scientific">Homo sapiens</name>
    <name type="common">Human</name>
    <dbReference type="NCBI Taxonomy" id="9606"/>
    <lineage>
        <taxon>Eukaryota</taxon>
        <taxon>Metazoa</taxon>
        <taxon>Chordata</taxon>
        <taxon>Craniata</taxon>
        <taxon>Vertebrata</taxon>
        <taxon>Euteleostomi</taxon>
        <taxon>Mammalia</taxon>
        <taxon>Eutheria</taxon>
        <taxon>Euarchontoglires</taxon>
        <taxon>Primates</taxon>
        <taxon>Haplorrhini</taxon>
        <taxon>Catarrhini</taxon>
        <taxon>Hominidae</taxon>
        <taxon>Homo</taxon>
    </lineage>
</organism>
<accession>P10636</accession>
<accession>P18518</accession>
<accession>Q14799</accession>
<accession>Q15549</accession>
<accession>Q15550</accession>
<accession>Q15551</accession>
<accession>Q1RMF6</accession>
<accession>Q53YB1</accession>
<accession>Q5CZI7</accession>
<accession>Q5XWF0</accession>
<accession>Q6QT54</accession>
<accession>Q9UDJ3</accession>
<accession>Q9UMH0</accession>
<accession>Q9UQ96</accession>
<dbReference type="EMBL" id="J03778">
    <property type="protein sequence ID" value="AAA60615.1"/>
    <property type="molecule type" value="mRNA"/>
</dbReference>
<dbReference type="EMBL" id="X14474">
    <property type="protein sequence ID" value="CAA32636.1"/>
    <property type="molecule type" value="mRNA"/>
</dbReference>
<dbReference type="EMBL" id="AF047863">
    <property type="protein sequence ID" value="AAC04277.1"/>
    <property type="molecule type" value="Genomic_DNA"/>
</dbReference>
<dbReference type="EMBL" id="AF027491">
    <property type="protein sequence ID" value="AAC04277.1"/>
    <property type="status" value="JOINED"/>
    <property type="molecule type" value="Genomic_DNA"/>
</dbReference>
<dbReference type="EMBL" id="AF047856">
    <property type="protein sequence ID" value="AAC04277.1"/>
    <property type="status" value="JOINED"/>
    <property type="molecule type" value="Genomic_DNA"/>
</dbReference>
<dbReference type="EMBL" id="AF047857">
    <property type="protein sequence ID" value="AAC04277.1"/>
    <property type="status" value="JOINED"/>
    <property type="molecule type" value="Genomic_DNA"/>
</dbReference>
<dbReference type="EMBL" id="AF027492">
    <property type="protein sequence ID" value="AAC04277.1"/>
    <property type="status" value="JOINED"/>
    <property type="molecule type" value="Genomic_DNA"/>
</dbReference>
<dbReference type="EMBL" id="AF047858">
    <property type="protein sequence ID" value="AAC04277.1"/>
    <property type="status" value="JOINED"/>
    <property type="molecule type" value="Genomic_DNA"/>
</dbReference>
<dbReference type="EMBL" id="AF027493">
    <property type="protein sequence ID" value="AAC04277.1"/>
    <property type="status" value="JOINED"/>
    <property type="molecule type" value="Genomic_DNA"/>
</dbReference>
<dbReference type="EMBL" id="AF047859">
    <property type="protein sequence ID" value="AAC04277.1"/>
    <property type="status" value="JOINED"/>
    <property type="molecule type" value="Genomic_DNA"/>
</dbReference>
<dbReference type="EMBL" id="AF047860">
    <property type="protein sequence ID" value="AAC04277.1"/>
    <property type="status" value="JOINED"/>
    <property type="molecule type" value="Genomic_DNA"/>
</dbReference>
<dbReference type="EMBL" id="AF047862">
    <property type="protein sequence ID" value="AAC04277.1"/>
    <property type="status" value="JOINED"/>
    <property type="molecule type" value="Genomic_DNA"/>
</dbReference>
<dbReference type="EMBL" id="AF027494">
    <property type="protein sequence ID" value="AAC04277.1"/>
    <property type="status" value="JOINED"/>
    <property type="molecule type" value="Genomic_DNA"/>
</dbReference>
<dbReference type="EMBL" id="AF027495">
    <property type="protein sequence ID" value="AAC04277.1"/>
    <property type="status" value="JOINED"/>
    <property type="molecule type" value="Genomic_DNA"/>
</dbReference>
<dbReference type="EMBL" id="AF027496">
    <property type="protein sequence ID" value="AAC04277.1"/>
    <property type="status" value="JOINED"/>
    <property type="molecule type" value="Genomic_DNA"/>
</dbReference>
<dbReference type="EMBL" id="AF027491">
    <property type="protein sequence ID" value="AAC04278.1"/>
    <property type="molecule type" value="Genomic_DNA"/>
</dbReference>
<dbReference type="EMBL" id="AF027492">
    <property type="protein sequence ID" value="AAC04278.1"/>
    <property type="status" value="JOINED"/>
    <property type="molecule type" value="Genomic_DNA"/>
</dbReference>
<dbReference type="EMBL" id="AF027493">
    <property type="protein sequence ID" value="AAC04278.1"/>
    <property type="status" value="JOINED"/>
    <property type="molecule type" value="Genomic_DNA"/>
</dbReference>
<dbReference type="EMBL" id="AF047860">
    <property type="protein sequence ID" value="AAC04278.1"/>
    <property type="status" value="JOINED"/>
    <property type="molecule type" value="Genomic_DNA"/>
</dbReference>
<dbReference type="EMBL" id="AF047862">
    <property type="protein sequence ID" value="AAC04278.1"/>
    <property type="status" value="JOINED"/>
    <property type="molecule type" value="Genomic_DNA"/>
</dbReference>
<dbReference type="EMBL" id="AF027495">
    <property type="protein sequence ID" value="AAC04278.1"/>
    <property type="status" value="JOINED"/>
    <property type="molecule type" value="Genomic_DNA"/>
</dbReference>
<dbReference type="EMBL" id="AF027496">
    <property type="protein sequence ID" value="AAC04278.1"/>
    <property type="status" value="JOINED"/>
    <property type="molecule type" value="Genomic_DNA"/>
</dbReference>
<dbReference type="EMBL" id="AF047863">
    <property type="protein sequence ID" value="AAC04278.1"/>
    <property type="status" value="JOINED"/>
    <property type="molecule type" value="Genomic_DNA"/>
</dbReference>
<dbReference type="EMBL" id="AF027491">
    <property type="protein sequence ID" value="AAC04279.1"/>
    <property type="molecule type" value="Genomic_DNA"/>
</dbReference>
<dbReference type="EMBL" id="AF047856">
    <property type="protein sequence ID" value="AAC04279.1"/>
    <property type="status" value="JOINED"/>
    <property type="molecule type" value="Genomic_DNA"/>
</dbReference>
<dbReference type="EMBL" id="AF047857">
    <property type="protein sequence ID" value="AAC04279.1"/>
    <property type="status" value="JOINED"/>
    <property type="molecule type" value="Genomic_DNA"/>
</dbReference>
<dbReference type="EMBL" id="AF027492">
    <property type="protein sequence ID" value="AAC04279.1"/>
    <property type="status" value="JOINED"/>
    <property type="molecule type" value="Genomic_DNA"/>
</dbReference>
<dbReference type="EMBL" id="AF027493">
    <property type="protein sequence ID" value="AAC04279.1"/>
    <property type="status" value="JOINED"/>
    <property type="molecule type" value="Genomic_DNA"/>
</dbReference>
<dbReference type="EMBL" id="AF047860">
    <property type="protein sequence ID" value="AAC04279.1"/>
    <property type="status" value="JOINED"/>
    <property type="molecule type" value="Genomic_DNA"/>
</dbReference>
<dbReference type="EMBL" id="AF047862">
    <property type="protein sequence ID" value="AAC04279.1"/>
    <property type="status" value="JOINED"/>
    <property type="molecule type" value="Genomic_DNA"/>
</dbReference>
<dbReference type="EMBL" id="AF027494">
    <property type="protein sequence ID" value="AAC04279.1"/>
    <property type="status" value="JOINED"/>
    <property type="molecule type" value="Genomic_DNA"/>
</dbReference>
<dbReference type="EMBL" id="AF027495">
    <property type="protein sequence ID" value="AAC04279.1"/>
    <property type="status" value="JOINED"/>
    <property type="molecule type" value="Genomic_DNA"/>
</dbReference>
<dbReference type="EMBL" id="AF027496">
    <property type="protein sequence ID" value="AAC04279.1"/>
    <property type="status" value="JOINED"/>
    <property type="molecule type" value="Genomic_DNA"/>
</dbReference>
<dbReference type="EMBL" id="AF047863">
    <property type="protein sequence ID" value="AAC04279.1"/>
    <property type="status" value="JOINED"/>
    <property type="molecule type" value="Genomic_DNA"/>
</dbReference>
<dbReference type="EMBL" id="AF047861">
    <property type="status" value="NOT_ANNOTATED_CDS"/>
    <property type="molecule type" value="Genomic_DNA"/>
</dbReference>
<dbReference type="EMBL" id="AY730549">
    <property type="protein sequence ID" value="AAU45390.1"/>
    <property type="molecule type" value="mRNA"/>
</dbReference>
<dbReference type="EMBL" id="BT006772">
    <property type="protein sequence ID" value="AAP35418.1"/>
    <property type="molecule type" value="mRNA"/>
</dbReference>
<dbReference type="EMBL" id="AC004139">
    <property type="status" value="NOT_ANNOTATED_CDS"/>
    <property type="molecule type" value="Genomic_DNA"/>
</dbReference>
<dbReference type="EMBL" id="AC010792">
    <property type="status" value="NOT_ANNOTATED_CDS"/>
    <property type="molecule type" value="Genomic_DNA"/>
</dbReference>
<dbReference type="EMBL" id="AC217771">
    <property type="status" value="NOT_ANNOTATED_CDS"/>
    <property type="molecule type" value="Genomic_DNA"/>
</dbReference>
<dbReference type="EMBL" id="AC217779">
    <property type="status" value="NOT_ANNOTATED_CDS"/>
    <property type="molecule type" value="Genomic_DNA"/>
</dbReference>
<dbReference type="EMBL" id="BC000558">
    <property type="protein sequence ID" value="AAH00558.1"/>
    <property type="molecule type" value="mRNA"/>
</dbReference>
<dbReference type="EMBL" id="BC098281">
    <property type="protein sequence ID" value="AAH98281.1"/>
    <property type="molecule type" value="mRNA"/>
</dbReference>
<dbReference type="EMBL" id="BC099721">
    <property type="protein sequence ID" value="AAH99721.1"/>
    <property type="molecule type" value="mRNA"/>
</dbReference>
<dbReference type="EMBL" id="BC101936">
    <property type="protein sequence ID" value="AAI01937.1"/>
    <property type="molecule type" value="mRNA"/>
</dbReference>
<dbReference type="EMBL" id="BC114504">
    <property type="protein sequence ID" value="AAI14505.1"/>
    <property type="molecule type" value="mRNA"/>
</dbReference>
<dbReference type="EMBL" id="BC114948">
    <property type="protein sequence ID" value="AAI14949.1"/>
    <property type="molecule type" value="mRNA"/>
</dbReference>
<dbReference type="EMBL" id="AY526356">
    <property type="protein sequence ID" value="AAS17881.1"/>
    <property type="molecule type" value="mRNA"/>
</dbReference>
<dbReference type="EMBL" id="M25298">
    <property type="protein sequence ID" value="AAA57264.1"/>
    <property type="molecule type" value="mRNA"/>
</dbReference>
<dbReference type="EMBL" id="BN000503">
    <property type="protein sequence ID" value="CAG26750.1"/>
    <property type="molecule type" value="mRNA"/>
</dbReference>
<dbReference type="CCDS" id="CCDS11499.1">
    <molecule id="P10636-8"/>
</dbReference>
<dbReference type="CCDS" id="CCDS11500.1">
    <molecule id="P10636-6"/>
</dbReference>
<dbReference type="CCDS" id="CCDS11501.1">
    <molecule id="P10636-1"/>
</dbReference>
<dbReference type="CCDS" id="CCDS11502.1">
    <molecule id="P10636-2"/>
</dbReference>
<dbReference type="CCDS" id="CCDS45715.1">
    <molecule id="P10636-9"/>
</dbReference>
<dbReference type="CCDS" id="CCDS45716.1">
    <molecule id="P10636-7"/>
</dbReference>
<dbReference type="CCDS" id="CCDS56033.1">
    <molecule id="P10636-5"/>
</dbReference>
<dbReference type="CCDS" id="CCDS92347.1">
    <molecule id="P10636-4"/>
</dbReference>
<dbReference type="PIR" id="I52232">
    <property type="entry name" value="I52232"/>
</dbReference>
<dbReference type="PIR" id="JS0370">
    <property type="entry name" value="QRHUT1"/>
</dbReference>
<dbReference type="PIR" id="PN0001">
    <property type="entry name" value="QRHUT2"/>
</dbReference>
<dbReference type="PIR" id="S26663">
    <property type="entry name" value="S26663"/>
</dbReference>
<dbReference type="RefSeq" id="NP_001116538.2">
    <molecule id="P10636-9"/>
    <property type="nucleotide sequence ID" value="NM_001123066.4"/>
</dbReference>
<dbReference type="RefSeq" id="NP_001116539.1">
    <molecule id="P10636-7"/>
    <property type="nucleotide sequence ID" value="NM_001123067.4"/>
</dbReference>
<dbReference type="RefSeq" id="NP_001190180.1">
    <molecule id="P10636-4"/>
    <property type="nucleotide sequence ID" value="NM_001203251.2"/>
</dbReference>
<dbReference type="RefSeq" id="NP_001190181.1">
    <molecule id="P10636-5"/>
    <property type="nucleotide sequence ID" value="NM_001203252.2"/>
</dbReference>
<dbReference type="RefSeq" id="NP_001364197.1">
    <molecule id="P10636-2"/>
    <property type="nucleotide sequence ID" value="NM_001377268.1"/>
</dbReference>
<dbReference type="RefSeq" id="NP_005901.2">
    <molecule id="P10636-8"/>
    <property type="nucleotide sequence ID" value="NM_005910.5"/>
</dbReference>
<dbReference type="RefSeq" id="NP_058518.1">
    <molecule id="P10636-6"/>
    <property type="nucleotide sequence ID" value="NM_016834.5"/>
</dbReference>
<dbReference type="RefSeq" id="NP_058519.3">
    <molecule id="P10636-1"/>
    <property type="nucleotide sequence ID" value="NM_016835.5"/>
</dbReference>
<dbReference type="RefSeq" id="NP_058525.1">
    <molecule id="P10636-2"/>
    <property type="nucleotide sequence ID" value="NM_016841.5"/>
</dbReference>
<dbReference type="PDB" id="1I8H">
    <property type="method" value="NMR"/>
    <property type="chains" value="A=542-554"/>
</dbReference>
<dbReference type="PDB" id="2MZ7">
    <property type="method" value="NMR"/>
    <property type="chains" value="A=584-629"/>
</dbReference>
<dbReference type="PDB" id="2ON9">
    <property type="method" value="X-ray"/>
    <property type="resolution" value="1.51 A"/>
    <property type="chains" value="A/B=623-628"/>
</dbReference>
<dbReference type="PDB" id="3OVL">
    <property type="method" value="X-ray"/>
    <property type="resolution" value="1.81 A"/>
    <property type="chains" value="A=623-628"/>
</dbReference>
<dbReference type="PDB" id="4E0M">
    <property type="method" value="X-ray"/>
    <property type="resolution" value="1.75 A"/>
    <property type="chains" value="A/B/C/D=622-634"/>
</dbReference>
<dbReference type="PDB" id="4E0N">
    <property type="method" value="X-ray"/>
    <property type="resolution" value="1.65 A"/>
    <property type="chains" value="A/B/C/D=622-634"/>
</dbReference>
<dbReference type="PDB" id="4E0O">
    <property type="method" value="X-ray"/>
    <property type="resolution" value="1.82 A"/>
    <property type="chains" value="A/B/C/D=622-634"/>
</dbReference>
<dbReference type="PDB" id="4FL5">
    <property type="method" value="X-ray"/>
    <property type="resolution" value="1.90 A"/>
    <property type="chains" value="P/Q=527-536"/>
</dbReference>
<dbReference type="PDB" id="4GLR">
    <property type="method" value="X-ray"/>
    <property type="resolution" value="1.90 A"/>
    <property type="chains" value="A/B=541-557"/>
</dbReference>
<dbReference type="PDB" id="4NP8">
    <property type="method" value="X-ray"/>
    <property type="resolution" value="1.51 A"/>
    <property type="chains" value="A=623-628"/>
</dbReference>
<dbReference type="PDB" id="4TQE">
    <property type="method" value="X-ray"/>
    <property type="resolution" value="1.60 A"/>
    <property type="chains" value="A=532-547"/>
</dbReference>
<dbReference type="PDB" id="4Y32">
    <property type="method" value="X-ray"/>
    <property type="resolution" value="1.70 A"/>
    <property type="chains" value="C/D=528-534"/>
</dbReference>
<dbReference type="PDB" id="4Y3B">
    <property type="method" value="X-ray"/>
    <property type="resolution" value="1.80 A"/>
    <property type="chains" value="C/D=528-534"/>
</dbReference>
<dbReference type="PDB" id="4Y5I">
    <property type="method" value="X-ray"/>
    <property type="resolution" value="1.40 A"/>
    <property type="chains" value="F/G=528-534"/>
</dbReference>
<dbReference type="PDB" id="5DMG">
    <property type="method" value="X-ray"/>
    <property type="resolution" value="2.50 A"/>
    <property type="chains" value="P/X/Z=733-747"/>
</dbReference>
<dbReference type="PDB" id="5E2V">
    <property type="method" value="X-ray"/>
    <property type="resolution" value="1.64 A"/>
    <property type="chains" value="P=511-528"/>
</dbReference>
<dbReference type="PDB" id="5E2W">
    <property type="method" value="X-ray"/>
    <property type="resolution" value="1.50 A"/>
    <property type="chains" value="P=511-528"/>
</dbReference>
<dbReference type="PDB" id="5HF3">
    <property type="method" value="X-ray"/>
    <property type="resolution" value="1.80 A"/>
    <property type="chains" value="B=528-534"/>
</dbReference>
<dbReference type="PDB" id="5K7N">
    <property type="method" value="EM"/>
    <property type="resolution" value="1.10 A"/>
    <property type="chains" value="Z=623-628"/>
</dbReference>
<dbReference type="PDB" id="5MO3">
    <property type="method" value="X-ray"/>
    <property type="resolution" value="1.69 A"/>
    <property type="chains" value="A=615-628"/>
</dbReference>
<dbReference type="PDB" id="5MP1">
    <property type="method" value="X-ray"/>
    <property type="resolution" value="3.10 A"/>
    <property type="chains" value="A/B/E/I=615-628"/>
</dbReference>
<dbReference type="PDB" id="5MP3">
    <property type="method" value="X-ray"/>
    <property type="resolution" value="2.75 A"/>
    <property type="chains" value="C/D=609-638"/>
</dbReference>
<dbReference type="PDB" id="5MP5">
    <property type="method" value="X-ray"/>
    <property type="resolution" value="2.31 A"/>
    <property type="chains" value="I/J/K=615-628"/>
</dbReference>
<dbReference type="PDB" id="5N5A">
    <property type="method" value="NMR"/>
    <property type="chains" value="A=571-607"/>
</dbReference>
<dbReference type="PDB" id="5N5B">
    <property type="method" value="NMR"/>
    <property type="chains" value="A=609-636"/>
</dbReference>
<dbReference type="PDB" id="5NVB">
    <property type="method" value="NMR"/>
    <property type="chains" value="A=571-585"/>
</dbReference>
<dbReference type="PDB" id="5O3L">
    <property type="method" value="EM"/>
    <property type="resolution" value="3.40 A"/>
    <property type="chains" value="A/B/C/D/E/F/G/H/I/J=623-695"/>
</dbReference>
<dbReference type="PDB" id="5O3O">
    <property type="method" value="EM"/>
    <property type="resolution" value="3.50 A"/>
    <property type="chains" value="A/B/C/D/E/F/G/H/I/J=623-695"/>
</dbReference>
<dbReference type="PDB" id="5O3T">
    <property type="method" value="EM"/>
    <property type="resolution" value="3.40 A"/>
    <property type="chains" value="A/B/C/D/E/F/G/H/I/J=623-695"/>
</dbReference>
<dbReference type="PDB" id="5V5B">
    <property type="method" value="EM"/>
    <property type="resolution" value="1.50 A"/>
    <property type="chains" value="A=591-600"/>
</dbReference>
<dbReference type="PDB" id="5V5C">
    <property type="method" value="EM"/>
    <property type="resolution" value="1.25 A"/>
    <property type="chains" value="A=592-597"/>
</dbReference>
<dbReference type="PDB" id="5ZIA">
    <property type="method" value="X-ray"/>
    <property type="resolution" value="2.60 A"/>
    <property type="chains" value="C/F/J/N/Q/R=552-560"/>
</dbReference>
<dbReference type="PDB" id="5ZV3">
    <property type="method" value="X-ray"/>
    <property type="resolution" value="2.09 A"/>
    <property type="chains" value="A=52-71"/>
</dbReference>
<dbReference type="PDB" id="6BB4">
    <property type="method" value="X-ray"/>
    <property type="resolution" value="2.10 A"/>
    <property type="chains" value="P/Q/R=703-725"/>
</dbReference>
<dbReference type="PDB" id="6CVJ">
    <property type="method" value="EM"/>
    <property type="resolution" value="3.20 A"/>
    <property type="chains" value="D=514-717"/>
</dbReference>
<dbReference type="PDB" id="6CVN">
    <property type="method" value="EM"/>
    <property type="resolution" value="3.90 A"/>
    <property type="chains" value="D=514-717"/>
</dbReference>
<dbReference type="PDB" id="6DC8">
    <property type="method" value="X-ray"/>
    <property type="resolution" value="1.80 A"/>
    <property type="chains" value="P=696-725"/>
</dbReference>
<dbReference type="PDB" id="6DC9">
    <property type="method" value="X-ray"/>
    <property type="resolution" value="3.00 A"/>
    <property type="chains" value="P/Q=696-725"/>
</dbReference>
<dbReference type="PDB" id="6DCA">
    <property type="method" value="X-ray"/>
    <property type="resolution" value="2.60 A"/>
    <property type="chains" value="P/Q/R/S=696-725"/>
</dbReference>
<dbReference type="PDB" id="6FBW">
    <property type="method" value="X-ray"/>
    <property type="resolution" value="1.45 A"/>
    <property type="chains" value="B/D=528-533"/>
</dbReference>
<dbReference type="PDB" id="6FI5">
    <property type="method" value="X-ray"/>
    <property type="resolution" value="1.70 A"/>
    <property type="chains" value="B=529-533"/>
</dbReference>
<dbReference type="PDB" id="6GK7">
    <property type="method" value="X-ray"/>
    <property type="resolution" value="2.95 A"/>
    <property type="chains" value="A=625-635"/>
</dbReference>
<dbReference type="PDB" id="6GK8">
    <property type="method" value="X-ray"/>
    <property type="resolution" value="2.85 A"/>
    <property type="chains" value="I=52-71"/>
</dbReference>
<dbReference type="PDB" id="6GX5">
    <property type="method" value="EM"/>
    <property type="resolution" value="3.20 A"/>
    <property type="chains" value="A/B/C=602-695"/>
</dbReference>
<dbReference type="PDB" id="6H06">
    <property type="method" value="X-ray"/>
    <property type="resolution" value="2.63 A"/>
    <property type="chains" value="G/I/J/K=721-746"/>
</dbReference>
<dbReference type="PDB" id="6HRE">
    <property type="method" value="EM"/>
    <property type="resolution" value="3.20 A"/>
    <property type="chains" value="A/B/C/D/E/F=1-758"/>
</dbReference>
<dbReference type="PDB" id="6HRF">
    <property type="method" value="EM"/>
    <property type="resolution" value="3.30 A"/>
    <property type="chains" value="A/B/C/D/E/F=1-758"/>
</dbReference>
<dbReference type="PDB" id="6LRA">
    <property type="method" value="X-ray"/>
    <property type="resolution" value="1.90 A"/>
    <property type="chains" value="C=592-597"/>
</dbReference>
<dbReference type="PDB" id="6N4P">
    <property type="method" value="X-ray"/>
    <property type="resolution" value="1.85 A"/>
    <property type="chains" value="A/C=5-10"/>
</dbReference>
<dbReference type="PDB" id="6NK4">
    <property type="method" value="EM"/>
    <property type="resolution" value="1.99 A"/>
    <property type="chains" value="A=591-599"/>
</dbReference>
<dbReference type="PDB" id="6NWP">
    <property type="method" value="EM"/>
    <property type="resolution" value="2.30 A"/>
    <property type="chains" value="A/B/C/D/E/F=1-758"/>
</dbReference>
<dbReference type="PDB" id="6NWQ">
    <property type="method" value="EM"/>
    <property type="resolution" value="3.40 A"/>
    <property type="chains" value="A/B/C/D/E/F=1-758"/>
</dbReference>
<dbReference type="PDB" id="6ODG">
    <property type="method" value="X-ray"/>
    <property type="resolution" value="1.00 A"/>
    <property type="chains" value="A/B=622-627"/>
</dbReference>
<dbReference type="PDB" id="6PXR">
    <property type="method" value="X-ray"/>
    <property type="resolution" value="1.56 A"/>
    <property type="chains" value="A=15-22"/>
</dbReference>
<dbReference type="PDB" id="6QJH">
    <property type="method" value="EM"/>
    <property type="resolution" value="3.30 A"/>
    <property type="chains" value="A/B/C=589-647"/>
</dbReference>
<dbReference type="PDB" id="6QJM">
    <property type="method" value="EM"/>
    <property type="resolution" value="3.30 A"/>
    <property type="chains" value="A/B/C=591-638"/>
</dbReference>
<dbReference type="PDB" id="6QJP">
    <property type="method" value="EM"/>
    <property type="resolution" value="3.50 A"/>
    <property type="chains" value="A/B/C=591-638"/>
</dbReference>
<dbReference type="PDB" id="6QJQ">
    <property type="method" value="EM"/>
    <property type="resolution" value="3.70 A"/>
    <property type="chains" value="A/B/C/D/E/F=620-647"/>
</dbReference>
<dbReference type="PDB" id="6TJO">
    <property type="method" value="EM"/>
    <property type="resolution" value="3.20 A"/>
    <property type="chains" value="A/B/C=1-758"/>
</dbReference>
<dbReference type="PDB" id="6TJX">
    <property type="method" value="EM"/>
    <property type="resolution" value="3.00 A"/>
    <property type="chains" value="A/B/C/D/E/F=1-758"/>
</dbReference>
<dbReference type="PDB" id="6VH7">
    <property type="method" value="EM"/>
    <property type="resolution" value="3.80 A"/>
    <property type="chains" value="A/B/C/E/F/G=591-697"/>
</dbReference>
<dbReference type="PDB" id="6VHA">
    <property type="method" value="EM"/>
    <property type="resolution" value="4.30 A"/>
    <property type="chains" value="E/F/G=591-697"/>
</dbReference>
<dbReference type="PDB" id="6VHL">
    <property type="method" value="EM"/>
    <property type="resolution" value="3.30 A"/>
    <property type="chains" value="E/F=621-697"/>
</dbReference>
<dbReference type="PDB" id="6VI3">
    <property type="method" value="EM"/>
    <property type="resolution" value="3.30 A"/>
    <property type="chains" value="E/F=621-697"/>
</dbReference>
<dbReference type="PDB" id="6XLI">
    <property type="method" value="X-ray"/>
    <property type="resolution" value="2.00 A"/>
    <property type="chains" value="E/F/P=527-539"/>
</dbReference>
<dbReference type="PDB" id="7EYC">
    <property type="method" value="X-ray"/>
    <property type="resolution" value="2.49 A"/>
    <property type="chains" value="P/Q=594-601"/>
</dbReference>
<dbReference type="PDB" id="7KQK">
    <property type="method" value="X-ray"/>
    <property type="resolution" value="2.60 A"/>
    <property type="chains" value="C/P=541-550"/>
</dbReference>
<dbReference type="PDB" id="7MKF">
    <property type="method" value="EM"/>
    <property type="resolution" value="3.00 A"/>
    <property type="chains" value="A/B/C/D/E/F/G/H/I/J=1-758"/>
</dbReference>
<dbReference type="PDB" id="7MKG">
    <property type="method" value="EM"/>
    <property type="resolution" value="3.07 A"/>
    <property type="chains" value="A/B/C/D/E/F/G/H/I/J=1-758"/>
</dbReference>
<dbReference type="PDB" id="7MKH">
    <property type="method" value="EM"/>
    <property type="resolution" value="3.30 A"/>
    <property type="chains" value="A/B/C/D/E/F/G/H/I/J=1-758"/>
</dbReference>
<dbReference type="PDB" id="7NRQ">
    <property type="method" value="EM"/>
    <property type="resolution" value="2.76 A"/>
    <property type="chains" value="A/B/C/D/E/F/G/H/I/J=1-758"/>
</dbReference>
<dbReference type="PDB" id="7NRS">
    <property type="method" value="EM"/>
    <property type="resolution" value="2.68 A"/>
    <property type="chains" value="A/B/C/D/E/F/G/H/I/J=1-758"/>
</dbReference>
<dbReference type="PDB" id="7NRT">
    <property type="method" value="EM"/>
    <property type="resolution" value="2.68 A"/>
    <property type="chains" value="A/B/C/D/E/F/G/H/I/J=1-758"/>
</dbReference>
<dbReference type="PDB" id="7NRV">
    <property type="method" value="EM"/>
    <property type="resolution" value="3.00 A"/>
    <property type="chains" value="A/B/C/D/E/F/G/H/I/J=1-758"/>
</dbReference>
<dbReference type="PDB" id="7NRX">
    <property type="method" value="EM"/>
    <property type="resolution" value="3.55 A"/>
    <property type="chains" value="A/B/C/D/E/F/G/H/I/J=1-758"/>
</dbReference>
<dbReference type="PDB" id="7P65">
    <property type="method" value="EM"/>
    <property type="resolution" value="2.70 A"/>
    <property type="chains" value="A/B/C/D/E=1-758"/>
</dbReference>
<dbReference type="PDB" id="7P66">
    <property type="method" value="EM"/>
    <property type="resolution" value="3.00 A"/>
    <property type="chains" value="A/B/C/D/E=1-758"/>
</dbReference>
<dbReference type="PDB" id="7P67">
    <property type="method" value="EM"/>
    <property type="resolution" value="3.10 A"/>
    <property type="chains" value="A/B/C/D/E/F/G/H/I/J=1-758"/>
</dbReference>
<dbReference type="PDB" id="7P68">
    <property type="method" value="EM"/>
    <property type="resolution" value="2.90 A"/>
    <property type="chains" value="A/B/C/D/E/F/G/H/I/J=1-758"/>
</dbReference>
<dbReference type="PDB" id="7P6A">
    <property type="method" value="EM"/>
    <property type="resolution" value="1.90 A"/>
    <property type="chains" value="A/B/C/D/E=1-758"/>
</dbReference>
<dbReference type="PDB" id="7P6B">
    <property type="method" value="EM"/>
    <property type="resolution" value="2.20 A"/>
    <property type="chains" value="A/B/C/D/E=1-758"/>
</dbReference>
<dbReference type="PDB" id="7P6C">
    <property type="method" value="EM"/>
    <property type="resolution" value="2.50 A"/>
    <property type="chains" value="A/B/C/D/E/F/G/H/I/J=1-758"/>
</dbReference>
<dbReference type="PDB" id="7P6D">
    <property type="method" value="EM"/>
    <property type="resolution" value="3.30 A"/>
    <property type="chains" value="A/B/C/D/E=1-758"/>
</dbReference>
<dbReference type="PDB" id="7P6E">
    <property type="method" value="EM"/>
    <property type="resolution" value="3.40 A"/>
    <property type="chains" value="A/B/C/D/E/F/I/J/Q/R=1-758"/>
</dbReference>
<dbReference type="PDB" id="7PQC">
    <property type="method" value="EM"/>
    <property type="resolution" value="4.10 A"/>
    <property type="chains" value="O=519-712"/>
</dbReference>
<dbReference type="PDB" id="7PQP">
    <property type="method" value="EM"/>
    <property type="resolution" value="4.10 A"/>
    <property type="chains" value="O=519-712"/>
</dbReference>
<dbReference type="PDB" id="7QJV">
    <property type="method" value="EM"/>
    <property type="resolution" value="3.29 A"/>
    <property type="chains" value="A/B/C/D/E/F/G/H/I/J/K/L=1-758"/>
</dbReference>
<dbReference type="PDB" id="7QJW">
    <property type="method" value="EM"/>
    <property type="resolution" value="2.81 A"/>
    <property type="chains" value="A/B/C/D/E/F=1-758"/>
</dbReference>
<dbReference type="PDB" id="7QJX">
    <property type="method" value="EM"/>
    <property type="resolution" value="2.99 A"/>
    <property type="chains" value="A/B/C/D/E/F/G/H/I/J/K/L=1-758"/>
</dbReference>
<dbReference type="PDB" id="7QJY">
    <property type="method" value="EM"/>
    <property type="resolution" value="3.14 A"/>
    <property type="chains" value="A/B/C/D/E/F=1-758"/>
</dbReference>
<dbReference type="PDB" id="7QJZ">
    <property type="method" value="EM"/>
    <property type="resolution" value="3.40 A"/>
    <property type="chains" value="A/B/C/D/E/F=1-758"/>
</dbReference>
<dbReference type="PDB" id="7QK1">
    <property type="method" value="EM"/>
    <property type="resolution" value="3.03 A"/>
    <property type="chains" value="A/B/C/D/E/F=1-758"/>
</dbReference>
<dbReference type="PDB" id="7QK2">
    <property type="method" value="EM"/>
    <property type="resolution" value="2.61 A"/>
    <property type="chains" value="A/B/C/D/E/F=1-758"/>
</dbReference>
<dbReference type="PDB" id="7QK3">
    <property type="method" value="EM"/>
    <property type="resolution" value="2.44 A"/>
    <property type="chains" value="A/B/C=1-758"/>
</dbReference>
<dbReference type="PDB" id="7QK5">
    <property type="method" value="EM"/>
    <property type="resolution" value="1.92 A"/>
    <property type="chains" value="A/B/C/D/E/F/G/H/K=1-758"/>
</dbReference>
<dbReference type="PDB" id="7QK6">
    <property type="method" value="EM"/>
    <property type="resolution" value="2.27 A"/>
    <property type="chains" value="A/B/C=1-758"/>
</dbReference>
<dbReference type="PDB" id="7QKF">
    <property type="method" value="EM"/>
    <property type="resolution" value="2.83 A"/>
    <property type="chains" value="A/B/C/D/E/F=1-758"/>
</dbReference>
<dbReference type="PDB" id="7QKG">
    <property type="method" value="EM"/>
    <property type="resolution" value="3.36 A"/>
    <property type="chains" value="A/B/C=1-758"/>
</dbReference>
<dbReference type="PDB" id="7QKH">
    <property type="method" value="EM"/>
    <property type="resolution" value="3.17 A"/>
    <property type="chains" value="A/B/C/D/E/G=1-758"/>
</dbReference>
<dbReference type="PDB" id="7QKI">
    <property type="method" value="EM"/>
    <property type="resolution" value="3.13 A"/>
    <property type="chains" value="A/B/C/D/E/F=1-758"/>
</dbReference>
<dbReference type="PDB" id="7QKJ">
    <property type="method" value="EM"/>
    <property type="resolution" value="3.26 A"/>
    <property type="chains" value="A/B/C/D/E/F/G/H/I/J/K/L=1-758"/>
</dbReference>
<dbReference type="PDB" id="7QKK">
    <property type="method" value="EM"/>
    <property type="resolution" value="2.80 A"/>
    <property type="chains" value="A/B/C=1-758"/>
</dbReference>
<dbReference type="PDB" id="7QKL">
    <property type="method" value="EM"/>
    <property type="resolution" value="2.07 A"/>
    <property type="chains" value="A/B/C/D/E/F=1-758"/>
</dbReference>
<dbReference type="PDB" id="7QKM">
    <property type="method" value="EM"/>
    <property type="resolution" value="2.66 A"/>
    <property type="chains" value="A/B/C/D/E/F=1-758"/>
</dbReference>
<dbReference type="PDB" id="7QKU">
    <property type="method" value="EM"/>
    <property type="resolution" value="2.57 A"/>
    <property type="chains" value="A/B/C/D/E/F=1-758"/>
</dbReference>
<dbReference type="PDB" id="7QKV">
    <property type="method" value="EM"/>
    <property type="resolution" value="3.23 A"/>
    <property type="chains" value="A/B/C/D/E/F/G/H/I=1-758"/>
</dbReference>
<dbReference type="PDB" id="7QKW">
    <property type="method" value="EM"/>
    <property type="resolution" value="2.32 A"/>
    <property type="chains" value="A/B/C/D/E/F=1-758"/>
</dbReference>
<dbReference type="PDB" id="7QKX">
    <property type="method" value="EM"/>
    <property type="resolution" value="3.16 A"/>
    <property type="chains" value="A/B/C/D/E/G=1-758"/>
</dbReference>
<dbReference type="PDB" id="7QKY">
    <property type="method" value="EM"/>
    <property type="resolution" value="1.86 A"/>
    <property type="chains" value="A/B/C/D/E/F=1-758"/>
</dbReference>
<dbReference type="PDB" id="7QKZ">
    <property type="method" value="EM"/>
    <property type="resolution" value="2.65 A"/>
    <property type="chains" value="A/B/C/D/E/F/G/H/I=1-758"/>
</dbReference>
<dbReference type="PDB" id="7QL0">
    <property type="method" value="EM"/>
    <property type="resolution" value="3.13 A"/>
    <property type="chains" value="A/B/C/D/E/c=1-758"/>
</dbReference>
<dbReference type="PDB" id="7QL1">
    <property type="method" value="EM"/>
    <property type="resolution" value="3.34 A"/>
    <property type="chains" value="A/C/D=1-758"/>
</dbReference>
<dbReference type="PDB" id="7QL2">
    <property type="method" value="EM"/>
    <property type="resolution" value="2.95 A"/>
    <property type="chains" value="A/B/C=1-758"/>
</dbReference>
<dbReference type="PDB" id="7QL3">
    <property type="method" value="EM"/>
    <property type="resolution" value="3.32 A"/>
    <property type="chains" value="A/B/C/D/E/F=1-758"/>
</dbReference>
<dbReference type="PDB" id="7QL4">
    <property type="method" value="EM"/>
    <property type="resolution" value="3.20 A"/>
    <property type="chains" value="A/B/C/D/E/F=1-758"/>
</dbReference>
<dbReference type="PDB" id="7R4T">
    <property type="method" value="EM"/>
    <property type="resolution" value="2.75 A"/>
    <property type="chains" value="A/B/C/D/E/F=1-758"/>
</dbReference>
<dbReference type="PDB" id="7R5H">
    <property type="method" value="EM"/>
    <property type="resolution" value="2.59 A"/>
    <property type="chains" value="A/B/C/D/E/F=1-758"/>
</dbReference>
<dbReference type="PDB" id="7SP1">
    <property type="method" value="EM"/>
    <property type="resolution" value="3.40 A"/>
    <property type="chains" value="A/B/C/D/E/F/G/H/I/J/K/L/M/N/O=1-758"/>
</dbReference>
<dbReference type="PDB" id="7U0Z">
    <property type="method" value="EM"/>
    <property type="resolution" value="4.20 A"/>
    <property type="chains" value="A/B/C=589-698"/>
</dbReference>
<dbReference type="PDB" id="7UPE">
    <property type="method" value="EM"/>
    <property type="resolution" value="3.40 A"/>
    <property type="chains" value="A/B/C/D/E/F/G/H/I/J=1-758"/>
</dbReference>
<dbReference type="PDB" id="7UPF">
    <property type="method" value="EM"/>
    <property type="resolution" value="3.30 A"/>
    <property type="chains" value="A/B/C/D/E/F/G/H/I/J=1-758"/>
</dbReference>
<dbReference type="PDB" id="7UPG">
    <property type="method" value="EM"/>
    <property type="resolution" value="3.80 A"/>
    <property type="chains" value="A/B/C/D/E/F/G/H/I/J=1-758"/>
</dbReference>
<dbReference type="PDB" id="7YMN">
    <property type="method" value="EM"/>
    <property type="resolution" value="3.46 A"/>
    <property type="chains" value="A/B/C/D/E/F=614-708"/>
</dbReference>
<dbReference type="PDB" id="7YPG">
    <property type="method" value="EM"/>
    <property type="resolution" value="2.50 A"/>
    <property type="chains" value="A/B/C/D/E/F=614-708"/>
</dbReference>
<dbReference type="PDB" id="8AZU">
    <property type="method" value="EM"/>
    <property type="resolution" value="3.10 A"/>
    <property type="chains" value="C=1-758"/>
</dbReference>
<dbReference type="PDB" id="8BGS">
    <property type="method" value="EM"/>
    <property type="resolution" value="3.16 A"/>
    <property type="chains" value="A/B/C/D/E/F/r=1-758"/>
</dbReference>
<dbReference type="PDB" id="8BGV">
    <property type="method" value="EM"/>
    <property type="resolution" value="3.27 A"/>
    <property type="chains" value="A/B/C/D/E/F/n=1-758"/>
</dbReference>
<dbReference type="PDB" id="8BYN">
    <property type="method" value="EM"/>
    <property type="resolution" value="2.60 A"/>
    <property type="chains" value="A/B/C/D/E/F=1-758"/>
</dbReference>
<dbReference type="PDB" id="8CAQ">
    <property type="method" value="EM"/>
    <property type="resolution" value="2.30 A"/>
    <property type="chains" value="A/B/C/D/E=1-758"/>
</dbReference>
<dbReference type="PDB" id="8CAX">
    <property type="method" value="EM"/>
    <property type="resolution" value="3.70 A"/>
    <property type="chains" value="A/B/C/D/E/F=1-758"/>
</dbReference>
<dbReference type="PDB" id="8FNZ">
    <property type="method" value="EM"/>
    <property type="resolution" value="3.88 A"/>
    <property type="chains" value="A/B/C/D/E/F/G/H/I/J/K/L/M/N/O/P/Q/R/S/T/U/V/W/X/a/b/c/d/e/f=580-597"/>
</dbReference>
<dbReference type="PDB" id="8FUG">
    <property type="method" value="EM"/>
    <property type="resolution" value="2.70 A"/>
    <property type="chains" value="A/B/C/D/E/F/G/H/I/J/K/L/M/N/O/P/Q/R/S/T/U/V/W=623-695"/>
</dbReference>
<dbReference type="PDB" id="8FYU">
    <property type="method" value="X-ray"/>
    <property type="resolution" value="1.85 A"/>
    <property type="chains" value="C/E=729-738"/>
</dbReference>
<dbReference type="PDB" id="8G54">
    <property type="method" value="NMR"/>
    <property type="chains" value="A/B/C/D/E=515-716"/>
</dbReference>
<dbReference type="PDB" id="8G55">
    <property type="method" value="NMR"/>
    <property type="chains" value="A/B/C/D/E/F/G/H/I/J=515-716"/>
</dbReference>
<dbReference type="PDB" id="8G58">
    <property type="method" value="NMR"/>
    <property type="chains" value="A/B/C/D/E/F/G/H/I/J=614-708"/>
</dbReference>
<dbReference type="PDB" id="8GCK">
    <property type="method" value="X-ray"/>
    <property type="resolution" value="1.37 A"/>
    <property type="chains" value="C/E=733-738"/>
</dbReference>
<dbReference type="PDB" id="8KDX">
    <property type="method" value="X-ray"/>
    <property type="resolution" value="1.01 A"/>
    <property type="chains" value="B=524-538"/>
</dbReference>
<dbReference type="PDB" id="8OH2">
    <property type="method" value="EM"/>
    <property type="resolution" value="2.60 A"/>
    <property type="chains" value="A/B/C/D/E/F/G/H/I/J/K/L/M/N/O/P/Q/R/S/T/U/V/W/X/Y/Z/a/b/c/d=666-680"/>
</dbReference>
<dbReference type="PDB" id="8OHI">
    <property type="method" value="EM"/>
    <property type="resolution" value="2.80 A"/>
    <property type="chains" value="A/B/C/D/E/F/G/H/I/J/K/L/M/N/O/P/Q/R=667-679"/>
</dbReference>
<dbReference type="PDB" id="8OHP">
    <property type="method" value="EM"/>
    <property type="resolution" value="2.70 A"/>
    <property type="chains" value="A/B/C/D/E/F/G/H/I/J/K/L/M/N/O/P/Q/R/S/T/U/V/W/X=667-679"/>
</dbReference>
<dbReference type="PDB" id="8OI0">
    <property type="method" value="EM"/>
    <property type="resolution" value="2.90 A"/>
    <property type="chains" value="A/B/C/D/E/F/G/H/I/J/K/L/M/N/O/P/Q/R/S/T/U/V/W/X=667-679"/>
</dbReference>
<dbReference type="PDB" id="8OP0">
    <property type="method" value="X-ray"/>
    <property type="resolution" value="1.54 A"/>
    <property type="chains" value="B=618-629"/>
</dbReference>
<dbReference type="PDB" id="8OPI">
    <property type="method" value="X-ray"/>
    <property type="resolution" value="1.83 A"/>
    <property type="chains" value="B=618-629"/>
</dbReference>
<dbReference type="PDB" id="8ORE">
    <property type="method" value="EM"/>
    <property type="resolution" value="2.50 A"/>
    <property type="chains" value="A/B/C=404-758"/>
</dbReference>
<dbReference type="PDB" id="8ORF">
    <property type="method" value="EM"/>
    <property type="resolution" value="2.50 A"/>
    <property type="chains" value="A/B/C=404-758"/>
</dbReference>
<dbReference type="PDB" id="8ORG">
    <property type="method" value="EM"/>
    <property type="resolution" value="2.30 A"/>
    <property type="chains" value="A/B/C=404-758"/>
</dbReference>
<dbReference type="PDB" id="8OT6">
    <property type="method" value="EM"/>
    <property type="resolution" value="2.00 A"/>
    <property type="chains" value="A/B/C/D/E=1-758"/>
</dbReference>
<dbReference type="PDB" id="8OT9">
    <property type="method" value="EM"/>
    <property type="resolution" value="3.40 A"/>
    <property type="chains" value="A/B/C/D/E/F=1-758"/>
</dbReference>
<dbReference type="PDB" id="8OTC">
    <property type="method" value="EM"/>
    <property type="resolution" value="3.20 A"/>
    <property type="chains" value="A/B/C/D/E/F=1-758"/>
</dbReference>
<dbReference type="PDB" id="8OTG">
    <property type="method" value="EM"/>
    <property type="resolution" value="2.10 A"/>
    <property type="chains" value="A/B/C/D/E=1-758"/>
</dbReference>
<dbReference type="PDB" id="8OTH">
    <property type="method" value="EM"/>
    <property type="resolution" value="3.40 A"/>
    <property type="chains" value="A/B/C/D/E=1-758"/>
</dbReference>
<dbReference type="PDB" id="8OTI">
    <property type="method" value="EM"/>
    <property type="resolution" value="2.70 A"/>
    <property type="chains" value="A/B/C/D/E/F=1-758"/>
</dbReference>
<dbReference type="PDB" id="8OTJ">
    <property type="method" value="EM"/>
    <property type="resolution" value="3.30 A"/>
    <property type="chains" value="A/B/C/D/E/F/G=1-758"/>
</dbReference>
<dbReference type="PDB" id="8P34">
    <property type="method" value="EM"/>
    <property type="resolution" value="2.61 A"/>
    <property type="chains" value="A=602-695"/>
</dbReference>
<dbReference type="PDB" id="8PII">
    <property type="method" value="X-ray"/>
    <property type="resolution" value="2.35 A"/>
    <property type="chains" value="B=618-631"/>
</dbReference>
<dbReference type="PDB" id="8PPO">
    <property type="method" value="EM"/>
    <property type="resolution" value="2.00 A"/>
    <property type="chains" value="A/B/C/D/E/F/G/H/I/J/K/L/M/N/O/P=1-758"/>
</dbReference>
<dbReference type="PDB" id="8Q27">
    <property type="method" value="EM"/>
    <property type="resolution" value="2.02 A"/>
    <property type="chains" value="A/B/C/D/E/F=427-758"/>
</dbReference>
<dbReference type="PDB" id="8Q2J">
    <property type="method" value="EM"/>
    <property type="resolution" value="2.23 A"/>
    <property type="chains" value="A/B/C/D/E/F=427-758"/>
</dbReference>
<dbReference type="PDB" id="8Q2K">
    <property type="method" value="EM"/>
    <property type="resolution" value="2.88 A"/>
    <property type="chains" value="A/B/C/D/E/F=427-758"/>
</dbReference>
<dbReference type="PDB" id="8Q2L">
    <property type="method" value="EM"/>
    <property type="resolution" value="2.20 A"/>
    <property type="chains" value="A/B/C/D/E/F=427-758"/>
</dbReference>
<dbReference type="PDB" id="8Q7F">
    <property type="method" value="EM"/>
    <property type="resolution" value="3.72 A"/>
    <property type="chains" value="A/B/C/D/E/F=427-758"/>
</dbReference>
<dbReference type="PDB" id="8Q7L">
    <property type="method" value="EM"/>
    <property type="resolution" value="2.82 A"/>
    <property type="chains" value="A/B/C/D/E/F=427-758"/>
</dbReference>
<dbReference type="PDB" id="8Q7M">
    <property type="method" value="EM"/>
    <property type="resolution" value="3.26 A"/>
    <property type="chains" value="A/B/C/D/E/F/G/H/I=427-758"/>
</dbReference>
<dbReference type="PDB" id="8Q7P">
    <property type="method" value="EM"/>
    <property type="resolution" value="3.28 A"/>
    <property type="chains" value="A/B/C/D/E/F=427-758"/>
</dbReference>
<dbReference type="PDB" id="8Q7T">
    <property type="method" value="EM"/>
    <property type="resolution" value="3.00 A"/>
    <property type="chains" value="A/B/C/D/E/F/G/H/I=427-758"/>
</dbReference>
<dbReference type="PDB" id="8Q88">
    <property type="method" value="EM"/>
    <property type="resolution" value="2.95 A"/>
    <property type="chains" value="A/B/C/D/E/F=427-758"/>
</dbReference>
<dbReference type="PDB" id="8Q8C">
    <property type="method" value="EM"/>
    <property type="resolution" value="1.92 A"/>
    <property type="chains" value="A/B/C/D/E/F=427-758"/>
</dbReference>
<dbReference type="PDB" id="8Q8D">
    <property type="method" value="EM"/>
    <property type="resolution" value="3.04 A"/>
    <property type="chains" value="A/B/C/D/E/F=427-758"/>
</dbReference>
<dbReference type="PDB" id="8Q8E">
    <property type="method" value="EM"/>
    <property type="resolution" value="3.81 A"/>
    <property type="chains" value="A/B/C/D/E/F/G/H/I/J/K/L=427-758"/>
</dbReference>
<dbReference type="PDB" id="8Q8F">
    <property type="method" value="EM"/>
    <property type="resolution" value="2.93 A"/>
    <property type="chains" value="A/B/C/D/E/F=427-758"/>
</dbReference>
<dbReference type="PDB" id="8Q8L">
    <property type="method" value="EM"/>
    <property type="resolution" value="3.04 A"/>
    <property type="chains" value="A/B/C/D/E/F=427-758"/>
</dbReference>
<dbReference type="PDB" id="8Q8M">
    <property type="method" value="EM"/>
    <property type="resolution" value="2.95 A"/>
    <property type="chains" value="A/B/C/D/E/F=427-758"/>
</dbReference>
<dbReference type="PDB" id="8Q8R">
    <property type="method" value="EM"/>
    <property type="resolution" value="2.10 A"/>
    <property type="chains" value="A/B/C/D/E/F=427-758"/>
</dbReference>
<dbReference type="PDB" id="8Q8S">
    <property type="method" value="EM"/>
    <property type="resolution" value="2.68 A"/>
    <property type="chains" value="A/B/C/D/E/F/G/H/I=427-758"/>
</dbReference>
<dbReference type="PDB" id="8Q8U">
    <property type="method" value="EM"/>
    <property type="resolution" value="3.30 A"/>
    <property type="chains" value="A/B/C/D/E/F=427-758"/>
</dbReference>
<dbReference type="PDB" id="8Q8V">
    <property type="method" value="EM"/>
    <property type="resolution" value="3.80 A"/>
    <property type="chains" value="A/B/C/D/E/F=427-758"/>
</dbReference>
<dbReference type="PDB" id="8Q8W">
    <property type="method" value="EM"/>
    <property type="resolution" value="2.85 A"/>
    <property type="chains" value="A/B/C/D/E/F=427-758"/>
</dbReference>
<dbReference type="PDB" id="8Q8X">
    <property type="method" value="EM"/>
    <property type="resolution" value="2.54 A"/>
    <property type="chains" value="A/B/C/D/E/F=427-758"/>
</dbReference>
<dbReference type="PDB" id="8Q8Y">
    <property type="method" value="EM"/>
    <property type="resolution" value="2.88 A"/>
    <property type="chains" value="A/B/C/D/E/F=427-758"/>
</dbReference>
<dbReference type="PDB" id="8Q8Z">
    <property type="method" value="EM"/>
    <property type="resolution" value="3.16 A"/>
    <property type="chains" value="A/B/C/D/E/F=427-758"/>
</dbReference>
<dbReference type="PDB" id="8Q92">
    <property type="method" value="EM"/>
    <property type="resolution" value="3.05 A"/>
    <property type="chains" value="A/B/C=588-681"/>
</dbReference>
<dbReference type="PDB" id="8Q97">
    <property type="method" value="EM"/>
    <property type="resolution" value="2.99 A"/>
    <property type="chains" value="A/B/C/D/E/F=427-758"/>
</dbReference>
<dbReference type="PDB" id="8Q98">
    <property type="method" value="EM"/>
    <property type="resolution" value="1.75 A"/>
    <property type="chains" value="A/B/C/D/E/F=427-758"/>
</dbReference>
<dbReference type="PDB" id="8Q99">
    <property type="method" value="EM"/>
    <property type="resolution" value="2.70 A"/>
    <property type="chains" value="A/B/C/D/E/F=427-758"/>
</dbReference>
<dbReference type="PDB" id="8Q9A">
    <property type="method" value="EM"/>
    <property type="resolution" value="3.04 A"/>
    <property type="chains" value="A/B/C/D/E/F=427-758"/>
</dbReference>
<dbReference type="PDB" id="8Q9B">
    <property type="method" value="EM"/>
    <property type="resolution" value="3.10 A"/>
    <property type="chains" value="A/B/C/D/E/F=427-758"/>
</dbReference>
<dbReference type="PDB" id="8Q9C">
    <property type="method" value="EM"/>
    <property type="resolution" value="3.40 A"/>
    <property type="chains" value="A/B/C/D/E/F=427-758"/>
</dbReference>
<dbReference type="PDB" id="8Q9D">
    <property type="method" value="EM"/>
    <property type="resolution" value="3.16 A"/>
    <property type="chains" value="A/B/C/D/E/F=427-758"/>
</dbReference>
<dbReference type="PDB" id="8Q9E">
    <property type="method" value="EM"/>
    <property type="resolution" value="2.97 A"/>
    <property type="chains" value="A/B/C/D/E/F=427-758"/>
</dbReference>
<dbReference type="PDB" id="8Q9F">
    <property type="method" value="EM"/>
    <property type="resolution" value="1.91 A"/>
    <property type="chains" value="A/B/C/D/E/c=427-758"/>
</dbReference>
<dbReference type="PDB" id="8Q9G">
    <property type="method" value="EM"/>
    <property type="resolution" value="2.65 A"/>
    <property type="chains" value="A/B/C/D/E/F=427-758"/>
</dbReference>
<dbReference type="PDB" id="8Q9H">
    <property type="method" value="EM"/>
    <property type="resolution" value="2.18 A"/>
    <property type="chains" value="A/B/C/D/E/G=427-758"/>
</dbReference>
<dbReference type="PDB" id="8Q9I">
    <property type="method" value="EM"/>
    <property type="resolution" value="2.56 A"/>
    <property type="chains" value="A/C/E=427-758"/>
</dbReference>
<dbReference type="PDB" id="8Q9J">
    <property type="method" value="EM"/>
    <property type="resolution" value="2.96 A"/>
    <property type="chains" value="A/B/C/D/E/F=427-758"/>
</dbReference>
<dbReference type="PDB" id="8Q9K">
    <property type="method" value="EM"/>
    <property type="resolution" value="3.20 A"/>
    <property type="chains" value="A/B/C/D/E/F=427-758"/>
</dbReference>
<dbReference type="PDB" id="8Q9L">
    <property type="method" value="EM"/>
    <property type="resolution" value="2.76 A"/>
    <property type="chains" value="A/B/C/D/E/F/G/H/I=427-758"/>
</dbReference>
<dbReference type="PDB" id="8Q9M">
    <property type="method" value="EM"/>
    <property type="resolution" value="2.65 A"/>
    <property type="chains" value="A/B/C/D/E/G=427-758"/>
</dbReference>
<dbReference type="PDB" id="8Q9O">
    <property type="method" value="EM"/>
    <property type="resolution" value="3.10 A"/>
    <property type="chains" value="A/B/C/D/E/G=427-758"/>
</dbReference>
<dbReference type="PDB" id="8QCP">
    <property type="method" value="EM"/>
    <property type="resolution" value="3.21 A"/>
    <property type="chains" value="A/B/C/D/E/F=427-758"/>
</dbReference>
<dbReference type="PDB" id="8QCR">
    <property type="method" value="EM"/>
    <property type="resolution" value="2.75 A"/>
    <property type="chains" value="A/C/E=427-758"/>
</dbReference>
<dbReference type="PDB" id="8QDV">
    <property type="method" value="X-ray"/>
    <property type="resolution" value="2.50 A"/>
    <property type="chains" value="C/F=527-539, C/F=635-648"/>
</dbReference>
<dbReference type="PDB" id="8QJJ">
    <property type="method" value="EM"/>
    <property type="resolution" value="3.35 A"/>
    <property type="chains" value="A/B/C/D/E/F=427-758"/>
</dbReference>
<dbReference type="PDB" id="8R3T">
    <property type="method" value="EM"/>
    <property type="resolution" value="3.10 A"/>
    <property type="chains" value="A/B/C/D/E/F=1-758"/>
</dbReference>
<dbReference type="PDB" id="8SEH">
    <property type="method" value="EM"/>
    <property type="resolution" value="2.90 A"/>
    <property type="chains" value="A/B/C/D/E/F/G/H/I/J=623-695"/>
</dbReference>
<dbReference type="PDB" id="8SEI">
    <property type="method" value="EM"/>
    <property type="resolution" value="2.90 A"/>
    <property type="chains" value="A/B/C/D/E/F/G/H/I/J=623-695"/>
</dbReference>
<dbReference type="PDB" id="8TTL">
    <property type="method" value="EM"/>
    <property type="resolution" value="2.60 A"/>
    <property type="chains" value="A/B/C/D/E/F=427-758"/>
</dbReference>
<dbReference type="PDB" id="8TTN">
    <property type="method" value="EM"/>
    <property type="resolution" value="2.40 A"/>
    <property type="chains" value="A/B/C/D/E=427-758"/>
</dbReference>
<dbReference type="PDB" id="8UQ7">
    <property type="method" value="EM"/>
    <property type="resolution" value="2.31 A"/>
    <property type="chains" value="A/B/C/D/E/F=622-696"/>
</dbReference>
<dbReference type="PDB" id="8V1N">
    <property type="method" value="EM"/>
    <property type="resolution" value="3.00 A"/>
    <property type="chains" value="A/B/C/D/E/F/G/H/I/J/K/L=612-630"/>
</dbReference>
<dbReference type="PDB" id="8WCP">
    <property type="method" value="EM"/>
    <property type="resolution" value="3.28 A"/>
    <property type="chains" value="A/B/C=427-758"/>
</dbReference>
<dbReference type="PDB" id="8ZWL">
    <property type="method" value="EM"/>
    <property type="resolution" value="3.40 A"/>
    <property type="chains" value="A/B/C/D/E/F=1-758"/>
</dbReference>
<dbReference type="PDB" id="8ZWM">
    <property type="method" value="EM"/>
    <property type="resolution" value="3.20 A"/>
    <property type="chains" value="A/B/C/D/E/F=1-758"/>
</dbReference>
<dbReference type="PDB" id="8ZX6">
    <property type="method" value="EM"/>
    <property type="resolution" value="3.50 A"/>
    <property type="chains" value="A/B/C/D/E/F=1-758"/>
</dbReference>
<dbReference type="PDB" id="9B4L">
    <property type="method" value="EM"/>
    <property type="resolution" value="3.10 A"/>
    <property type="chains" value="0/1/A/B/C/D/M/N/O/P/Y/Z=1-758"/>
</dbReference>
<dbReference type="PDB" id="9B4M">
    <property type="method" value="EM"/>
    <property type="resolution" value="3.10 A"/>
    <property type="chains" value="A/B/C/D/E/F/G/H/I/J=1-758"/>
</dbReference>
<dbReference type="PDB" id="9B4N">
    <property type="method" value="EM"/>
    <property type="resolution" value="3.50 A"/>
    <property type="chains" value="A/B/C/D/E/F/G/H/I/J=1-758"/>
</dbReference>
<dbReference type="PDB" id="9B4O">
    <property type="method" value="EM"/>
    <property type="resolution" value="3.50 A"/>
    <property type="chains" value="A/B/C/D/E/F/G/H/I/J=1-758"/>
</dbReference>
<dbReference type="PDB" id="9BBL">
    <property type="method" value="EM"/>
    <property type="resolution" value="2.50 A"/>
    <property type="chains" value="A/B/C/D/E/F/G/H/I=1-758"/>
</dbReference>
<dbReference type="PDB" id="9BBM">
    <property type="method" value="EM"/>
    <property type="resolution" value="3.20 A"/>
    <property type="chains" value="A/B/C/D/E/F=1-758"/>
</dbReference>
<dbReference type="PDB" id="9BXI">
    <property type="method" value="EM"/>
    <property type="resolution" value="2.70 A"/>
    <property type="chains" value="A/B/C/D/E/F=621-697"/>
</dbReference>
<dbReference type="PDB" id="9BXO">
    <property type="method" value="EM"/>
    <property type="resolution" value="3.00 A"/>
    <property type="chains" value="A/B/C/D/E/F=621-697"/>
</dbReference>
<dbReference type="PDB" id="9BXQ">
    <property type="method" value="EM"/>
    <property type="resolution" value="3.10 A"/>
    <property type="chains" value="C/D/E/F/G/H=621-697"/>
</dbReference>
<dbReference type="PDB" id="9BXR">
    <property type="method" value="EM"/>
    <property type="resolution" value="3.20 A"/>
    <property type="chains" value="C/D/E/F/G/H=621-697"/>
</dbReference>
<dbReference type="PDB" id="9CGX">
    <property type="method" value="EM"/>
    <property type="resolution" value="2.97 A"/>
    <property type="chains" value="A/B/C/D/E/F=427-758"/>
</dbReference>
<dbReference type="PDB" id="9CGZ">
    <property type="method" value="EM"/>
    <property type="resolution" value="2.69 A"/>
    <property type="chains" value="A/B/C/D/E/F=427-758"/>
</dbReference>
<dbReference type="PDB" id="9CZI">
    <property type="method" value="EM"/>
    <property type="resolution" value="3.00 A"/>
    <property type="chains" value="A/B/C/D/E/F/G/H/I/J=623-695"/>
</dbReference>
<dbReference type="PDB" id="9CZL">
    <property type="method" value="EM"/>
    <property type="resolution" value="2.90 A"/>
    <property type="chains" value="A/B/C/D/E/F/G/H/I/J=622-695"/>
</dbReference>
<dbReference type="PDB" id="9EO7">
    <property type="method" value="EM"/>
    <property type="resolution" value="2.80 A"/>
    <property type="chains" value="A=1-758"/>
</dbReference>
<dbReference type="PDB" id="9EO9">
    <property type="method" value="EM"/>
    <property type="resolution" value="3.30 A"/>
    <property type="chains" value="A/B=1-758"/>
</dbReference>
<dbReference type="PDB" id="9EOE">
    <property type="method" value="EM"/>
    <property type="resolution" value="2.30 A"/>
    <property type="chains" value="A=1-758"/>
</dbReference>
<dbReference type="PDB" id="9EOG">
    <property type="method" value="EM"/>
    <property type="resolution" value="3.00 A"/>
    <property type="chains" value="A/B/C/D/E/F=1-758"/>
</dbReference>
<dbReference type="PDB" id="9EOH">
    <property type="method" value="EM"/>
    <property type="resolution" value="2.80 A"/>
    <property type="chains" value="A/B/C/D/E/F=1-758"/>
</dbReference>
<dbReference type="PDB" id="9ERM">
    <property type="method" value="EM"/>
    <property type="resolution" value="2.30 A"/>
    <property type="chains" value="A/B/C/D/E=1-758"/>
</dbReference>
<dbReference type="PDB" id="9ERN">
    <property type="method" value="EM"/>
    <property type="resolution" value="2.50 A"/>
    <property type="chains" value="A/B/C/D/E/F=1-758"/>
</dbReference>
<dbReference type="PDB" id="9ERO">
    <property type="method" value="EM"/>
    <property type="resolution" value="2.90 A"/>
    <property type="chains" value="A/B/C/D/E/F/G/H/I/J=1-758"/>
</dbReference>
<dbReference type="PDB" id="9G13">
    <property type="method" value="X-ray"/>
    <property type="resolution" value="1.80 A"/>
    <property type="chains" value="B/D/F/H=686-698"/>
</dbReference>
<dbReference type="PDB" id="9GG0">
    <property type="method" value="EM"/>
    <property type="resolution" value="2.81 A"/>
    <property type="chains" value="A/B/C=588-694"/>
</dbReference>
<dbReference type="PDB" id="9GG1">
    <property type="method" value="EM"/>
    <property type="resolution" value="2.26 A"/>
    <property type="chains" value="A/B/C/D=590-696"/>
</dbReference>
<dbReference type="PDB" id="9GG6">
    <property type="method" value="EM"/>
    <property type="resolution" value="3.36 A"/>
    <property type="chains" value="A/B/C=586-681"/>
</dbReference>
<dbReference type="PDB" id="9H5G">
    <property type="method" value="EM"/>
    <property type="resolution" value="2.48 A"/>
    <property type="chains" value="A/B/C/D/E/F=427-758"/>
</dbReference>
<dbReference type="PDB" id="9H5J">
    <property type="method" value="EM"/>
    <property type="resolution" value="2.72 A"/>
    <property type="chains" value="A/B/C/D/E/F=427-758"/>
</dbReference>
<dbReference type="PDB" id="9HBB">
    <property type="method" value="EM"/>
    <property type="resolution" value="3.00 A"/>
    <property type="chains" value="A/B/C/D/E/F=608-708"/>
</dbReference>
<dbReference type="PDB" id="9MR8">
    <property type="method" value="EM"/>
    <property type="resolution" value="2.90 A"/>
    <property type="chains" value="C=590-679"/>
</dbReference>
<dbReference type="PDBsum" id="1I8H"/>
<dbReference type="PDBsum" id="2MZ7"/>
<dbReference type="PDBsum" id="2ON9"/>
<dbReference type="PDBsum" id="3OVL"/>
<dbReference type="PDBsum" id="4E0M"/>
<dbReference type="PDBsum" id="4E0N"/>
<dbReference type="PDBsum" id="4E0O"/>
<dbReference type="PDBsum" id="4FL5"/>
<dbReference type="PDBsum" id="4GLR"/>
<dbReference type="PDBsum" id="4NP8"/>
<dbReference type="PDBsum" id="4TQE"/>
<dbReference type="PDBsum" id="4Y32"/>
<dbReference type="PDBsum" id="4Y3B"/>
<dbReference type="PDBsum" id="4Y5I"/>
<dbReference type="PDBsum" id="5DMG"/>
<dbReference type="PDBsum" id="5E2V"/>
<dbReference type="PDBsum" id="5E2W"/>
<dbReference type="PDBsum" id="5HF3"/>
<dbReference type="PDBsum" id="5K7N"/>
<dbReference type="PDBsum" id="5MO3"/>
<dbReference type="PDBsum" id="5MP1"/>
<dbReference type="PDBsum" id="5MP3"/>
<dbReference type="PDBsum" id="5MP5"/>
<dbReference type="PDBsum" id="5N5A"/>
<dbReference type="PDBsum" id="5N5B"/>
<dbReference type="PDBsum" id="5NVB"/>
<dbReference type="PDBsum" id="5O3L"/>
<dbReference type="PDBsum" id="5O3O"/>
<dbReference type="PDBsum" id="5O3T"/>
<dbReference type="PDBsum" id="5V5B"/>
<dbReference type="PDBsum" id="5V5C"/>
<dbReference type="PDBsum" id="5ZIA"/>
<dbReference type="PDBsum" id="5ZV3"/>
<dbReference type="PDBsum" id="6BB4"/>
<dbReference type="PDBsum" id="6CVJ"/>
<dbReference type="PDBsum" id="6CVN"/>
<dbReference type="PDBsum" id="6DC8"/>
<dbReference type="PDBsum" id="6DC9"/>
<dbReference type="PDBsum" id="6DCA"/>
<dbReference type="PDBsum" id="6FBW"/>
<dbReference type="PDBsum" id="6FI5"/>
<dbReference type="PDBsum" id="6GK7"/>
<dbReference type="PDBsum" id="6GK8"/>
<dbReference type="PDBsum" id="6GX5"/>
<dbReference type="PDBsum" id="6H06"/>
<dbReference type="PDBsum" id="6HRE"/>
<dbReference type="PDBsum" id="6HRF"/>
<dbReference type="PDBsum" id="6LRA"/>
<dbReference type="PDBsum" id="6N4P"/>
<dbReference type="PDBsum" id="6NK4"/>
<dbReference type="PDBsum" id="6NWP"/>
<dbReference type="PDBsum" id="6NWQ"/>
<dbReference type="PDBsum" id="6ODG"/>
<dbReference type="PDBsum" id="6PXR"/>
<dbReference type="PDBsum" id="6QJH"/>
<dbReference type="PDBsum" id="6QJM"/>
<dbReference type="PDBsum" id="6QJP"/>
<dbReference type="PDBsum" id="6QJQ"/>
<dbReference type="PDBsum" id="6TJO"/>
<dbReference type="PDBsum" id="6TJX"/>
<dbReference type="PDBsum" id="6VH7"/>
<dbReference type="PDBsum" id="6VHA"/>
<dbReference type="PDBsum" id="6VHL"/>
<dbReference type="PDBsum" id="6VI3"/>
<dbReference type="PDBsum" id="6XLI"/>
<dbReference type="PDBsum" id="7EYC"/>
<dbReference type="PDBsum" id="7KQK"/>
<dbReference type="PDBsum" id="7MKF"/>
<dbReference type="PDBsum" id="7MKG"/>
<dbReference type="PDBsum" id="7MKH"/>
<dbReference type="PDBsum" id="7NRQ"/>
<dbReference type="PDBsum" id="7NRS"/>
<dbReference type="PDBsum" id="7NRT"/>
<dbReference type="PDBsum" id="7NRV"/>
<dbReference type="PDBsum" id="7NRX"/>
<dbReference type="PDBsum" id="7P65"/>
<dbReference type="PDBsum" id="7P66"/>
<dbReference type="PDBsum" id="7P67"/>
<dbReference type="PDBsum" id="7P68"/>
<dbReference type="PDBsum" id="7P6A"/>
<dbReference type="PDBsum" id="7P6B"/>
<dbReference type="PDBsum" id="7P6C"/>
<dbReference type="PDBsum" id="7P6D"/>
<dbReference type="PDBsum" id="7P6E"/>
<dbReference type="PDBsum" id="7PQC"/>
<dbReference type="PDBsum" id="7PQP"/>
<dbReference type="PDBsum" id="7QJV"/>
<dbReference type="PDBsum" id="7QJW"/>
<dbReference type="PDBsum" id="7QJX"/>
<dbReference type="PDBsum" id="7QJY"/>
<dbReference type="PDBsum" id="7QJZ"/>
<dbReference type="PDBsum" id="7QK1"/>
<dbReference type="PDBsum" id="7QK2"/>
<dbReference type="PDBsum" id="7QK3"/>
<dbReference type="PDBsum" id="7QK5"/>
<dbReference type="PDBsum" id="7QK6"/>
<dbReference type="PDBsum" id="7QKF"/>
<dbReference type="PDBsum" id="7QKG"/>
<dbReference type="PDBsum" id="7QKH"/>
<dbReference type="PDBsum" id="7QKI"/>
<dbReference type="PDBsum" id="7QKJ"/>
<dbReference type="PDBsum" id="7QKK"/>
<dbReference type="PDBsum" id="7QKL"/>
<dbReference type="PDBsum" id="7QKM"/>
<dbReference type="PDBsum" id="7QKU"/>
<dbReference type="PDBsum" id="7QKV"/>
<dbReference type="PDBsum" id="7QKW"/>
<dbReference type="PDBsum" id="7QKX"/>
<dbReference type="PDBsum" id="7QKY"/>
<dbReference type="PDBsum" id="7QKZ"/>
<dbReference type="PDBsum" id="7QL0"/>
<dbReference type="PDBsum" id="7QL1"/>
<dbReference type="PDBsum" id="7QL2"/>
<dbReference type="PDBsum" id="7QL3"/>
<dbReference type="PDBsum" id="7QL4"/>
<dbReference type="PDBsum" id="7R4T"/>
<dbReference type="PDBsum" id="7R5H"/>
<dbReference type="PDBsum" id="7SP1"/>
<dbReference type="PDBsum" id="7U0Z"/>
<dbReference type="PDBsum" id="7UPE"/>
<dbReference type="PDBsum" id="7UPF"/>
<dbReference type="PDBsum" id="7UPG"/>
<dbReference type="PDBsum" id="7YMN"/>
<dbReference type="PDBsum" id="7YPG"/>
<dbReference type="PDBsum" id="8AZU"/>
<dbReference type="PDBsum" id="8BGS"/>
<dbReference type="PDBsum" id="8BGV"/>
<dbReference type="PDBsum" id="8BYN"/>
<dbReference type="PDBsum" id="8CAQ"/>
<dbReference type="PDBsum" id="8CAX"/>
<dbReference type="PDBsum" id="8FNZ"/>
<dbReference type="PDBsum" id="8FUG"/>
<dbReference type="PDBsum" id="8FYU"/>
<dbReference type="PDBsum" id="8G54"/>
<dbReference type="PDBsum" id="8G55"/>
<dbReference type="PDBsum" id="8G58"/>
<dbReference type="PDBsum" id="8GCK"/>
<dbReference type="PDBsum" id="8KDX"/>
<dbReference type="PDBsum" id="8OH2"/>
<dbReference type="PDBsum" id="8OHI"/>
<dbReference type="PDBsum" id="8OHP"/>
<dbReference type="PDBsum" id="8OI0"/>
<dbReference type="PDBsum" id="8OP0"/>
<dbReference type="PDBsum" id="8OPI"/>
<dbReference type="PDBsum" id="8ORE"/>
<dbReference type="PDBsum" id="8ORF"/>
<dbReference type="PDBsum" id="8ORG"/>
<dbReference type="PDBsum" id="8OT6"/>
<dbReference type="PDBsum" id="8OT9"/>
<dbReference type="PDBsum" id="8OTC"/>
<dbReference type="PDBsum" id="8OTG"/>
<dbReference type="PDBsum" id="8OTH"/>
<dbReference type="PDBsum" id="8OTI"/>
<dbReference type="PDBsum" id="8OTJ"/>
<dbReference type="PDBsum" id="8P34"/>
<dbReference type="PDBsum" id="8PII"/>
<dbReference type="PDBsum" id="8PPO"/>
<dbReference type="PDBsum" id="8Q27"/>
<dbReference type="PDBsum" id="8Q2J"/>
<dbReference type="PDBsum" id="8Q2K"/>
<dbReference type="PDBsum" id="8Q2L"/>
<dbReference type="PDBsum" id="8Q7F"/>
<dbReference type="PDBsum" id="8Q7L"/>
<dbReference type="PDBsum" id="8Q7M"/>
<dbReference type="PDBsum" id="8Q7P"/>
<dbReference type="PDBsum" id="8Q7T"/>
<dbReference type="PDBsum" id="8Q88"/>
<dbReference type="PDBsum" id="8Q8C"/>
<dbReference type="PDBsum" id="8Q8D"/>
<dbReference type="PDBsum" id="8Q8E"/>
<dbReference type="PDBsum" id="8Q8F"/>
<dbReference type="PDBsum" id="8Q8L"/>
<dbReference type="PDBsum" id="8Q8M"/>
<dbReference type="PDBsum" id="8Q8R"/>
<dbReference type="PDBsum" id="8Q8S"/>
<dbReference type="PDBsum" id="8Q8U"/>
<dbReference type="PDBsum" id="8Q8V"/>
<dbReference type="PDBsum" id="8Q8W"/>
<dbReference type="PDBsum" id="8Q8X"/>
<dbReference type="PDBsum" id="8Q8Y"/>
<dbReference type="PDBsum" id="8Q8Z"/>
<dbReference type="PDBsum" id="8Q92"/>
<dbReference type="PDBsum" id="8Q97"/>
<dbReference type="PDBsum" id="8Q98"/>
<dbReference type="PDBsum" id="8Q99"/>
<dbReference type="PDBsum" id="8Q9A"/>
<dbReference type="PDBsum" id="8Q9B"/>
<dbReference type="PDBsum" id="8Q9C"/>
<dbReference type="PDBsum" id="8Q9D"/>
<dbReference type="PDBsum" id="8Q9E"/>
<dbReference type="PDBsum" id="8Q9F"/>
<dbReference type="PDBsum" id="8Q9G"/>
<dbReference type="PDBsum" id="8Q9H"/>
<dbReference type="PDBsum" id="8Q9I"/>
<dbReference type="PDBsum" id="8Q9J"/>
<dbReference type="PDBsum" id="8Q9K"/>
<dbReference type="PDBsum" id="8Q9L"/>
<dbReference type="PDBsum" id="8Q9M"/>
<dbReference type="PDBsum" id="8Q9O"/>
<dbReference type="PDBsum" id="8QCP"/>
<dbReference type="PDBsum" id="8QCR"/>
<dbReference type="PDBsum" id="8QDV"/>
<dbReference type="PDBsum" id="8QJJ"/>
<dbReference type="PDBsum" id="8R3T"/>
<dbReference type="PDBsum" id="8SEH"/>
<dbReference type="PDBsum" id="8SEI"/>
<dbReference type="PDBsum" id="8TTL"/>
<dbReference type="PDBsum" id="8TTN"/>
<dbReference type="PDBsum" id="8UQ7"/>
<dbReference type="PDBsum" id="8V1N"/>
<dbReference type="PDBsum" id="8WCP"/>
<dbReference type="PDBsum" id="8ZWL"/>
<dbReference type="PDBsum" id="8ZWM"/>
<dbReference type="PDBsum" id="8ZX6"/>
<dbReference type="PDBsum" id="9B4L"/>
<dbReference type="PDBsum" id="9B4M"/>
<dbReference type="PDBsum" id="9B4N"/>
<dbReference type="PDBsum" id="9B4O"/>
<dbReference type="PDBsum" id="9BBL"/>
<dbReference type="PDBsum" id="9BBM"/>
<dbReference type="PDBsum" id="9BXI"/>
<dbReference type="PDBsum" id="9BXO"/>
<dbReference type="PDBsum" id="9BXQ"/>
<dbReference type="PDBsum" id="9BXR"/>
<dbReference type="PDBsum" id="9CGX"/>
<dbReference type="PDBsum" id="9CGZ"/>
<dbReference type="PDBsum" id="9CZI"/>
<dbReference type="PDBsum" id="9CZL"/>
<dbReference type="PDBsum" id="9EO7"/>
<dbReference type="PDBsum" id="9EO9"/>
<dbReference type="PDBsum" id="9EOE"/>
<dbReference type="PDBsum" id="9EOG"/>
<dbReference type="PDBsum" id="9EOH"/>
<dbReference type="PDBsum" id="9ERM"/>
<dbReference type="PDBsum" id="9ERN"/>
<dbReference type="PDBsum" id="9ERO"/>
<dbReference type="PDBsum" id="9G13"/>
<dbReference type="PDBsum" id="9GG0"/>
<dbReference type="PDBsum" id="9GG1"/>
<dbReference type="PDBsum" id="9GG6"/>
<dbReference type="PDBsum" id="9H5G"/>
<dbReference type="PDBsum" id="9H5J"/>
<dbReference type="PDBsum" id="9HBB"/>
<dbReference type="PDBsum" id="9MR8"/>
<dbReference type="BMRB" id="P10636"/>
<dbReference type="EMDB" id="EMD-0077"/>
<dbReference type="EMDB" id="EMD-0259"/>
<dbReference type="EMDB" id="EMD-0260"/>
<dbReference type="EMDB" id="EMD-0527"/>
<dbReference type="EMDB" id="EMD-0528"/>
<dbReference type="EMDB" id="EMD-10512"/>
<dbReference type="EMDB" id="EMD-10514"/>
<dbReference type="EMDB" id="EMD-12549"/>
<dbReference type="EMDB" id="EMD-12550"/>
<dbReference type="EMDB" id="EMD-12551"/>
<dbReference type="EMDB" id="EMD-12552"/>
<dbReference type="EMDB" id="EMD-12553"/>
<dbReference type="EMDB" id="EMD-13218"/>
<dbReference type="EMDB" id="EMD-13219"/>
<dbReference type="EMDB" id="EMD-13220"/>
<dbReference type="EMDB" id="EMD-13221"/>
<dbReference type="EMDB" id="EMD-13223"/>
<dbReference type="EMDB" id="EMD-13224"/>
<dbReference type="EMDB" id="EMD-13225"/>
<dbReference type="EMDB" id="EMD-13226"/>
<dbReference type="EMDB" id="EMD-13227"/>
<dbReference type="EMDB" id="EMD-14023"/>
<dbReference type="EMDB" id="EMD-14024"/>
<dbReference type="EMDB" id="EMD-14025"/>
<dbReference type="EMDB" id="EMD-14026"/>
<dbReference type="EMDB" id="EMD-14027"/>
<dbReference type="EMDB" id="EMD-14028"/>
<dbReference type="EMDB" id="EMD-14029"/>
<dbReference type="EMDB" id="EMD-14030"/>
<dbReference type="EMDB" id="EMD-14038"/>
<dbReference type="EMDB" id="EMD-14039"/>
<dbReference type="EMDB" id="EMD-14040"/>
<dbReference type="EMDB" id="EMD-14041"/>
<dbReference type="EMDB" id="EMD-14042"/>
<dbReference type="EMDB" id="EMD-14043"/>
<dbReference type="EMDB" id="EMD-14044"/>
<dbReference type="EMDB" id="EMD-14045"/>
<dbReference type="EMDB" id="EMD-14046"/>
<dbReference type="EMDB" id="EMD-14047"/>
<dbReference type="EMDB" id="EMD-14053"/>
<dbReference type="EMDB" id="EMD-14054"/>
<dbReference type="EMDB" id="EMD-14055"/>
<dbReference type="EMDB" id="EMD-14056"/>
<dbReference type="EMDB" id="EMD-14057"/>
<dbReference type="EMDB" id="EMD-14058"/>
<dbReference type="EMDB" id="EMD-14059"/>
<dbReference type="EMDB" id="EMD-14060"/>
<dbReference type="EMDB" id="EMD-14061"/>
<dbReference type="EMDB" id="EMD-14062"/>
<dbReference type="EMDB" id="EMD-14063"/>
<dbReference type="EMDB" id="EMD-14316"/>
<dbReference type="EMDB" id="EMD-14320"/>
<dbReference type="EMDB" id="EMD-15772"/>
<dbReference type="EMDB" id="EMD-16035"/>
<dbReference type="EMDB" id="EMD-16039"/>
<dbReference type="EMDB" id="EMD-16329"/>
<dbReference type="EMDB" id="EMD-16532"/>
<dbReference type="EMDB" id="EMD-16535"/>
<dbReference type="EMDB" id="EMD-16876"/>
<dbReference type="EMDB" id="EMD-16881"/>
<dbReference type="EMDB" id="EMD-16883"/>
<dbReference type="EMDB" id="EMD-16886"/>
<dbReference type="EMDB" id="EMD-17121"/>
<dbReference type="EMDB" id="EMD-17122"/>
<dbReference type="EMDB" id="EMD-17123"/>
<dbReference type="EMDB" id="EMD-17171"/>
<dbReference type="EMDB" id="EMD-17173"/>
<dbReference type="EMDB" id="EMD-17174"/>
<dbReference type="EMDB" id="EMD-17178"/>
<dbReference type="EMDB" id="EMD-17179"/>
<dbReference type="EMDB" id="EMD-17180"/>
<dbReference type="EMDB" id="EMD-17181"/>
<dbReference type="EMDB" id="EMD-17383"/>
<dbReference type="EMDB" id="EMD-17806"/>
<dbReference type="EMDB" id="EMD-18070"/>
<dbReference type="EMDB" id="EMD-18109"/>
<dbReference type="EMDB" id="EMD-18111"/>
<dbReference type="EMDB" id="EMD-18112"/>
<dbReference type="EMDB" id="EMD-18215"/>
<dbReference type="EMDB" id="EMD-18219"/>
<dbReference type="EMDB" id="EMD-18224"/>
<dbReference type="EMDB" id="EMD-18228"/>
<dbReference type="EMDB" id="EMD-18233"/>
<dbReference type="EMDB" id="EMD-18249"/>
<dbReference type="EMDB" id="EMD-18250"/>
<dbReference type="EMDB" id="EMD-18251"/>
<dbReference type="EMDB" id="EMD-18252"/>
<dbReference type="EMDB" id="EMD-18253"/>
<dbReference type="EMDB" id="EMD-18254"/>
<dbReference type="EMDB" id="EMD-18255"/>
<dbReference type="EMDB" id="EMD-18258"/>
<dbReference type="EMDB" id="EMD-18259"/>
<dbReference type="EMDB" id="EMD-18261"/>
<dbReference type="EMDB" id="EMD-18262"/>
<dbReference type="EMDB" id="EMD-18263"/>
<dbReference type="EMDB" id="EMD-18264"/>
<dbReference type="EMDB" id="EMD-18265"/>
<dbReference type="EMDB" id="EMD-18266"/>
<dbReference type="EMDB" id="EMD-18268"/>
<dbReference type="EMDB" id="EMD-18270"/>
<dbReference type="EMDB" id="EMD-18271"/>
<dbReference type="EMDB" id="EMD-18272"/>
<dbReference type="EMDB" id="EMD-18273"/>
<dbReference type="EMDB" id="EMD-18275"/>
<dbReference type="EMDB" id="EMD-18276"/>
<dbReference type="EMDB" id="EMD-18277"/>
<dbReference type="EMDB" id="EMD-18278"/>
<dbReference type="EMDB" id="EMD-18279"/>
<dbReference type="EMDB" id="EMD-18280"/>
<dbReference type="EMDB" id="EMD-18281"/>
<dbReference type="EMDB" id="EMD-18282"/>
<dbReference type="EMDB" id="EMD-18283"/>
<dbReference type="EMDB" id="EMD-18284"/>
<dbReference type="EMDB" id="EMD-18285"/>
<dbReference type="EMDB" id="EMD-18286"/>
<dbReference type="EMDB" id="EMD-18287"/>
<dbReference type="EMDB" id="EMD-18331"/>
<dbReference type="EMDB" id="EMD-18333"/>
<dbReference type="EMDB" id="EMD-18448"/>
<dbReference type="EMDB" id="EMD-18874"/>
<dbReference type="EMDB" id="EMD-18990"/>
<dbReference type="EMDB" id="EMD-19846"/>
<dbReference type="EMDB" id="EMD-19849"/>
<dbReference type="EMDB" id="EMD-19852"/>
<dbReference type="EMDB" id="EMD-19854"/>
<dbReference type="EMDB" id="EMD-19855"/>
<dbReference type="EMDB" id="EMD-19926"/>
<dbReference type="EMDB" id="EMD-19927"/>
<dbReference type="EMDB" id="EMD-19928"/>
<dbReference type="EMDB" id="EMD-21200"/>
<dbReference type="EMDB" id="EMD-21201"/>
<dbReference type="EMDB" id="EMD-21207"/>
<dbReference type="EMDB" id="EMD-26268"/>
<dbReference type="EMDB" id="EMD-29458"/>
<dbReference type="EMDB" id="EMD-33934"/>
<dbReference type="EMDB" id="EMD-33999"/>
<dbReference type="EMDB" id="EMD-35403"/>
<dbReference type="EMDB" id="EMD-35404"/>
<dbReference type="EMDB" id="EMD-35405"/>
<dbReference type="EMDB" id="EMD-35406"/>
<dbReference type="EMDB" id="EMD-35407"/>
<dbReference type="EMDB" id="EMD-35408"/>
<dbReference type="EMDB" id="EMD-35409"/>
<dbReference type="EMDB" id="EMD-3741"/>
<dbReference type="EMDB" id="EMD-3742"/>
<dbReference type="EMDB" id="EMD-3743"/>
<dbReference type="EMDB" id="EMD-3744"/>
<dbReference type="EMDB" id="EMD-40411"/>
<dbReference type="EMDB" id="EMD-40413"/>
<dbReference type="EMDB" id="EMD-41610"/>
<dbReference type="EMDB" id="EMD-41611"/>
<dbReference type="EMDB" id="EMD-42463"/>
<dbReference type="EMDB" id="EMD-42886"/>
<dbReference type="EMDB" id="EMD-44184"/>
<dbReference type="EMDB" id="EMD-44185"/>
<dbReference type="EMDB" id="EMD-44186"/>
<dbReference type="EMDB" id="EMD-44187"/>
<dbReference type="EMDB" id="EMD-44421"/>
<dbReference type="EMDB" id="EMD-44422"/>
<dbReference type="EMDB" id="EMD-45005"/>
<dbReference type="EMDB" id="EMD-45007"/>
<dbReference type="EMDB" id="EMD-45008"/>
<dbReference type="EMDB" id="EMD-45009"/>
<dbReference type="EMDB" id="EMD-45588"/>
<dbReference type="EMDB" id="EMD-45589"/>
<dbReference type="EMDB" id="EMD-4563"/>
<dbReference type="EMDB" id="EMD-4565"/>
<dbReference type="EMDB" id="EMD-4566"/>
<dbReference type="EMDB" id="EMD-46417"/>
<dbReference type="EMDB" id="EMD-46420"/>
<dbReference type="EMDB" id="EMD-48555"/>
<dbReference type="EMDB" id="EMD-50148"/>
<dbReference type="EMDB" id="EMD-50152"/>
<dbReference type="EMDB" id="EMD-50153"/>
<dbReference type="EMDB" id="EMD-50155"/>
<dbReference type="EMDB" id="EMD-50156"/>
<dbReference type="EMDB" id="EMD-50157"/>
<dbReference type="EMDB" id="EMD-50159"/>
<dbReference type="EMDB" id="EMD-50160"/>
<dbReference type="EMDB" id="EMD-50161"/>
<dbReference type="EMDB" id="EMD-50162"/>
<dbReference type="EMDB" id="EMD-51319"/>
<dbReference type="EMDB" id="EMD-51320"/>
<dbReference type="EMDB" id="EMD-51325"/>
<dbReference type="EMDB" id="EMD-51884"/>
<dbReference type="EMDB" id="EMD-51886"/>
<dbReference type="EMDB" id="EMD-52014"/>
<dbReference type="EMDB" id="EMD-60531"/>
<dbReference type="EMDB" id="EMD-60532"/>
<dbReference type="EMDB" id="EMD-60533"/>
<dbReference type="EMDB" id="EMD-60539"/>
<dbReference type="EMDB" id="EMD-7520"/>
<dbReference type="EMDB" id="EMD-7522"/>
<dbReference type="EMDB" id="EMD-7523"/>
<dbReference type="EMDB" id="EMD-7769"/>
<dbReference type="EMDB" id="EMD-7771"/>
<dbReference type="EMDB" id="EMD-8634"/>
<dbReference type="EMDB" id="EMD-8635"/>
<dbReference type="SASBDB" id="P10636"/>
<dbReference type="SMR" id="P10636"/>
<dbReference type="BioGRID" id="110308">
    <property type="interactions" value="1103"/>
</dbReference>
<dbReference type="CORUM" id="P10636"/>
<dbReference type="DIP" id="DIP-29753N"/>
<dbReference type="ELM" id="P10636"/>
<dbReference type="FunCoup" id="P10636">
    <property type="interactions" value="523"/>
</dbReference>
<dbReference type="IntAct" id="P10636">
    <property type="interactions" value="2079"/>
</dbReference>
<dbReference type="MINT" id="P10636"/>
<dbReference type="STRING" id="9606.ENSP00000340820"/>
<dbReference type="BindingDB" id="P10636"/>
<dbReference type="ChEMBL" id="CHEMBL1293224"/>
<dbReference type="DrugBank" id="DB00637">
    <property type="generic name" value="Astemizole"/>
</dbReference>
<dbReference type="DrugBank" id="DB15033">
    <property type="generic name" value="Flortaucipir"/>
</dbReference>
<dbReference type="DrugBank" id="DB14914">
    <property type="generic name" value="Flortaucipir F-18"/>
</dbReference>
<dbReference type="DrugBank" id="DB00448">
    <property type="generic name" value="Lansoprazole"/>
</dbReference>
<dbReference type="DrugBank" id="DB05565">
    <property type="generic name" value="PBT-1033"/>
</dbReference>
<dbReference type="DrugCentral" id="P10636"/>
<dbReference type="GlyConnect" id="2885">
    <property type="glycosylation" value="1 O-GlcNAc glycan (6 sites)"/>
</dbReference>
<dbReference type="GlyCosmos" id="P10636">
    <property type="glycosylation" value="34 sites, 1 glycan"/>
</dbReference>
<dbReference type="GlyGen" id="P10636">
    <property type="glycosylation" value="16 sites, 1 N-linked glycan (1 site), 1 O-linked glycan (6 sites)"/>
</dbReference>
<dbReference type="iPTMnet" id="P10636"/>
<dbReference type="MetOSite" id="P10636"/>
<dbReference type="PhosphoSitePlus" id="P10636"/>
<dbReference type="SwissPalm" id="P10636"/>
<dbReference type="BioMuta" id="MAPT"/>
<dbReference type="DMDM" id="334302961"/>
<dbReference type="jPOST" id="P10636"/>
<dbReference type="MassIVE" id="P10636"/>
<dbReference type="PaxDb" id="9606-ENSP00000340820"/>
<dbReference type="PeptideAtlas" id="P10636"/>
<dbReference type="ProteomicsDB" id="52624">
    <molecule id="P10636-1"/>
</dbReference>
<dbReference type="ProteomicsDB" id="52625">
    <molecule id="P10636-2"/>
</dbReference>
<dbReference type="ProteomicsDB" id="52626">
    <molecule id="P10636-3"/>
</dbReference>
<dbReference type="ProteomicsDB" id="52627">
    <molecule id="P10636-4"/>
</dbReference>
<dbReference type="ProteomicsDB" id="52628">
    <molecule id="P10636-5"/>
</dbReference>
<dbReference type="ProteomicsDB" id="52629">
    <molecule id="P10636-6"/>
</dbReference>
<dbReference type="ProteomicsDB" id="52630">
    <molecule id="P10636-7"/>
</dbReference>
<dbReference type="ProteomicsDB" id="52631">
    <molecule id="P10636-8"/>
</dbReference>
<dbReference type="ProteomicsDB" id="52632">
    <molecule id="P10636-9"/>
</dbReference>
<dbReference type="Pumba" id="P10636"/>
<dbReference type="TopDownProteomics" id="P10636-3">
    <molecule id="P10636-3"/>
</dbReference>
<dbReference type="ABCD" id="P10636">
    <property type="antibodies" value="86 sequenced antibodies"/>
</dbReference>
<dbReference type="Antibodypedia" id="3124">
    <property type="antibodies" value="5663 antibodies from 53 providers"/>
</dbReference>
<dbReference type="DNASU" id="4137"/>
<dbReference type="Ensembl" id="ENST00000334239.12">
    <molecule id="P10636-2"/>
    <property type="protein sequence ID" value="ENSP00000334886.8"/>
    <property type="gene ID" value="ENSG00000186868.18"/>
</dbReference>
<dbReference type="Ensembl" id="ENST00000351559.10">
    <molecule id="P10636-8"/>
    <property type="protein sequence ID" value="ENSP00000303214.7"/>
    <property type="gene ID" value="ENSG00000186868.18"/>
</dbReference>
<dbReference type="Ensembl" id="ENST00000415613.6">
    <molecule id="P10636-9"/>
    <property type="protein sequence ID" value="ENSP00000410838.2"/>
    <property type="gene ID" value="ENSG00000186868.18"/>
</dbReference>
<dbReference type="Ensembl" id="ENST00000420682.7">
    <molecule id="P10636-7"/>
    <property type="protein sequence ID" value="ENSP00000413056.2"/>
    <property type="gene ID" value="ENSG00000186868.18"/>
</dbReference>
<dbReference type="Ensembl" id="ENST00000431008.7">
    <molecule id="P10636-5"/>
    <property type="protein sequence ID" value="ENSP00000389250.3"/>
    <property type="gene ID" value="ENSG00000186868.18"/>
</dbReference>
<dbReference type="Ensembl" id="ENST00000446361.7">
    <molecule id="P10636-6"/>
    <property type="protein sequence ID" value="ENSP00000408975.3"/>
    <property type="gene ID" value="ENSG00000186868.18"/>
</dbReference>
<dbReference type="Ensembl" id="ENST00000535772.6">
    <molecule id="P10636-4"/>
    <property type="protein sequence ID" value="ENSP00000443028.2"/>
    <property type="gene ID" value="ENSG00000186868.18"/>
</dbReference>
<dbReference type="Ensembl" id="ENST00000571987.5">
    <molecule id="P10636-1"/>
    <property type="protein sequence ID" value="ENSP00000458742.1"/>
    <property type="gene ID" value="ENSG00000186868.18"/>
</dbReference>
<dbReference type="Ensembl" id="ENST00000574436.5">
    <molecule id="P10636-8"/>
    <property type="protein sequence ID" value="ENSP00000460965.1"/>
    <property type="gene ID" value="ENSG00000186868.18"/>
</dbReference>
<dbReference type="Ensembl" id="ENST00000612872.4">
    <molecule id="P10636-7"/>
    <property type="protein sequence ID" value="ENSP00000478602.1"/>
    <property type="gene ID" value="ENSG00000277956.4"/>
</dbReference>
<dbReference type="Ensembl" id="ENST00000613360.4">
    <molecule id="P10636-7"/>
    <property type="protein sequence ID" value="ENSP00000483784.1"/>
    <property type="gene ID" value="ENSG00000276155.4"/>
</dbReference>
<dbReference type="Ensembl" id="ENST00000620070.4">
    <molecule id="P10636-8"/>
    <property type="protein sequence ID" value="ENSP00000484491.1"/>
    <property type="gene ID" value="ENSG00000277956.4"/>
</dbReference>
<dbReference type="Ensembl" id="ENST00000620818.4">
    <molecule id="P10636-5"/>
    <property type="protein sequence ID" value="ENSP00000484321.1"/>
    <property type="gene ID" value="ENSG00000277956.4"/>
</dbReference>
<dbReference type="Ensembl" id="ENST00000620981.4">
    <molecule id="P10636-5"/>
    <property type="protein sequence ID" value="ENSP00000481769.1"/>
    <property type="gene ID" value="ENSG00000276155.4"/>
</dbReference>
<dbReference type="Ensembl" id="ENST00000621329.4">
    <molecule id="P10636-8"/>
    <property type="protein sequence ID" value="ENSP00000477703.1"/>
    <property type="gene ID" value="ENSG00000276155.4"/>
</dbReference>
<dbReference type="Ensembl" id="ENST00000622106.2">
    <molecule id="P10636-6"/>
    <property type="protein sequence ID" value="ENSP00000482244.1"/>
    <property type="gene ID" value="ENSG00000277956.4"/>
</dbReference>
<dbReference type="Ensembl" id="ENST00000622728.1">
    <molecule id="P10636-6"/>
    <property type="protein sequence ID" value="ENSP00000479142.1"/>
    <property type="gene ID" value="ENSG00000276155.4"/>
</dbReference>
<dbReference type="Ensembl" id="ENST00000626571.2">
    <molecule id="P10636-6"/>
    <property type="protein sequence ID" value="ENSP00000486039.1"/>
    <property type="gene ID" value="ENSG00000276155.4"/>
</dbReference>
<dbReference type="Ensembl" id="ENST00000628393.2">
    <molecule id="P10636-2"/>
    <property type="protein sequence ID" value="ENSP00000487570.1"/>
    <property type="gene ID" value="ENSG00000276155.4"/>
</dbReference>
<dbReference type="Ensembl" id="ENST00000631447.1">
    <molecule id="P10636-5"/>
    <property type="protein sequence ID" value="ENSP00000488373.1"/>
    <property type="gene ID" value="ENSG00000277956.4"/>
</dbReference>
<dbReference type="Ensembl" id="ENST00000632500.1">
    <molecule id="P10636-7"/>
    <property type="protein sequence ID" value="ENSP00000487837.1"/>
    <property type="gene ID" value="ENSG00000277956.4"/>
</dbReference>
<dbReference type="Ensembl" id="ENST00000633047.1">
    <molecule id="P10636-2"/>
    <property type="protein sequence ID" value="ENSP00000488245.1"/>
    <property type="gene ID" value="ENSG00000277956.4"/>
</dbReference>
<dbReference type="Ensembl" id="ENST00000634049.1">
    <molecule id="P10636-8"/>
    <property type="protein sequence ID" value="ENSP00000487819.1"/>
    <property type="gene ID" value="ENSG00000277956.4"/>
</dbReference>
<dbReference type="Ensembl" id="ENST00000680542.1">
    <molecule id="P10636-7"/>
    <property type="protein sequence ID" value="ENSP00000505258.1"/>
    <property type="gene ID" value="ENSG00000186868.18"/>
</dbReference>
<dbReference type="Ensembl" id="ENST00000703922.1">
    <molecule id="P10636-7"/>
    <property type="protein sequence ID" value="ENSP00000515557.1"/>
    <property type="gene ID" value="ENSG00000186868.18"/>
</dbReference>
<dbReference type="Ensembl" id="ENST00000703923.1">
    <molecule id="P10636-6"/>
    <property type="protein sequence ID" value="ENSP00000515558.1"/>
    <property type="gene ID" value="ENSG00000186868.18"/>
</dbReference>
<dbReference type="Ensembl" id="ENST00000703924.1">
    <molecule id="P10636-7"/>
    <property type="protein sequence ID" value="ENSP00000515559.1"/>
    <property type="gene ID" value="ENSG00000186868.18"/>
</dbReference>
<dbReference type="Ensembl" id="ENST00000703978.1">
    <molecule id="P10636-8"/>
    <property type="protein sequence ID" value="ENSP00000515600.1"/>
    <property type="gene ID" value="ENSG00000186868.18"/>
</dbReference>
<dbReference type="GeneID" id="4137"/>
<dbReference type="KEGG" id="hsa:4137"/>
<dbReference type="UCSC" id="uc002ijr.5">
    <molecule id="P10636-1"/>
    <property type="organism name" value="human"/>
</dbReference>
<dbReference type="AGR" id="HGNC:6893"/>
<dbReference type="CTD" id="4137"/>
<dbReference type="DisGeNET" id="4137"/>
<dbReference type="GeneCards" id="MAPT"/>
<dbReference type="GeneReviews" id="MAPT"/>
<dbReference type="HGNC" id="HGNC:6893">
    <property type="gene designation" value="MAPT"/>
</dbReference>
<dbReference type="HPA" id="ENSG00000186868">
    <property type="expression patterns" value="Tissue enhanced (brain, skeletal muscle)"/>
</dbReference>
<dbReference type="MalaCards" id="MAPT"/>
<dbReference type="MIM" id="157140">
    <property type="type" value="gene+phenotype"/>
</dbReference>
<dbReference type="MIM" id="172700">
    <property type="type" value="phenotype"/>
</dbReference>
<dbReference type="MIM" id="260540">
    <property type="type" value="phenotype"/>
</dbReference>
<dbReference type="MIM" id="600274">
    <property type="type" value="phenotype"/>
</dbReference>
<dbReference type="MIM" id="601104">
    <property type="type" value="phenotype"/>
</dbReference>
<dbReference type="neXtProt" id="NX_P10636"/>
<dbReference type="OpenTargets" id="ENSG00000186868"/>
<dbReference type="Orphanet" id="275864">
    <property type="disease" value="Behavioral variant of frontotemporal dementia"/>
</dbReference>
<dbReference type="Orphanet" id="240071">
    <property type="disease" value="Classic progressive supranuclear palsy syndrome"/>
</dbReference>
<dbReference type="Orphanet" id="100070">
    <property type="disease" value="Progressive non-fluent aphasia"/>
</dbReference>
<dbReference type="Orphanet" id="240103">
    <property type="disease" value="Progressive supranuclear palsy-corticobasal syndrome"/>
</dbReference>
<dbReference type="Orphanet" id="240085">
    <property type="disease" value="Progressive supranuclear palsy-predominant parkinsonism syndrome"/>
</dbReference>
<dbReference type="Orphanet" id="240112">
    <property type="disease" value="Progressive supranuclear palsy-progressive non-fluent aphasia syndrome"/>
</dbReference>
<dbReference type="Orphanet" id="240094">
    <property type="disease" value="Progressive supranuclear palsy-pure akinesia with gait freezing syndrome"/>
</dbReference>
<dbReference type="Orphanet" id="100069">
    <property type="disease" value="Semantic dementia"/>
</dbReference>
<dbReference type="PharmGKB" id="PA238"/>
<dbReference type="VEuPathDB" id="HostDB:ENSG00000186868"/>
<dbReference type="eggNOG" id="KOG2418">
    <property type="taxonomic scope" value="Eukaryota"/>
</dbReference>
<dbReference type="GeneTree" id="ENSGT00940000155494"/>
<dbReference type="HOGENOM" id="CLU_021741_2_0_1"/>
<dbReference type="InParanoid" id="P10636"/>
<dbReference type="OrthoDB" id="9378527at2759"/>
<dbReference type="PAN-GO" id="P10636">
    <property type="GO annotations" value="4 GO annotations based on evolutionary models"/>
</dbReference>
<dbReference type="TreeFam" id="TF316358"/>
<dbReference type="PathwayCommons" id="P10636"/>
<dbReference type="Reactome" id="R-HSA-264870">
    <property type="pathway name" value="Caspase-mediated cleavage of cytoskeletal proteins"/>
</dbReference>
<dbReference type="Reactome" id="R-HSA-9619483">
    <molecule id="P10636-8"/>
    <property type="pathway name" value="Activation of AMPK downstream of NMDARs"/>
</dbReference>
<dbReference type="Reactome" id="R-HSA-9833482">
    <molecule id="P10636-8"/>
    <property type="pathway name" value="PKR-mediated signaling"/>
</dbReference>
<dbReference type="SABIO-RK" id="P10636"/>
<dbReference type="SignaLink" id="P10636"/>
<dbReference type="SIGNOR" id="P10636"/>
<dbReference type="BioGRID-ORCS" id="4137">
    <property type="hits" value="23 hits in 1151 CRISPR screens"/>
</dbReference>
<dbReference type="CD-CODE" id="03D56D03">
    <property type="entry name" value="Tau inclusion"/>
</dbReference>
<dbReference type="CD-CODE" id="24B12ACB">
    <property type="entry name" value="Synthetic Condensate 000346"/>
</dbReference>
<dbReference type="CD-CODE" id="804901D1">
    <property type="entry name" value="Nuclear speckle"/>
</dbReference>
<dbReference type="CD-CODE" id="8188F968">
    <property type="entry name" value="Tau-Prion Multiphasic condensate"/>
</dbReference>
<dbReference type="CD-CODE" id="8C2F96ED">
    <property type="entry name" value="Centrosome"/>
</dbReference>
<dbReference type="CD-CODE" id="DEE660B4">
    <property type="entry name" value="Stress granule"/>
</dbReference>
<dbReference type="CD-CODE" id="FB4E32DD">
    <property type="entry name" value="Presynaptic clusters and postsynaptic densities"/>
</dbReference>
<dbReference type="ChiTaRS" id="MAPT">
    <property type="organism name" value="human"/>
</dbReference>
<dbReference type="EvolutionaryTrace" id="P10636"/>
<dbReference type="GeneWiki" id="Tau_protein"/>
<dbReference type="GenomeRNAi" id="4137"/>
<dbReference type="Pharos" id="P10636">
    <property type="development level" value="Tclin"/>
</dbReference>
<dbReference type="PRO" id="PR:P10636"/>
<dbReference type="Proteomes" id="UP000005640">
    <property type="component" value="Chromosome 17"/>
</dbReference>
<dbReference type="RNAct" id="P10636">
    <property type="molecule type" value="protein"/>
</dbReference>
<dbReference type="Bgee" id="ENSG00000186868">
    <property type="expression patterns" value="Expressed in cortical plate and 104 other cell types or tissues"/>
</dbReference>
<dbReference type="ExpressionAtlas" id="P10636">
    <property type="expression patterns" value="baseline and differential"/>
</dbReference>
<dbReference type="GO" id="GO:0030673">
    <property type="term" value="C:axolemma"/>
    <property type="evidence" value="ECO:0000314"/>
    <property type="project" value="CAFA"/>
</dbReference>
<dbReference type="GO" id="GO:0030424">
    <property type="term" value="C:axon"/>
    <property type="evidence" value="ECO:0000314"/>
    <property type="project" value="UniProtKB"/>
</dbReference>
<dbReference type="GO" id="GO:1904115">
    <property type="term" value="C:axon cytoplasm"/>
    <property type="evidence" value="ECO:0007669"/>
    <property type="project" value="GOC"/>
</dbReference>
<dbReference type="GO" id="GO:0044297">
    <property type="term" value="C:cell body"/>
    <property type="evidence" value="ECO:0000314"/>
    <property type="project" value="ParkinsonsUK-UCL"/>
</dbReference>
<dbReference type="GO" id="GO:0005737">
    <property type="term" value="C:cytoplasm"/>
    <property type="evidence" value="ECO:0000314"/>
    <property type="project" value="UniProtKB"/>
</dbReference>
<dbReference type="GO" id="GO:0036464">
    <property type="term" value="C:cytoplasmic ribonucleoprotein granule"/>
    <property type="evidence" value="ECO:0000314"/>
    <property type="project" value="ParkinsonsUK-UCL"/>
</dbReference>
<dbReference type="GO" id="GO:0005829">
    <property type="term" value="C:cytosol"/>
    <property type="evidence" value="ECO:0000314"/>
    <property type="project" value="CAFA"/>
</dbReference>
<dbReference type="GO" id="GO:0030425">
    <property type="term" value="C:dendrite"/>
    <property type="evidence" value="ECO:0000314"/>
    <property type="project" value="UniProtKB"/>
</dbReference>
<dbReference type="GO" id="GO:0043197">
    <property type="term" value="C:dendritic spine"/>
    <property type="evidence" value="ECO:0000304"/>
    <property type="project" value="ARUK-UCL"/>
</dbReference>
<dbReference type="GO" id="GO:0005576">
    <property type="term" value="C:extracellular region"/>
    <property type="evidence" value="ECO:0000303"/>
    <property type="project" value="ARUK-UCL"/>
</dbReference>
<dbReference type="GO" id="GO:0097386">
    <property type="term" value="C:glial cell projection"/>
    <property type="evidence" value="ECO:0000250"/>
    <property type="project" value="ARUK-UCL"/>
</dbReference>
<dbReference type="GO" id="GO:0030426">
    <property type="term" value="C:growth cone"/>
    <property type="evidence" value="ECO:0000314"/>
    <property type="project" value="UniProtKB"/>
</dbReference>
<dbReference type="GO" id="GO:0044304">
    <property type="term" value="C:main axon"/>
    <property type="evidence" value="ECO:0000250"/>
    <property type="project" value="ARUK-UCL"/>
</dbReference>
<dbReference type="GO" id="GO:0045121">
    <property type="term" value="C:membrane raft"/>
    <property type="evidence" value="ECO:0000250"/>
    <property type="project" value="ARUK-UCL"/>
</dbReference>
<dbReference type="GO" id="GO:0005874">
    <property type="term" value="C:microtubule"/>
    <property type="evidence" value="ECO:0007669"/>
    <property type="project" value="UniProtKB-KW"/>
</dbReference>
<dbReference type="GO" id="GO:0015630">
    <property type="term" value="C:microtubule cytoskeleton"/>
    <property type="evidence" value="ECO:0000314"/>
    <property type="project" value="CAFA"/>
</dbReference>
<dbReference type="GO" id="GO:0005739">
    <property type="term" value="C:mitochondrion"/>
    <property type="evidence" value="ECO:0000304"/>
    <property type="project" value="ARUK-UCL"/>
</dbReference>
<dbReference type="GO" id="GO:0097418">
    <property type="term" value="C:neurofibrillary tangle"/>
    <property type="evidence" value="ECO:0000314"/>
    <property type="project" value="CAFA"/>
</dbReference>
<dbReference type="GO" id="GO:0043005">
    <property type="term" value="C:neuron projection"/>
    <property type="evidence" value="ECO:0000318"/>
    <property type="project" value="GO_Central"/>
</dbReference>
<dbReference type="GO" id="GO:0043025">
    <property type="term" value="C:neuronal cell body"/>
    <property type="evidence" value="ECO:0000315"/>
    <property type="project" value="ParkinsonsUK-UCL"/>
</dbReference>
<dbReference type="GO" id="GO:0034399">
    <property type="term" value="C:nuclear periphery"/>
    <property type="evidence" value="ECO:0000314"/>
    <property type="project" value="UniProtKB"/>
</dbReference>
<dbReference type="GO" id="GO:0005634">
    <property type="term" value="C:nucleus"/>
    <property type="evidence" value="ECO:0000250"/>
    <property type="project" value="ParkinsonsUK-UCL"/>
</dbReference>
<dbReference type="GO" id="GO:0005886">
    <property type="term" value="C:plasma membrane"/>
    <property type="evidence" value="ECO:0000314"/>
    <property type="project" value="UniProtKB"/>
</dbReference>
<dbReference type="GO" id="GO:0036477">
    <property type="term" value="C:somatodendritic compartment"/>
    <property type="evidence" value="ECO:0000315"/>
    <property type="project" value="ParkinsonsUK-UCL"/>
</dbReference>
<dbReference type="GO" id="GO:0045298">
    <property type="term" value="C:tubulin complex"/>
    <property type="evidence" value="ECO:0000314"/>
    <property type="project" value="UniProtKB"/>
</dbReference>
<dbReference type="GO" id="GO:0003779">
    <property type="term" value="F:actin binding"/>
    <property type="evidence" value="ECO:0000304"/>
    <property type="project" value="ARUK-UCL"/>
</dbReference>
<dbReference type="GO" id="GO:0034185">
    <property type="term" value="F:apolipoprotein binding"/>
    <property type="evidence" value="ECO:0000353"/>
    <property type="project" value="BHF-UCL"/>
</dbReference>
<dbReference type="GO" id="GO:0003677">
    <property type="term" value="F:DNA binding"/>
    <property type="evidence" value="ECO:0000250"/>
    <property type="project" value="ParkinsonsUK-UCL"/>
</dbReference>
<dbReference type="GO" id="GO:0003690">
    <property type="term" value="F:double-stranded DNA binding"/>
    <property type="evidence" value="ECO:0000304"/>
    <property type="project" value="ARUK-UCL"/>
</dbReference>
<dbReference type="GO" id="GO:0034452">
    <property type="term" value="F:dynactin binding"/>
    <property type="evidence" value="ECO:0000304"/>
    <property type="project" value="ParkinsonsUK-UCL"/>
</dbReference>
<dbReference type="GO" id="GO:0019899">
    <property type="term" value="F:enzyme binding"/>
    <property type="evidence" value="ECO:0000353"/>
    <property type="project" value="UniProtKB"/>
</dbReference>
<dbReference type="GO" id="GO:0099077">
    <property type="term" value="F:histone-dependent DNA binding"/>
    <property type="evidence" value="ECO:0000304"/>
    <property type="project" value="ARUK-UCL"/>
</dbReference>
<dbReference type="GO" id="GO:0051879">
    <property type="term" value="F:Hsp90 protein binding"/>
    <property type="evidence" value="ECO:0000353"/>
    <property type="project" value="ARUK-UCL"/>
</dbReference>
<dbReference type="GO" id="GO:0042802">
    <property type="term" value="F:identical protein binding"/>
    <property type="evidence" value="ECO:0000314"/>
    <property type="project" value="CAFA"/>
</dbReference>
<dbReference type="GO" id="GO:0071813">
    <property type="term" value="F:lipoprotein particle binding"/>
    <property type="evidence" value="ECO:0000353"/>
    <property type="project" value="UniProtKB"/>
</dbReference>
<dbReference type="GO" id="GO:0008017">
    <property type="term" value="F:microtubule binding"/>
    <property type="evidence" value="ECO:0000314"/>
    <property type="project" value="UniProtKB"/>
</dbReference>
<dbReference type="GO" id="GO:0099609">
    <property type="term" value="F:microtubule lateral binding"/>
    <property type="evidence" value="ECO:0000315"/>
    <property type="project" value="CAFA"/>
</dbReference>
<dbReference type="GO" id="GO:0003680">
    <property type="term" value="F:minor groove of adenine-thymine-rich DNA binding"/>
    <property type="evidence" value="ECO:0000304"/>
    <property type="project" value="ARUK-UCL"/>
</dbReference>
<dbReference type="GO" id="GO:0035091">
    <property type="term" value="F:phosphatidylinositol binding"/>
    <property type="evidence" value="ECO:0000304"/>
    <property type="project" value="ARUK-UCL"/>
</dbReference>
<dbReference type="GO" id="GO:1902936">
    <property type="term" value="F:phosphatidylinositol bisphosphate binding"/>
    <property type="evidence" value="ECO:0000304"/>
    <property type="project" value="ARUK-UCL"/>
</dbReference>
<dbReference type="GO" id="GO:0019901">
    <property type="term" value="F:protein kinase binding"/>
    <property type="evidence" value="ECO:0000353"/>
    <property type="project" value="ARUK-UCL"/>
</dbReference>
<dbReference type="GO" id="GO:0051721">
    <property type="term" value="F:protein phosphatase 2A binding"/>
    <property type="evidence" value="ECO:0000304"/>
    <property type="project" value="ParkinsonsUK-UCL"/>
</dbReference>
<dbReference type="GO" id="GO:0051087">
    <property type="term" value="F:protein-folding chaperone binding"/>
    <property type="evidence" value="ECO:0000353"/>
    <property type="project" value="ARUK-UCL"/>
</dbReference>
<dbReference type="GO" id="GO:0030674">
    <property type="term" value="F:protein-macromolecule adaptor activity"/>
    <property type="evidence" value="ECO:0000304"/>
    <property type="project" value="ARUK-UCL"/>
</dbReference>
<dbReference type="GO" id="GO:0003723">
    <property type="term" value="F:RNA binding"/>
    <property type="evidence" value="ECO:0000304"/>
    <property type="project" value="ARUK-UCL"/>
</dbReference>
<dbReference type="GO" id="GO:0043565">
    <property type="term" value="F:sequence-specific DNA binding"/>
    <property type="evidence" value="ECO:0000304"/>
    <property type="project" value="ARUK-UCL"/>
</dbReference>
<dbReference type="GO" id="GO:0017124">
    <property type="term" value="F:SH3 domain binding"/>
    <property type="evidence" value="ECO:0000353"/>
    <property type="project" value="UniProtKB"/>
</dbReference>
<dbReference type="GO" id="GO:0003697">
    <property type="term" value="F:single-stranded DNA binding"/>
    <property type="evidence" value="ECO:0000304"/>
    <property type="project" value="ARUK-UCL"/>
</dbReference>
<dbReference type="GO" id="GO:1990000">
    <property type="term" value="P:amyloid fibril formation"/>
    <property type="evidence" value="ECO:0000314"/>
    <property type="project" value="DisProt"/>
</dbReference>
<dbReference type="GO" id="GO:0048143">
    <property type="term" value="P:astrocyte activation"/>
    <property type="evidence" value="ECO:0000304"/>
    <property type="project" value="ParkinsonsUK-UCL"/>
</dbReference>
<dbReference type="GO" id="GO:0061564">
    <property type="term" value="P:axon development"/>
    <property type="evidence" value="ECO:0000304"/>
    <property type="project" value="ARUK-UCL"/>
</dbReference>
<dbReference type="GO" id="GO:0098930">
    <property type="term" value="P:axonal transport"/>
    <property type="evidence" value="ECO:0000304"/>
    <property type="project" value="ParkinsonsUK-UCL"/>
</dbReference>
<dbReference type="GO" id="GO:0019896">
    <property type="term" value="P:axonal transport of mitochondrion"/>
    <property type="evidence" value="ECO:0000304"/>
    <property type="project" value="ParkinsonsUK-UCL"/>
</dbReference>
<dbReference type="GO" id="GO:0007267">
    <property type="term" value="P:cell-cell signaling"/>
    <property type="evidence" value="ECO:0000303"/>
    <property type="project" value="ARUK-UCL"/>
</dbReference>
<dbReference type="GO" id="GO:1990416">
    <property type="term" value="P:cellular response to brain-derived neurotrophic factor stimulus"/>
    <property type="evidence" value="ECO:0000304"/>
    <property type="project" value="ARUK-UCL"/>
</dbReference>
<dbReference type="GO" id="GO:0034605">
    <property type="term" value="P:cellular response to heat"/>
    <property type="evidence" value="ECO:0000304"/>
    <property type="project" value="ParkinsonsUK-UCL"/>
</dbReference>
<dbReference type="GO" id="GO:1990090">
    <property type="term" value="P:cellular response to nerve growth factor stimulus"/>
    <property type="evidence" value="ECO:0000304"/>
    <property type="project" value="ARUK-UCL"/>
</dbReference>
<dbReference type="GO" id="GO:0034614">
    <property type="term" value="P:cellular response to reactive oxygen species"/>
    <property type="evidence" value="ECO:0000304"/>
    <property type="project" value="ARUK-UCL"/>
</dbReference>
<dbReference type="GO" id="GO:0021954">
    <property type="term" value="P:central nervous system neuron development"/>
    <property type="evidence" value="ECO:0000304"/>
    <property type="project" value="ARUK-UCL"/>
</dbReference>
<dbReference type="GO" id="GO:0031122">
    <property type="term" value="P:cytoplasmic microtubule organization"/>
    <property type="evidence" value="ECO:0000304"/>
    <property type="project" value="ParkinsonsUK-UCL"/>
</dbReference>
<dbReference type="GO" id="GO:0006974">
    <property type="term" value="P:DNA damage response"/>
    <property type="evidence" value="ECO:0000315"/>
    <property type="project" value="ParkinsonsUK-UCL"/>
</dbReference>
<dbReference type="GO" id="GO:0048699">
    <property type="term" value="P:generation of neurons"/>
    <property type="evidence" value="ECO:0000303"/>
    <property type="project" value="UniProtKB"/>
</dbReference>
<dbReference type="GO" id="GO:0048312">
    <property type="term" value="P:intracellular distribution of mitochondria"/>
    <property type="evidence" value="ECO:0000315"/>
    <property type="project" value="ParkinsonsUK-UCL"/>
</dbReference>
<dbReference type="GO" id="GO:0007611">
    <property type="term" value="P:learning or memory"/>
    <property type="evidence" value="ECO:0000315"/>
    <property type="project" value="ARUK-UCL"/>
</dbReference>
<dbReference type="GO" id="GO:0007613">
    <property type="term" value="P:memory"/>
    <property type="evidence" value="ECO:0000315"/>
    <property type="project" value="ParkinsonsUK-UCL"/>
</dbReference>
<dbReference type="GO" id="GO:0001774">
    <property type="term" value="P:microglial cell activation"/>
    <property type="evidence" value="ECO:0000304"/>
    <property type="project" value="ParkinsonsUK-UCL"/>
</dbReference>
<dbReference type="GO" id="GO:0000226">
    <property type="term" value="P:microtubule cytoskeleton organization"/>
    <property type="evidence" value="ECO:0000314"/>
    <property type="project" value="UniProtKB"/>
</dbReference>
<dbReference type="GO" id="GO:0046785">
    <property type="term" value="P:microtubule polymerization"/>
    <property type="evidence" value="ECO:0000314"/>
    <property type="project" value="ARUK-UCL"/>
</dbReference>
<dbReference type="GO" id="GO:1903748">
    <property type="term" value="P:negative regulation of establishment of protein localization to mitochondrion"/>
    <property type="evidence" value="ECO:0000315"/>
    <property type="project" value="ParkinsonsUK-UCL"/>
</dbReference>
<dbReference type="GO" id="GO:0010629">
    <property type="term" value="P:negative regulation of gene expression"/>
    <property type="evidence" value="ECO:0000315"/>
    <property type="project" value="ARUK-UCL"/>
</dbReference>
<dbReference type="GO" id="GO:0090258">
    <property type="term" value="P:negative regulation of mitochondrial fission"/>
    <property type="evidence" value="ECO:0000315"/>
    <property type="project" value="ARUK-UCL"/>
</dbReference>
<dbReference type="GO" id="GO:0010917">
    <property type="term" value="P:negative regulation of mitochondrial membrane potential"/>
    <property type="evidence" value="ECO:0000315"/>
    <property type="project" value="ParkinsonsUK-UCL"/>
</dbReference>
<dbReference type="GO" id="GO:1904428">
    <property type="term" value="P:negative regulation of tubulin deacetylation"/>
    <property type="evidence" value="ECO:0000316"/>
    <property type="project" value="ARUK-UCL"/>
</dbReference>
<dbReference type="GO" id="GO:1902988">
    <property type="term" value="P:neurofibrillary tangle assembly"/>
    <property type="evidence" value="ECO:0000303"/>
    <property type="project" value="ParkinsonsUK-UCL"/>
</dbReference>
<dbReference type="GO" id="GO:0031175">
    <property type="term" value="P:neuron projection development"/>
    <property type="evidence" value="ECO:0000318"/>
    <property type="project" value="GO_Central"/>
</dbReference>
<dbReference type="GO" id="GO:0072386">
    <property type="term" value="P:plus-end-directed organelle transport along microtubule"/>
    <property type="evidence" value="ECO:0000304"/>
    <property type="project" value="ParkinsonsUK-UCL"/>
</dbReference>
<dbReference type="GO" id="GO:0045773">
    <property type="term" value="P:positive regulation of axon extension"/>
    <property type="evidence" value="ECO:0000314"/>
    <property type="project" value="UniProtKB"/>
</dbReference>
<dbReference type="GO" id="GO:0031116">
    <property type="term" value="P:positive regulation of microtubule polymerization"/>
    <property type="evidence" value="ECO:0000314"/>
    <property type="project" value="UniProtKB"/>
</dbReference>
<dbReference type="GO" id="GO:1903829">
    <property type="term" value="P:positive regulation of protein localization"/>
    <property type="evidence" value="ECO:0000315"/>
    <property type="project" value="CAFA"/>
</dbReference>
<dbReference type="GO" id="GO:1902474">
    <property type="term" value="P:positive regulation of protein localization to synapse"/>
    <property type="evidence" value="ECO:0000315"/>
    <property type="project" value="ParkinsonsUK-UCL"/>
</dbReference>
<dbReference type="GO" id="GO:0032930">
    <property type="term" value="P:positive regulation of superoxide anion generation"/>
    <property type="evidence" value="ECO:0000315"/>
    <property type="project" value="ARUK-UCL"/>
</dbReference>
<dbReference type="GO" id="GO:0051260">
    <property type="term" value="P:protein homooligomerization"/>
    <property type="evidence" value="ECO:0000353"/>
    <property type="project" value="ARUK-UCL"/>
</dbReference>
<dbReference type="GO" id="GO:0051258">
    <property type="term" value="P:protein polymerization"/>
    <property type="evidence" value="ECO:0000315"/>
    <property type="project" value="UniProtKB"/>
</dbReference>
<dbReference type="GO" id="GO:0010506">
    <property type="term" value="P:regulation of autophagy"/>
    <property type="evidence" value="ECO:0000316"/>
    <property type="project" value="MGI"/>
</dbReference>
<dbReference type="GO" id="GO:0050848">
    <property type="term" value="P:regulation of calcium-mediated signaling"/>
    <property type="evidence" value="ECO:0000314"/>
    <property type="project" value="ARUK-UCL"/>
</dbReference>
<dbReference type="GO" id="GO:1900034">
    <property type="term" value="P:regulation of cellular response to heat"/>
    <property type="evidence" value="ECO:0000315"/>
    <property type="project" value="ParkinsonsUK-UCL"/>
</dbReference>
<dbReference type="GO" id="GO:0033044">
    <property type="term" value="P:regulation of chromosome organization"/>
    <property type="evidence" value="ECO:0000304"/>
    <property type="project" value="ARUK-UCL"/>
</dbReference>
<dbReference type="GO" id="GO:1900452">
    <property type="term" value="P:regulation of long-term synaptic depression"/>
    <property type="evidence" value="ECO:0000304"/>
    <property type="project" value="ARUK-UCL"/>
</dbReference>
<dbReference type="GO" id="GO:0070507">
    <property type="term" value="P:regulation of microtubule cytoskeleton organization"/>
    <property type="evidence" value="ECO:0000315"/>
    <property type="project" value="CAFA"/>
</dbReference>
<dbReference type="GO" id="GO:0031113">
    <property type="term" value="P:regulation of microtubule polymerization"/>
    <property type="evidence" value="ECO:0000304"/>
    <property type="project" value="ARUK-UCL"/>
</dbReference>
<dbReference type="GO" id="GO:0031110">
    <property type="term" value="P:regulation of microtubule polymerization or depolymerization"/>
    <property type="evidence" value="ECO:0000315"/>
    <property type="project" value="CAFA"/>
</dbReference>
<dbReference type="GO" id="GO:0090140">
    <property type="term" value="P:regulation of mitochondrial fission"/>
    <property type="evidence" value="ECO:0000305"/>
    <property type="project" value="ParkinsonsUK-UCL"/>
</dbReference>
<dbReference type="GO" id="GO:0048167">
    <property type="term" value="P:regulation of synaptic plasticity"/>
    <property type="evidence" value="ECO:0000304"/>
    <property type="project" value="ARUK-UCL"/>
</dbReference>
<dbReference type="GO" id="GO:0010288">
    <property type="term" value="P:response to lead ion"/>
    <property type="evidence" value="ECO:0000250"/>
    <property type="project" value="ARUK-UCL"/>
</dbReference>
<dbReference type="GO" id="GO:0016072">
    <property type="term" value="P:rRNA metabolic process"/>
    <property type="evidence" value="ECO:0000304"/>
    <property type="project" value="ARUK-UCL"/>
</dbReference>
<dbReference type="GO" id="GO:0034063">
    <property type="term" value="P:stress granule assembly"/>
    <property type="evidence" value="ECO:0000304"/>
    <property type="project" value="ARUK-UCL"/>
</dbReference>
<dbReference type="GO" id="GO:0097435">
    <property type="term" value="P:supramolecular fiber organization"/>
    <property type="evidence" value="ECO:0000314"/>
    <property type="project" value="CAFA"/>
</dbReference>
<dbReference type="GO" id="GO:0007416">
    <property type="term" value="P:synapse assembly"/>
    <property type="evidence" value="ECO:0000315"/>
    <property type="project" value="ARUK-UCL"/>
</dbReference>
<dbReference type="GO" id="GO:0050808">
    <property type="term" value="P:synapse organization"/>
    <property type="evidence" value="ECO:0000315"/>
    <property type="project" value="ParkinsonsUK-UCL"/>
</dbReference>
<dbReference type="DisProt" id="DP01100">
    <molecule id="P10636-8"/>
</dbReference>
<dbReference type="InterPro" id="IPR027324">
    <property type="entry name" value="MAP2/MAP4/Tau"/>
</dbReference>
<dbReference type="InterPro" id="IPR001084">
    <property type="entry name" value="MAP_tubulin-bd_rpt"/>
</dbReference>
<dbReference type="InterPro" id="IPR002955">
    <property type="entry name" value="Tau"/>
</dbReference>
<dbReference type="PANTHER" id="PTHR11501">
    <property type="entry name" value="MICROTUBULE-ASSOCIATED PROTEIN"/>
    <property type="match status" value="1"/>
</dbReference>
<dbReference type="PANTHER" id="PTHR11501:SF14">
    <property type="entry name" value="MICROTUBULE-ASSOCIATED PROTEIN TAU"/>
    <property type="match status" value="1"/>
</dbReference>
<dbReference type="Pfam" id="PF00418">
    <property type="entry name" value="Tubulin-binding"/>
    <property type="match status" value="4"/>
</dbReference>
<dbReference type="PRINTS" id="PR01261">
    <property type="entry name" value="TAUPROTEIN"/>
</dbReference>
<dbReference type="PROSITE" id="PS00229">
    <property type="entry name" value="TAU_MAP_1"/>
    <property type="match status" value="4"/>
</dbReference>
<dbReference type="PROSITE" id="PS51491">
    <property type="entry name" value="TAU_MAP_2"/>
    <property type="match status" value="4"/>
</dbReference>
<evidence type="ECO:0000250" key="1"/>
<evidence type="ECO:0000250" key="2">
    <source>
        <dbReference type="UniProtKB" id="P10637"/>
    </source>
</evidence>
<evidence type="ECO:0000250" key="3">
    <source>
        <dbReference type="UniProtKB" id="P19332"/>
    </source>
</evidence>
<evidence type="ECO:0000255" key="4">
    <source>
        <dbReference type="PROSITE-ProRule" id="PRU00824"/>
    </source>
</evidence>
<evidence type="ECO:0000256" key="5">
    <source>
        <dbReference type="SAM" id="MobiDB-lite"/>
    </source>
</evidence>
<evidence type="ECO:0000269" key="6">
    <source>
    </source>
</evidence>
<evidence type="ECO:0000269" key="7">
    <source>
    </source>
</evidence>
<evidence type="ECO:0000269" key="8">
    <source>
    </source>
</evidence>
<evidence type="ECO:0000269" key="9">
    <source>
    </source>
</evidence>
<evidence type="ECO:0000269" key="10">
    <source>
    </source>
</evidence>
<evidence type="ECO:0000269" key="11">
    <source>
    </source>
</evidence>
<evidence type="ECO:0000269" key="12">
    <source>
    </source>
</evidence>
<evidence type="ECO:0000269" key="13">
    <source>
    </source>
</evidence>
<evidence type="ECO:0000269" key="14">
    <source>
    </source>
</evidence>
<evidence type="ECO:0000269" key="15">
    <source>
    </source>
</evidence>
<evidence type="ECO:0000269" key="16">
    <source>
    </source>
</evidence>
<evidence type="ECO:0000269" key="17">
    <source>
    </source>
</evidence>
<evidence type="ECO:0000269" key="18">
    <source>
    </source>
</evidence>
<evidence type="ECO:0000269" key="19">
    <source>
    </source>
</evidence>
<evidence type="ECO:0000269" key="20">
    <source>
    </source>
</evidence>
<evidence type="ECO:0000269" key="21">
    <source>
    </source>
</evidence>
<evidence type="ECO:0000269" key="22">
    <source>
    </source>
</evidence>
<evidence type="ECO:0000269" key="23">
    <source>
    </source>
</evidence>
<evidence type="ECO:0000269" key="24">
    <source>
    </source>
</evidence>
<evidence type="ECO:0000269" key="25">
    <source>
    </source>
</evidence>
<evidence type="ECO:0000269" key="26">
    <source>
    </source>
</evidence>
<evidence type="ECO:0000269" key="27">
    <source>
    </source>
</evidence>
<evidence type="ECO:0000269" key="28">
    <source>
    </source>
</evidence>
<evidence type="ECO:0000269" key="29">
    <source>
    </source>
</evidence>
<evidence type="ECO:0000269" key="30">
    <source>
    </source>
</evidence>
<evidence type="ECO:0000269" key="31">
    <source>
    </source>
</evidence>
<evidence type="ECO:0000269" key="32">
    <source>
    </source>
</evidence>
<evidence type="ECO:0000269" key="33">
    <source>
    </source>
</evidence>
<evidence type="ECO:0000269" key="34">
    <source>
    </source>
</evidence>
<evidence type="ECO:0000269" key="35">
    <source>
    </source>
</evidence>
<evidence type="ECO:0000269" key="36">
    <source>
    </source>
</evidence>
<evidence type="ECO:0000269" key="37">
    <source>
    </source>
</evidence>
<evidence type="ECO:0000269" key="38">
    <source>
    </source>
</evidence>
<evidence type="ECO:0000269" key="39">
    <source>
    </source>
</evidence>
<evidence type="ECO:0000269" key="40">
    <source>
    </source>
</evidence>
<evidence type="ECO:0000269" key="41">
    <source>
    </source>
</evidence>
<evidence type="ECO:0000269" key="42">
    <source>
    </source>
</evidence>
<evidence type="ECO:0000269" key="43">
    <source>
    </source>
</evidence>
<evidence type="ECO:0000269" key="44">
    <source>
    </source>
</evidence>
<evidence type="ECO:0000269" key="45">
    <source>
    </source>
</evidence>
<evidence type="ECO:0000269" key="46">
    <source>
    </source>
</evidence>
<evidence type="ECO:0000269" key="47">
    <source>
    </source>
</evidence>
<evidence type="ECO:0000269" key="48">
    <source>
    </source>
</evidence>
<evidence type="ECO:0000269" key="49">
    <source>
    </source>
</evidence>
<evidence type="ECO:0000269" key="50">
    <source>
    </source>
</evidence>
<evidence type="ECO:0000269" key="51">
    <source>
    </source>
</evidence>
<evidence type="ECO:0000269" key="52">
    <source>
    </source>
</evidence>
<evidence type="ECO:0000269" key="53">
    <source>
    </source>
</evidence>
<evidence type="ECO:0000269" key="54">
    <source>
    </source>
</evidence>
<evidence type="ECO:0000269" key="55">
    <source>
    </source>
</evidence>
<evidence type="ECO:0000269" key="56">
    <source>
    </source>
</evidence>
<evidence type="ECO:0000269" key="57">
    <source>
    </source>
</evidence>
<evidence type="ECO:0000269" key="58">
    <source>
    </source>
</evidence>
<evidence type="ECO:0000269" key="59">
    <source>
    </source>
</evidence>
<evidence type="ECO:0000269" key="60">
    <source>
    </source>
</evidence>
<evidence type="ECO:0000269" key="61">
    <source>
    </source>
</evidence>
<evidence type="ECO:0000269" key="62">
    <source>
    </source>
</evidence>
<evidence type="ECO:0000269" key="63">
    <source>
    </source>
</evidence>
<evidence type="ECO:0000269" key="64">
    <source>
    </source>
</evidence>
<evidence type="ECO:0000269" key="65">
    <source>
    </source>
</evidence>
<evidence type="ECO:0000269" key="66">
    <source>
    </source>
</evidence>
<evidence type="ECO:0000269" key="67">
    <source>
    </source>
</evidence>
<evidence type="ECO:0000269" key="68">
    <source>
    </source>
</evidence>
<evidence type="ECO:0000269" key="69">
    <source>
    </source>
</evidence>
<evidence type="ECO:0000269" key="70">
    <source>
    </source>
</evidence>
<evidence type="ECO:0000269" key="71">
    <source>
    </source>
</evidence>
<evidence type="ECO:0000303" key="72">
    <source>
    </source>
</evidence>
<evidence type="ECO:0000303" key="73">
    <source>
    </source>
</evidence>
<evidence type="ECO:0000303" key="74">
    <source>
    </source>
</evidence>
<evidence type="ECO:0000303" key="75">
    <source>
    </source>
</evidence>
<evidence type="ECO:0000303" key="76">
    <source>
    </source>
</evidence>
<evidence type="ECO:0000303" key="77">
    <source>
    </source>
</evidence>
<evidence type="ECO:0000303" key="78">
    <source ref="6"/>
</evidence>
<evidence type="ECO:0000303" key="79">
    <source ref="7"/>
</evidence>
<evidence type="ECO:0000305" key="80"/>
<evidence type="ECO:0000305" key="81">
    <source>
    </source>
</evidence>
<evidence type="ECO:0000312" key="82">
    <source>
        <dbReference type="HGNC" id="HGNC:6893"/>
    </source>
</evidence>
<evidence type="ECO:0007744" key="83">
    <source>
    </source>
</evidence>
<evidence type="ECO:0007744" key="84">
    <source>
    </source>
</evidence>
<evidence type="ECO:0007744" key="85">
    <source>
    </source>
</evidence>
<evidence type="ECO:0007744" key="86">
    <source>
    </source>
</evidence>
<evidence type="ECO:0007829" key="87">
    <source>
        <dbReference type="PDB" id="5MP5"/>
    </source>
</evidence>
<evidence type="ECO:0007829" key="88">
    <source>
        <dbReference type="PDB" id="5N5A"/>
    </source>
</evidence>
<evidence type="ECO:0007829" key="89">
    <source>
        <dbReference type="PDB" id="5ZV3"/>
    </source>
</evidence>
<evidence type="ECO:0007829" key="90">
    <source>
        <dbReference type="PDB" id="6CVJ"/>
    </source>
</evidence>
<evidence type="ECO:0007829" key="91">
    <source>
        <dbReference type="PDB" id="6N4P"/>
    </source>
</evidence>
<evidence type="ECO:0007829" key="92">
    <source>
        <dbReference type="PDB" id="7P6A"/>
    </source>
</evidence>
<evidence type="ECO:0007829" key="93">
    <source>
        <dbReference type="PDB" id="7QK6"/>
    </source>
</evidence>
<evidence type="ECO:0007829" key="94">
    <source>
        <dbReference type="PDB" id="7QKY"/>
    </source>
</evidence>
<evidence type="ECO:0007829" key="95">
    <source>
        <dbReference type="PDB" id="7QKZ"/>
    </source>
</evidence>
<evidence type="ECO:0007829" key="96">
    <source>
        <dbReference type="PDB" id="7R5H"/>
    </source>
</evidence>
<evidence type="ECO:0007829" key="97">
    <source>
        <dbReference type="PDB" id="7SP1"/>
    </source>
</evidence>
<evidence type="ECO:0007829" key="98">
    <source>
        <dbReference type="PDB" id="8FYU"/>
    </source>
</evidence>
<evidence type="ECO:0007829" key="99">
    <source>
        <dbReference type="PDB" id="8OP0"/>
    </source>
</evidence>
<evidence type="ECO:0007829" key="100">
    <source>
        <dbReference type="PDB" id="8Q98"/>
    </source>
</evidence>
<proteinExistence type="evidence at protein level"/>
<reference key="1">
    <citation type="journal article" date="1988" name="Proc. Natl. Acad. Sci. U.S.A.">
        <title>Cloning and sequencing of the cDNA encoding a core protein of the paired helical filament of Alzheimer disease: identification as the microtubule-associated protein tau.</title>
        <authorList>
            <person name="Goedert M."/>
            <person name="Wischik C."/>
            <person name="Crowther R."/>
            <person name="Walker J."/>
            <person name="Klug A."/>
        </authorList>
    </citation>
    <scope>NUCLEOTIDE SEQUENCE [MRNA] (ISOFORM FETAL-TAU)</scope>
    <source>
        <tissue>Brain</tissue>
    </source>
</reference>
<reference key="2">
    <citation type="journal article" date="1989" name="EMBO J.">
        <title>Cloning and sequencing of the cDNA encoding an isoform of microtubule-associated protein tau containing four tandem repeats: differential expression of tau protein mRNAs in human brain.</title>
        <authorList>
            <person name="Goedert M."/>
            <person name="Spillantini M.G."/>
            <person name="Potier M.-C."/>
            <person name="Ulrich J."/>
            <person name="Crowther R.A."/>
        </authorList>
    </citation>
    <scope>NUCLEOTIDE SEQUENCE [MRNA] (ISOFORM TAU-D)</scope>
    <source>
        <tissue>Brain</tissue>
    </source>
</reference>
<reference key="3">
    <citation type="journal article" date="1989" name="Neuron">
        <title>The microtubule binding domain of tau protein.</title>
        <authorList>
            <person name="Lee G."/>
            <person name="Neve R.L."/>
            <person name="Kosik K.S."/>
        </authorList>
    </citation>
    <scope>NUCLEOTIDE SEQUENCE [MRNA] (ISOFORMS TAU-A AND FETAL-TAU)</scope>
    <source>
        <tissue>Fetal brain</tissue>
    </source>
</reference>
<reference key="4">
    <citation type="journal article" date="1989" name="Neuron">
        <title>Multiple isoforms of human microtubule-associated protein tau: sequences and localization in neurofibrillary tangles of Alzheimer's disease.</title>
        <authorList>
            <person name="Goedert M."/>
            <person name="Spillantini M.G."/>
            <person name="Jakes R."/>
            <person name="Rutherford D."/>
            <person name="Crowther R.A."/>
        </authorList>
    </citation>
    <scope>NUCLEOTIDE SEQUENCE [MRNA] (ISOFORMS TAU-B; TAU-C; TAU-E AND TAU-F)</scope>
    <scope>ASSOCIATION WITH ALZHEIMER DISEASE</scope>
    <source>
        <tissue>Brain</tissue>
    </source>
</reference>
<reference key="5">
    <citation type="journal article" date="1992" name="Biochemistry">
        <title>Structure and novel exons of the human tau gene.</title>
        <authorList>
            <person name="Andreadis A."/>
            <person name="Brown W.M."/>
            <person name="Kosik K.S."/>
        </authorList>
    </citation>
    <scope>NUCLEOTIDE SEQUENCE [GENOMIC DNA] (ISOFORMS PNS-TAU; FETAL-TAU AND TAU-F)</scope>
    <scope>ALTERNATIVE SPLICING</scope>
    <scope>VARIANT HIS-441</scope>
</reference>
<reference key="6">
    <citation type="submission" date="2004-08" db="EMBL/GenBank/DDBJ databases">
        <title>Cloning of tau-related genes.</title>
        <authorList>
            <person name="Chun J."/>
            <person name="Kwon T."/>
            <person name="Lee E.-J."/>
            <person name="Hyun S.-H."/>
            <person name="Kang S.S."/>
        </authorList>
    </citation>
    <scope>NUCLEOTIDE SEQUENCE [MRNA] (ISOFORM TAU-E)</scope>
</reference>
<reference key="7">
    <citation type="submission" date="2003-05" db="EMBL/GenBank/DDBJ databases">
        <title>Cloning of human full-length CDSs in BD Creator(TM) system donor vector.</title>
        <authorList>
            <person name="Kalnine N."/>
            <person name="Chen X."/>
            <person name="Rolfs A."/>
            <person name="Halleck A."/>
            <person name="Hines L."/>
            <person name="Eisenstein S."/>
            <person name="Koundinya M."/>
            <person name="Raphael J."/>
            <person name="Moreira D."/>
            <person name="Kelley T."/>
            <person name="LaBaer J."/>
            <person name="Lin Y."/>
            <person name="Phelan M."/>
            <person name="Farmer A."/>
        </authorList>
    </citation>
    <scope>NUCLEOTIDE SEQUENCE [LARGE SCALE MRNA] (ISOFORM FETAL-TAU)</scope>
</reference>
<reference key="8">
    <citation type="journal article" date="2006" name="Nature">
        <title>DNA sequence of human chromosome 17 and analysis of rearrangement in the human lineage.</title>
        <authorList>
            <person name="Zody M.C."/>
            <person name="Garber M."/>
            <person name="Adams D.J."/>
            <person name="Sharpe T."/>
            <person name="Harrow J."/>
            <person name="Lupski J.R."/>
            <person name="Nicholson C."/>
            <person name="Searle S.M."/>
            <person name="Wilming L."/>
            <person name="Young S.K."/>
            <person name="Abouelleil A."/>
            <person name="Allen N.R."/>
            <person name="Bi W."/>
            <person name="Bloom T."/>
            <person name="Borowsky M.L."/>
            <person name="Bugalter B.E."/>
            <person name="Butler J."/>
            <person name="Chang J.L."/>
            <person name="Chen C.-K."/>
            <person name="Cook A."/>
            <person name="Corum B."/>
            <person name="Cuomo C.A."/>
            <person name="de Jong P.J."/>
            <person name="DeCaprio D."/>
            <person name="Dewar K."/>
            <person name="FitzGerald M."/>
            <person name="Gilbert J."/>
            <person name="Gibson R."/>
            <person name="Gnerre S."/>
            <person name="Goldstein S."/>
            <person name="Grafham D.V."/>
            <person name="Grocock R."/>
            <person name="Hafez N."/>
            <person name="Hagopian D.S."/>
            <person name="Hart E."/>
            <person name="Norman C.H."/>
            <person name="Humphray S."/>
            <person name="Jaffe D.B."/>
            <person name="Jones M."/>
            <person name="Kamal M."/>
            <person name="Khodiyar V.K."/>
            <person name="LaButti K."/>
            <person name="Laird G."/>
            <person name="Lehoczky J."/>
            <person name="Liu X."/>
            <person name="Lokyitsang T."/>
            <person name="Loveland J."/>
            <person name="Lui A."/>
            <person name="Macdonald P."/>
            <person name="Major J.E."/>
            <person name="Matthews L."/>
            <person name="Mauceli E."/>
            <person name="McCarroll S.A."/>
            <person name="Mihalev A.H."/>
            <person name="Mudge J."/>
            <person name="Nguyen C."/>
            <person name="Nicol R."/>
            <person name="O'Leary S.B."/>
            <person name="Osoegawa K."/>
            <person name="Schwartz D.C."/>
            <person name="Shaw-Smith C."/>
            <person name="Stankiewicz P."/>
            <person name="Steward C."/>
            <person name="Swarbreck D."/>
            <person name="Venkataraman V."/>
            <person name="Whittaker C.A."/>
            <person name="Yang X."/>
            <person name="Zimmer A.R."/>
            <person name="Bradley A."/>
            <person name="Hubbard T."/>
            <person name="Birren B.W."/>
            <person name="Rogers J."/>
            <person name="Lander E.S."/>
            <person name="Nusbaum C."/>
        </authorList>
    </citation>
    <scope>NUCLEOTIDE SEQUENCE [LARGE SCALE GENOMIC DNA]</scope>
</reference>
<reference key="9">
    <citation type="journal article" date="2004" name="Genome Res.">
        <title>The status, quality, and expansion of the NIH full-length cDNA project: the Mammalian Gene Collection (MGC).</title>
        <authorList>
            <consortium name="The MGC Project Team"/>
        </authorList>
    </citation>
    <scope>NUCLEOTIDE SEQUENCE [LARGE SCALE MRNA] (ISOFORMS FETAL-TAU AND TAU-D)</scope>
    <source>
        <tissue>Brain</tissue>
    </source>
</reference>
<reference key="10">
    <citation type="journal article" date="1992" name="J. Biol. Chem.">
        <title>Protein sequence and mass spectrometric analyses of tau in the Alzheimer's disease brain.</title>
        <authorList>
            <person name="Hasegawa M."/>
            <person name="Morishima-Kawashima M."/>
            <person name="Takio K."/>
            <person name="Suzuki M."/>
            <person name="Titani K."/>
            <person name="Ihara Y."/>
        </authorList>
    </citation>
    <scope>PROTEIN SEQUENCE OF 2-73; 103-381; 468-497; 508-571; 577-583; 592-607; 616-634; 639-657; 661-664; 671-700 AND 703-758</scope>
    <scope>CLEAVAGE OF INITIATOR METHIONINE</scope>
    <scope>ACETYLATION AT ALA-2</scope>
    <scope>DEAMIDATION AT ASN-484 AND ASN-596</scope>
    <source>
        <tissue>Brain</tissue>
    </source>
</reference>
<reference key="11">
    <citation type="submission" date="2008-12" db="UniProtKB">
        <authorList>
            <person name="Lubec G."/>
            <person name="Chen W.-Q."/>
            <person name="Sun Y."/>
        </authorList>
    </citation>
    <scope>PROTEIN SEQUENCE OF 25-44; 529-538; 560-571 AND 671-686</scope>
    <scope>IDENTIFICATION BY MASS SPECTROMETRY</scope>
    <source>
        <tissue>Fetal brain cortex</tissue>
    </source>
</reference>
<reference key="12">
    <citation type="submission" date="2004-01" db="EMBL/GenBank/DDBJ databases">
        <title>Molecular interactions of recombinant neural protein tau with recombinant and native PrP proteins in vitro.</title>
        <authorList>
            <person name="Han J."/>
            <person name="Zhang J."/>
            <person name="Dong X.-P."/>
        </authorList>
    </citation>
    <scope>NUCLEOTIDE SEQUENCE [MRNA] OF 466-740 (ISOFORMS TAU-A/TAU-B/TAU-C/FETAL-TAU)</scope>
</reference>
<reference key="13">
    <citation type="journal article" date="2006" name="J. Biol. Chem.">
        <title>Alzheimer disease-specific conformation of hyperphosphorylated paired helical filament-tau is polyubiquitinated through Lys-48, Lys-11, and Lys-6 ubiquitin conjugation.</title>
        <authorList>
            <person name="Cripps D."/>
            <person name="Thomas S.N."/>
            <person name="Jeng Y."/>
            <person name="Yang F."/>
            <person name="Davies P."/>
            <person name="Yang A.J."/>
        </authorList>
    </citation>
    <scope>PROTEIN SEQUENCE OF 543-551; 560-574; 576-584 AND 623-634</scope>
    <scope>PHOSPHORYLATION AT SER-531; THR-534; THR-548; SER-552; SER-554; SER-579; SER-713 AND SER-739</scope>
    <scope>UBIQUITINATION AT LYS-571; LYS-628 AND LYS-670</scope>
    <scope>IDENTIFICATION BY MASS SPECTROMETRY</scope>
</reference>
<reference key="14">
    <citation type="journal article" date="1995" name="J. Biol. Chem.">
        <title>Microtubule-associated protein/microtubule affinity-regulating kinase (p110mark). A novel protein kinase that regulates tau-microtubule interactions and dynamic instability by phosphorylation at the Alzheimer-specific site serine 262.</title>
        <authorList>
            <person name="Drewes G."/>
            <person name="Trinczek B."/>
            <person name="Illenberger S."/>
            <person name="Biernat J."/>
            <person name="Schmitt-Ulms G."/>
            <person name="Meyer H.E."/>
            <person name="Mandelkow E.-M."/>
            <person name="Mandelkow E."/>
        </authorList>
    </citation>
    <scope>PROTEIN SEQUENCE OF 577-584; 608-611; 616-628; 639-648 AND 671-686</scope>
    <scope>PHOSPHORYLATION AT SER-579; SER-610; SER-622; SER-641 AND SER-673</scope>
    <scope>MUTAGENESIS</scope>
    <scope>DOMAIN</scope>
</reference>
<reference key="15">
    <citation type="journal article" date="1989" name="Biochem. Biophys. Res. Commun.">
        <title>A distinct form of tau is selectively incorporated into Alzheimer's paired helical filaments.</title>
        <authorList>
            <person name="Mori H."/>
            <person name="Hamada Y."/>
            <person name="Kawaguchi M."/>
            <person name="Honda T."/>
            <person name="Kondo J."/>
            <person name="Ihara Y."/>
        </authorList>
    </citation>
    <scope>NUCLEOTIDE SEQUENCE [MRNA] OF 592-622 (ISOFORMS PNS-TAU/TAU-D/TAU-E/TAU-F)</scope>
    <source>
        <tissue>Brain</tissue>
    </source>
</reference>
<reference key="16">
    <citation type="journal article" date="1991" name="Science">
        <title>A68: a major subunit of paired helical filaments and derivatized forms of normal Tau.</title>
        <authorList>
            <person name="Lee V.M."/>
            <person name="Balin B.J."/>
            <person name="Otvos L. Jr."/>
            <person name="Trojanowski J.Q."/>
        </authorList>
    </citation>
    <scope>PROTEIN SEQUENCE OF 379-392 AND 568-581</scope>
    <scope>PHOSPHORYLATION AT SER-713</scope>
</reference>
<reference key="17">
    <citation type="journal article" date="1991" name="EMBO J.">
        <title>Identification of 3- and 4-repeat tau isoforms within the PHF in Alzheimer's disease.</title>
        <authorList>
            <person name="Jakes R."/>
            <person name="Novak M."/>
            <person name="Davison M."/>
            <person name="Wischik C.M."/>
        </authorList>
    </citation>
    <scope>PROTEIN SEQUENCE OF 616-712</scope>
</reference>
<reference key="18">
    <citation type="journal article" date="2004" name="Hum. Mutat.">
        <title>The role of tau (MAPT) in frontotemporal dementia and related tauopathies.</title>
        <authorList>
            <person name="Rademakers R."/>
            <person name="Cruts M."/>
            <person name="van Broeckhoven C."/>
        </authorList>
    </citation>
    <scope>IDENTIFICATION (ISOFORM TAU-G)</scope>
    <scope>VARIANT HIS-441</scope>
</reference>
<reference key="19">
    <citation type="journal article" date="1991" name="Trends Neurosci.">
        <title>Molecular characterization of microtubule-associated proteins tau and MAP2.</title>
        <authorList>
            <person name="Goedert M."/>
            <person name="Crowther R.A."/>
            <person name="Garner C.C."/>
        </authorList>
    </citation>
    <scope>REVIEW</scope>
</reference>
<reference key="20">
    <citation type="journal article" date="1997" name="J. Biol. Chem.">
        <title>The regulatory Ser262 of microtubule-associated protein tau is phosphorylated by phosphorylase kinase.</title>
        <authorList>
            <person name="Paudel H.K."/>
        </authorList>
    </citation>
    <scope>PHOSPHORYLATION AT SER-554; SER-579; SER-602; SER-622 AND SER-669</scope>
</reference>
<reference key="21">
    <citation type="journal article" date="1997" name="J. Neurochem.">
        <title>Characterization of in vitro glycation sites of tau.</title>
        <authorList>
            <person name="Nacharaju P."/>
            <person name="Ko L."/>
            <person name="Yen S.H."/>
        </authorList>
    </citation>
    <scope>GLYCATION AT LYS-87; LYS-383; LYS-467; LYS-480; LYS-491; LYS-542; LYS-551; LYS-576; LYS-597; LYS-598; LYS-664; LYS-670 AND LYS-686</scope>
    <scope>LACK OF GLYCATION AT LYS-24; LYS-44; LYS-67; LYS-381; LYS-391; LYS-392; LYS-394; LYS-465; LYS-497; LYS-507; LYS-541; LYS-557; LYS-571; LYS-574; LYS-584; LYS-591; LYS-607; LYS-611; LYS-615; LYS-628; LYS-634; LYS-638; LYS-648; LYS-657; LYS-660; LYS-687; LYS-692; LYS-700; LYS-702; LYS-712 AND LYS-755</scope>
</reference>
<reference key="22">
    <citation type="journal article" date="1998" name="Arch. Biochem. Biophys.">
        <title>Phosphorylation of tau at both Thr 231 and Ser 262 is required for maximal inhibition of its binding to microtubules.</title>
        <authorList>
            <person name="Sengupta A."/>
            <person name="Kabat J."/>
            <person name="Novak M."/>
            <person name="Wu Q."/>
            <person name="Grundke-Iqbal I."/>
            <person name="Iqbal K."/>
        </authorList>
    </citation>
    <scope>PHOSPHORYLATION</scope>
    <scope>MUTAGENESIS</scope>
</reference>
<reference key="23">
    <citation type="journal article" date="1998" name="Mol. Biol. Cell">
        <title>The endogenous and cell cycle-dependent phosphorylation of tau protein in living cells: implications for Alzheimer's disease.</title>
        <authorList>
            <person name="Illenberger S."/>
            <person name="Zheng-Fischhofer Q."/>
            <person name="Preuss U."/>
            <person name="Stamer K."/>
            <person name="Baumann K."/>
            <person name="Trinczek B."/>
            <person name="Biernat J."/>
            <person name="Godemann R."/>
            <person name="Mandelkow E.-M."/>
            <person name="Mandelkow E."/>
        </authorList>
    </citation>
    <scope>PHOSPHORYLATION AT THR-470; SER-516; SER-519; THR-529; SER-531; SER-552; SER-579; SER-713; SER-721 AND SER-739</scope>
    <scope>MUTAGENESIS</scope>
</reference>
<reference key="24">
    <citation type="journal article" date="2000" name="J. Biol. Chem.">
        <title>Interaction of tau with the neural membrane cortex is regulated by phosphorylation at sites that are modified in paired helical filaments.</title>
        <authorList>
            <person name="Maas T."/>
            <person name="Eidenmueller J."/>
            <person name="Brandt R."/>
        </authorList>
    </citation>
    <scope>SUBCELLULAR LOCATION</scope>
    <scope>PHOSPHORYLATION</scope>
</reference>
<reference key="25">
    <citation type="journal article" date="2004" name="J. Biol. Chem.">
        <title>Casein kinase 1 delta phosphorylates tau and disrupts its binding to microtubules.</title>
        <authorList>
            <person name="Li G."/>
            <person name="Yin H."/>
            <person name="Kuret J."/>
        </authorList>
    </citation>
    <scope>PHOSPHORYLATION AT SER-519; THR-522; SER-713 AND SER-721 BY CSNK1D/CK1</scope>
    <scope>INTERACTION WITH CSNK1D</scope>
</reference>
<reference key="26">
    <citation type="journal article" date="2004" name="J. Neurochem.">
        <title>Primed phosphorylation of tau at Thr231 by glycogen synthase kinase 3beta (GSK3beta) plays a critical role in regulating tau's ability to bind and stabilize microtubules.</title>
        <authorList>
            <person name="Cho J.H."/>
            <person name="Johnson G.V."/>
        </authorList>
    </citation>
    <scope>PHOSPHORYLATION AT THR-548 BY GSK3B</scope>
</reference>
<reference key="27">
    <citation type="journal article" date="2004" name="J. Neurosci.">
        <title>Phosphorylation of tau by fyn: implications for Alzheimer's disease.</title>
        <authorList>
            <person name="Lee G."/>
            <person name="Thangavel R."/>
            <person name="Sharma V.M."/>
            <person name="Litersky J.M."/>
            <person name="Bhaskar K."/>
            <person name="Fang S.M."/>
            <person name="Do L.H."/>
            <person name="Andreadis A."/>
            <person name="Van Hoesen G."/>
            <person name="Ksiezak-Reding H."/>
        </authorList>
    </citation>
    <scope>PHOSPHORYLATION AT TYR-18 BY FYN</scope>
</reference>
<reference key="28">
    <citation type="journal article" date="2005" name="J. Neurochem.">
        <title>Sequestosome 1/p62 shuttles polyubiquitinated tau for proteasomal degradation.</title>
        <authorList>
            <person name="Babu J.R."/>
            <person name="Geetha T."/>
            <person name="Wooten M.W."/>
        </authorList>
    </citation>
    <scope>INTERACTION WITH SQSTM1</scope>
    <scope>UBIQUITINATION</scope>
    <scope>PROTEASOMAL DEGRADATION</scope>
</reference>
<reference key="29">
    <citation type="journal article" date="2005" name="J. Biol. Chem.">
        <title>Dephosphorylation of tau by protein phosphatase 5: impairment in Alzheimer's disease.</title>
        <authorList>
            <person name="Liu F."/>
            <person name="Iqbal K."/>
            <person name="Grundke-Iqbal I."/>
            <person name="Rossie S."/>
            <person name="Gong C.X."/>
        </authorList>
    </citation>
    <scope>PHOSPHORYLATION AT THR-498; SER-516; SER-519; THR-522; THR-529; SER-531; THR-548; SER-552; SER-579; SER-713; SER-721 AND SER-726</scope>
    <scope>DEPHOSPHORYLATION AT THR-498; SER-516; SER-519; THR-522; THR-529; SER-531; THR-548; SER-552; SER-579; SER-713; SER-721 AND SER-726 BY PPP5C</scope>
</reference>
<reference key="30">
    <citation type="journal article" date="2006" name="J. Neurochem.">
        <title>Tau-tubulin kinase 1 (TTBK1), a neuron-specific tau kinase candidate, is involved in tau phosphorylation and aggregation.</title>
        <authorList>
            <person name="Sato S."/>
            <person name="Cerny R.L."/>
            <person name="Buescher J.L."/>
            <person name="Ikezu T."/>
        </authorList>
    </citation>
    <scope>PHOSPHORYLATION AT TYR-514; SER-515; SER-516; SER-519; SER-733; SER-739 AND THR-744</scope>
</reference>
<reference key="31">
    <citation type="journal article" date="2006" name="Mol. Cell. Biol.">
        <title>Serum- and glucocorticoid-inducible kinase 1 (SGK1) increases neurite formation through microtubule depolymerization by SGK1 and by SGK1 phosphorylation of tau.</title>
        <authorList>
            <person name="Yang Y.C."/>
            <person name="Lin C.H."/>
            <person name="Lee E.H."/>
        </authorList>
    </citation>
    <scope>PHOSPHORYLATION AT SER-214 BY SGK1</scope>
    <scope>INTERACTION WITH SGK1</scope>
</reference>
<reference key="32">
    <citation type="journal article" date="2006" name="Nat. Biotechnol.">
        <title>A probability-based approach for high-throughput protein phosphorylation analysis and site localization.</title>
        <authorList>
            <person name="Beausoleil S.A."/>
            <person name="Villen J."/>
            <person name="Gerber S.A."/>
            <person name="Rush J."/>
            <person name="Gygi S.P."/>
        </authorList>
    </citation>
    <scope>IDENTIFICATION BY MASS SPECTROMETRY [LARGE SCALE ANALYSIS]</scope>
    <source>
        <tissue>Cervix carcinoma</tissue>
    </source>
</reference>
<reference key="33">
    <citation type="journal article" date="2007" name="J. Biol. Chem.">
        <title>Novel phosphorylation sites in tau from Alzheimer brain support a role for casein kinase 1 in disease pathogenesis.</title>
        <authorList>
            <person name="Hanger D.P."/>
            <person name="Byers H.L."/>
            <person name="Wray S."/>
            <person name="Leung K.-Y."/>
            <person name="Saxton M.J."/>
            <person name="Seereeram A."/>
            <person name="Reynolds C.H."/>
            <person name="Ward M.A."/>
            <person name="Anderton B.H."/>
        </authorList>
    </citation>
    <scope>PHOSPHORYLATION BY CSNK1D/CK1</scope>
</reference>
<reference key="34">
    <citation type="journal article" date="2008" name="Biochem. Pharmacol.">
        <title>Role for DYRK family kinases on regulation of apoptosis.</title>
        <authorList>
            <person name="Yoshida K."/>
        </authorList>
    </citation>
    <scope>PHOSPHORYLATION AT THR-529 BY DYRK2</scope>
</reference>
<reference key="35">
    <citation type="journal article" date="2008" name="J. Proteome Res.">
        <title>Combining protein-based IMAC, peptide-based IMAC, and MudPIT for efficient phosphoproteomic analysis.</title>
        <authorList>
            <person name="Cantin G.T."/>
            <person name="Yi W."/>
            <person name="Lu B."/>
            <person name="Park S.K."/>
            <person name="Xu T."/>
            <person name="Lee J.-D."/>
            <person name="Yates J.R. III"/>
        </authorList>
    </citation>
    <scope>PHOSPHORYLATION [LARGE SCALE ANALYSIS] AT SER-519</scope>
    <scope>IDENTIFICATION BY MASS SPECTROMETRY [LARGE SCALE ANALYSIS]</scope>
    <source>
        <tissue>Cervix carcinoma</tissue>
    </source>
</reference>
<reference key="36">
    <citation type="journal article" date="2009" name="Anal. Chem.">
        <title>Lys-N and trypsin cover complementary parts of the phosphoproteome in a refined SCX-based approach.</title>
        <authorList>
            <person name="Gauci S."/>
            <person name="Helbig A.O."/>
            <person name="Slijper M."/>
            <person name="Krijgsveld J."/>
            <person name="Heck A.J."/>
            <person name="Mohammed S."/>
        </authorList>
    </citation>
    <scope>IDENTIFICATION BY MASS SPECTROMETRY [LARGE SCALE ANALYSIS]</scope>
</reference>
<reference key="37">
    <citation type="journal article" date="2009" name="Brain">
        <title>Reduced O-GlcNAcylation links lower brain glucose metabolism and tau pathology in Alzheimer's disease.</title>
        <authorList>
            <person name="Liu F."/>
            <person name="Shi J."/>
            <person name="Tanimukai H."/>
            <person name="Gu J."/>
            <person name="Gu J."/>
            <person name="Grundke-Iqbal I."/>
            <person name="Iqbal K."/>
            <person name="Gong C.X."/>
        </authorList>
    </citation>
    <scope>GLYCOSYLATION</scope>
    <scope>PHOSPHORYLATION AT SER-516; SER-519; THR-522; THR-529; SER-531; THR-534; SER-579; SER-713; SER-721 AND SER-739</scope>
    <scope>ASSOCIATION WITH ALZHEIMER DISEASE</scope>
</reference>
<reference key="38">
    <citation type="journal article" date="2009" name="J. Biol. Chem.">
        <title>Hyperphosphorylation and aggregation of Tau in laforin-deficient mice, an animal model for Lafora disease.</title>
        <authorList>
            <person name="Puri R."/>
            <person name="Suzuki T."/>
            <person name="Yamakawa K."/>
            <person name="Ganesh S."/>
        </authorList>
    </citation>
    <scope>INTERACTION WITH EPM2A</scope>
</reference>
<reference key="39">
    <citation type="journal article" date="2009" name="Sci. Signal.">
        <title>Quantitative phosphoproteomic analysis of T cell receptor signaling reveals system-wide modulation of protein-protein interactions.</title>
        <authorList>
            <person name="Mayya V."/>
            <person name="Lundgren D.H."/>
            <person name="Hwang S.-I."/>
            <person name="Rezaul K."/>
            <person name="Wu L."/>
            <person name="Eng J.K."/>
            <person name="Rodionov V."/>
            <person name="Han D.K."/>
        </authorList>
    </citation>
    <scope>PHOSPHORYLATION [LARGE SCALE ANALYSIS] AT SER-713; SER-717; SER-721 AND SER-726</scope>
    <scope>IDENTIFICATION BY MASS SPECTROMETRY [LARGE SCALE ANALYSIS]</scope>
    <source>
        <tissue>Leukemic T-cell</tissue>
    </source>
</reference>
<reference key="40">
    <citation type="journal article" date="2010" name="Sci. Signal.">
        <title>Quantitative phosphoproteomics reveals widespread full phosphorylation site occupancy during mitosis.</title>
        <authorList>
            <person name="Olsen J.V."/>
            <person name="Vermeulen M."/>
            <person name="Santamaria A."/>
            <person name="Kumar C."/>
            <person name="Miller M.L."/>
            <person name="Jensen L.J."/>
            <person name="Gnad F."/>
            <person name="Cox J."/>
            <person name="Jensen T.S."/>
            <person name="Nigg E.A."/>
            <person name="Brunak S."/>
            <person name="Mann M."/>
        </authorList>
    </citation>
    <scope>IDENTIFICATION BY MASS SPECTROMETRY [LARGE SCALE ANALYSIS]</scope>
    <source>
        <tissue>Cervix carcinoma</tissue>
    </source>
</reference>
<reference key="41">
    <citation type="journal article" date="2011" name="Mol. Biosyst.">
        <title>Identification of O-GlcNAc sites within peptides of the Tau protein and their impact on phosphorylation.</title>
        <authorList>
            <person name="Smet-Nocca C."/>
            <person name="Broncel M."/>
            <person name="Wieruszeski J.M."/>
            <person name="Tokarski C."/>
            <person name="Hanoulle X."/>
            <person name="Leroy A."/>
            <person name="Landrieu I."/>
            <person name="Rolando C."/>
            <person name="Lippens G."/>
            <person name="Hackenberger C.P."/>
        </authorList>
    </citation>
    <scope>GLYCOSYLATION AT SER-525; SER-555 AND SER-717</scope>
    <scope>PHOSPHORYLATION AT SER-519; SER-713 SER-717 AND SER-721</scope>
    <scope>IDENTIFICATION BY MASS SPECTROMETRY</scope>
</reference>
<reference key="42">
    <citation type="journal article" date="2012" name="J. Neurochem.">
        <title>Phosphorylation of microtubule-associated protein tau by AMPK-related kinases.</title>
        <authorList>
            <person name="Yoshida H."/>
            <person name="Goedert M."/>
        </authorList>
    </citation>
    <scope>FUNCTION</scope>
    <scope>PHOSPHORYLATION AT THR-529 AND SER-579</scope>
</reference>
<reference key="43">
    <citation type="journal article" date="2013" name="J. Proteome Res.">
        <title>Toward a comprehensive characterization of a human cancer cell phosphoproteome.</title>
        <authorList>
            <person name="Zhou H."/>
            <person name="Di Palma S."/>
            <person name="Preisinger C."/>
            <person name="Peng M."/>
            <person name="Polat A.N."/>
            <person name="Heck A.J."/>
            <person name="Mohammed S."/>
        </authorList>
    </citation>
    <scope>PHOSPHORYLATION [LARGE SCALE ANALYSIS] AT SER-519; THR-548; SER-552; SER-713 AND SER-721</scope>
    <scope>IDENTIFICATION BY MASS SPECTROMETRY [LARGE SCALE ANALYSIS]</scope>
    <source>
        <tissue>Cervix carcinoma</tissue>
        <tissue>Erythroleukemia</tissue>
    </source>
</reference>
<reference key="44">
    <citation type="journal article" date="2013" name="NeuroMolecular Med.">
        <title>Role of individual MARK isoforms in phosphorylation of tau at Ser262 in Alzheimer's disease.</title>
        <authorList>
            <person name="Gu G.J."/>
            <person name="Lund H."/>
            <person name="Wu D."/>
            <person name="Blokzijl A."/>
            <person name="Classon C."/>
            <person name="von Euler G."/>
            <person name="Landegren U."/>
            <person name="Sunnemark D."/>
            <person name="Kamali-Moghaddam M."/>
        </authorList>
    </citation>
    <scope>INTERACTION WITH MARK1; MARK2; MARK3 AND MARK4</scope>
    <scope>SUBCELLULAR LOCATION</scope>
    <scope>PHOSPHORYLATION AT SER-579</scope>
</reference>
<reference key="45">
    <citation type="journal article" date="2014" name="J. Proteomics">
        <title>An enzyme assisted RP-RPLC approach for in-depth analysis of human liver phosphoproteome.</title>
        <authorList>
            <person name="Bian Y."/>
            <person name="Song C."/>
            <person name="Cheng K."/>
            <person name="Dong M."/>
            <person name="Wang F."/>
            <person name="Huang J."/>
            <person name="Sun D."/>
            <person name="Wang L."/>
            <person name="Ye M."/>
            <person name="Zou H."/>
        </authorList>
    </citation>
    <scope>PHOSPHORYLATION [LARGE SCALE ANALYSIS] AT SER-519</scope>
    <scope>IDENTIFICATION BY MASS SPECTROMETRY [LARGE SCALE ANALYSIS]</scope>
    <source>
        <tissue>Liver</tissue>
    </source>
</reference>
<reference key="46">
    <citation type="journal article" date="2016" name="Mol. Neurobiol.">
        <title>LRRK2 Promotes Tau Accumulation, Aggregation and Release.</title>
        <authorList>
            <person name="Guerreiro P.S."/>
            <person name="Gerhardt E."/>
            <person name="Lopes da Fonseca T."/>
            <person name="Baehr M."/>
            <person name="Outeiro T.F."/>
            <person name="Eckermann K."/>
        </authorList>
    </citation>
    <scope>INTERACTION WITH LRRK2</scope>
    <scope>SUBCELLULAR LOCATION</scope>
</reference>
<reference key="47">
    <citation type="journal article" date="2020" name="Nature">
        <title>LRP1 is a master regulator of tau uptake and spread.</title>
        <authorList>
            <person name="Rauch J.N."/>
            <person name="Luna G."/>
            <person name="Guzman E."/>
            <person name="Challis C."/>
            <person name="Sibih Y.E."/>
            <person name="Leshuk C."/>
            <person name="Hernandez I."/>
            <person name="Wegmann S."/>
            <person name="Hyman B.T."/>
            <person name="Gradinaru V."/>
            <person name="Kampmann M."/>
            <person name="Kosik K.S."/>
        </authorList>
    </citation>
    <scope>INTERACTION WITH LRP1</scope>
</reference>
<reference key="48">
    <citation type="journal article" date="2001" name="J. Biol. Chem.">
        <title>1H NMR study on the binding of Pin1 Trp-Trp domain with phosphothreonine peptides.</title>
        <authorList>
            <person name="Wintjens R."/>
            <person name="Wieruszeski J.-M."/>
            <person name="Drobecq H."/>
            <person name="Rousselot-Pailley P."/>
            <person name="Buee L."/>
            <person name="Lippens G."/>
            <person name="Landrieu I."/>
        </authorList>
    </citation>
    <scope>STRUCTURE BY NMR OF 542-554 IN COMPLEX WITH PIN1</scope>
</reference>
<reference key="49">
    <citation type="journal article" date="2020" name="Cell">
        <title>A Translocation Pathway for Vesicle-Mediated Unconventional Protein Secretion.</title>
        <authorList>
            <person name="Zhang M."/>
            <person name="Liu L."/>
            <person name="Lin X."/>
            <person name="Wang Y."/>
            <person name="Li Y."/>
            <person name="Guo Q."/>
            <person name="Li S."/>
            <person name="Sun Y."/>
            <person name="Tao X."/>
            <person name="Zhang D."/>
            <person name="Lv X."/>
            <person name="Zheng L."/>
            <person name="Ge L."/>
        </authorList>
    </citation>
    <scope>SUBCELLULAR LOCATION</scope>
</reference>
<reference key="50">
    <citation type="journal article" date="2000" name="Biochim. Biophys. Acta">
        <title>Tau mutations in frontotemporal dementia FTDP-17 and their relevance for Alzheimer's disease.</title>
        <authorList>
            <person name="Goedert M."/>
            <person name="Spillantini M.G."/>
        </authorList>
    </citation>
    <scope>REVIEW ON VARIANTS</scope>
</reference>
<reference key="51">
    <citation type="journal article" date="1998" name="Ann. Neurol.">
        <title>Tau is a candidate gene for chromosome 17 frontotemporal dementia.</title>
        <authorList>
            <person name="Poorkaj P."/>
            <person name="Bird T.D."/>
            <person name="Wijsman E."/>
            <person name="Nemens E."/>
            <person name="Garruto R.M."/>
            <person name="Anderson L."/>
            <person name="Andreadis A."/>
            <person name="Wiederholt W.C."/>
            <person name="Raskind M."/>
            <person name="Schellenberg G.D."/>
        </authorList>
    </citation>
    <scope>VARIANT FTD1 MET-654</scope>
    <scope>VARIANTS ASN-285; ALA-289; HIS-441 AND PRO-447</scope>
    <scope>INVOLVEMENT IN FTD1</scope>
</reference>
<reference key="52">
    <citation type="journal article" date="1998" name="Ann. Neurol.">
        <authorList>
            <person name="Poorkaj P."/>
            <person name="Bird T.D."/>
            <person name="Wijsman E."/>
            <person name="Nemens E."/>
            <person name="Garruto R.M."/>
            <person name="Anderson L."/>
            <person name="Andreadis A."/>
            <person name="Wiederholt W.C."/>
            <person name="Raskind M."/>
            <person name="Schellenberg G.D."/>
        </authorList>
    </citation>
    <scope>ERRATUM OF PUBMED:9629852</scope>
</reference>
<reference key="53">
    <citation type="journal article" date="1998" name="Hum. Mol. Genet.">
        <title>Segregation of a missense mutation in the microtubule-associated protein tau gene with familial frontotemporal dementia and parkinsonism.</title>
        <authorList>
            <person name="Dumanchin C."/>
            <person name="Camuzat A."/>
            <person name="Campion D."/>
            <person name="Verpillat P."/>
            <person name="Hannequin D."/>
            <person name="Dubois B."/>
            <person name="Saugier-Veber P."/>
            <person name="Martin C."/>
            <person name="Penet C."/>
            <person name="Charbonnier F."/>
            <person name="Agid Y."/>
            <person name="Frebourg T."/>
            <person name="Brice A."/>
        </authorList>
    </citation>
    <scope>VARIANT FTD1 LEU-618</scope>
</reference>
<reference key="54">
    <citation type="journal article" date="1998" name="Nature">
        <title>Association of missense and 5'-splice-site mutations in tau with the inherited dementia FTDP-17.</title>
        <authorList>
            <person name="Hutton M."/>
            <person name="Lendon C.L."/>
            <person name="Rizzu P."/>
            <person name="Baker M."/>
            <person name="Froelich S."/>
            <person name="Houlden H."/>
            <person name="Pickering-Brown S."/>
            <person name="Chakraverty S."/>
            <person name="Isaacs A."/>
            <person name="Grover A."/>
            <person name="Hackett J."/>
            <person name="Adamson J."/>
            <person name="Lincoln S."/>
            <person name="Dickson D."/>
            <person name="Davies P."/>
            <person name="Petersen R.C."/>
            <person name="Stevens M."/>
            <person name="de Graaff E."/>
            <person name="Wauters E."/>
            <person name="van Baren J."/>
            <person name="Hillebrand M."/>
            <person name="Joosse M."/>
            <person name="Kwon J.M."/>
            <person name="Nowotny P."/>
            <person name="Che L.K."/>
            <person name="Norton J."/>
            <person name="Morris J.C."/>
            <person name="Reed L.A."/>
            <person name="Trojanowski J."/>
            <person name="Basun H."/>
            <person name="Lannfelt L."/>
            <person name="Neystat M."/>
            <person name="Fahn S."/>
            <person name="Dark F."/>
            <person name="Tannenberg T."/>
            <person name="Dodd P.R."/>
            <person name="Hayward N."/>
            <person name="Kwok J.B.J."/>
            <person name="Schofield P.R."/>
            <person name="Andreadis A."/>
            <person name="Snowden J."/>
            <person name="Craufurd D."/>
            <person name="Neary D."/>
            <person name="Owen F."/>
            <person name="Oostra B.A."/>
            <person name="Hardy J."/>
            <person name="Goate A."/>
            <person name="van Swieten J."/>
            <person name="Mann D."/>
            <person name="Lynch T."/>
            <person name="Heutink P."/>
        </authorList>
    </citation>
    <scope>VARIANTS FTD1 VAL-589; LEU-618 AND TRP-723</scope>
</reference>
<reference key="55">
    <citation type="journal article" date="1998" name="Proc. Natl. Acad. Sci. U.S.A.">
        <title>Pathogenic implications of mutations in the tau gene in pallido-ponto-nigral degeneration and related neurodegenerative disorders linked to chromosome 17.</title>
        <authorList>
            <person name="Clark L.N."/>
            <person name="Poorkaj P."/>
            <person name="Wszolek Z."/>
            <person name="Geschwind D.H."/>
            <person name="Nasreddine Z.S."/>
            <person name="Miller B."/>
            <person name="Li D."/>
            <person name="Payami H."/>
            <person name="Awert F."/>
            <person name="Markopoulou K."/>
            <person name="Andreadis A."/>
            <person name="D'Souza I."/>
            <person name="Lee V.M.-Y."/>
            <person name="Reed L."/>
            <person name="Trojanowski J.Q."/>
            <person name="Zhukareva V."/>
            <person name="Bird T."/>
            <person name="Schellenberg G."/>
            <person name="Wilhelmsen K.C."/>
        </authorList>
    </citation>
    <scope>VARIANTS FTD1 LYS-596 AND LEU-618</scope>
</reference>
<reference key="56">
    <citation type="journal article" date="1999" name="Acta Neuropathol.">
        <title>A mutation at codon 279 (N279K) in exon 10 of the Tau gene causes a tauopathy with dementia and supranuclear palsy.</title>
        <authorList>
            <person name="Delisle M.-B."/>
            <person name="Murrell J.R."/>
            <person name="Richardson R."/>
            <person name="Trofatter J.A."/>
            <person name="Rascol O."/>
            <person name="Soulages X."/>
            <person name="Mohr M."/>
            <person name="Calvas P."/>
            <person name="Ghetti B."/>
        </authorList>
    </citation>
    <scope>VARIANT PPND LYS-596</scope>
</reference>
<reference key="57">
    <citation type="journal article" date="1999" name="Am. J. Hum. Genet.">
        <title>High prevalence of mutations in the microtubule-associated protein tau in a population study of frontotemporal dementia in the Netherlands.</title>
        <authorList>
            <person name="Rizzu P."/>
            <person name="Van Swieten J.C."/>
            <person name="Joosse M."/>
            <person name="Hasegawa M."/>
            <person name="Stevens M."/>
            <person name="Tibben A."/>
            <person name="Niermeijer M.F."/>
            <person name="Hillebrand M."/>
            <person name="Ravid R."/>
            <person name="Oostra B.A."/>
            <person name="Goedert M."/>
            <person name="van Duijn C.M."/>
            <person name="Heutink P."/>
        </authorList>
    </citation>
    <scope>VARIANTS FTD1 VAL-589; LYS-597 DEL; LEU-618 AND TRP-723</scope>
</reference>
<reference key="58">
    <citation type="journal article" date="1999" name="Ann. Neurol.">
        <title>FTDP-17: an early-onset phenotype with parkinsonism and epileptic seizures caused by a novel mutation.</title>
        <authorList>
            <person name="Sperfeld A.D."/>
            <person name="Collatz M.B."/>
            <person name="Baier H."/>
            <person name="Palmbach M."/>
            <person name="Storch A."/>
            <person name="Schwarz J."/>
            <person name="Tatsch K."/>
            <person name="Reske S."/>
            <person name="Joosse M."/>
            <person name="Heutink P."/>
            <person name="Ludolph A.C."/>
        </authorList>
    </citation>
    <scope>VARIANT FTD1 SER-618</scope>
</reference>
<reference key="59">
    <citation type="journal article" date="1999" name="FEBS Lett.">
        <title>Accelerated filament formation from tau protein with specific FTDP-17 missense mutations.</title>
        <authorList>
            <person name="Nacharaju P."/>
            <person name="Lewis J."/>
            <person name="Easson C."/>
            <person name="Yen S."/>
            <person name="Hackett J."/>
            <person name="Hutton M."/>
            <person name="Yen S.H."/>
        </authorList>
    </citation>
    <scope>VARIANTS FTD1 LEU-618; MET-654 AND TRP-723</scope>
</reference>
<reference key="60">
    <citation type="journal article" date="1999" name="J. Neuropathol. Exp. Neurol.">
        <title>Frontotemporal dementia and corticobasal degeneration in a family with a P301S mutation in tau.</title>
        <authorList>
            <person name="Bugiani O."/>
            <person name="Murrell J.R."/>
            <person name="Giaccone G."/>
            <person name="Hasegawa M."/>
            <person name="Ghigo G."/>
            <person name="Tabaton M."/>
            <person name="Morbin M."/>
            <person name="Primavera A."/>
            <person name="Carella F."/>
            <person name="Solaro C."/>
            <person name="Grisoli M."/>
            <person name="Savoiardo M."/>
            <person name="Spillantini M.G."/>
            <person name="Tagliavini F."/>
            <person name="Goedert M."/>
            <person name="Ghetti B."/>
        </authorList>
    </citation>
    <scope>VARIANT FTD1/CBD SER-618</scope>
</reference>
<reference key="61">
    <citation type="journal article" date="1999" name="J. Neuropathol. Exp. Neurol.">
        <title>Tau gene mutation G389R causes a tauopathy with abundant pick body-like inclusions and axonal deposits.</title>
        <authorList>
            <person name="Murrell J.R."/>
            <person name="Spillantini M.G."/>
            <person name="Zolo P."/>
            <person name="Guazzelli M."/>
            <person name="Smith M.J."/>
            <person name="Hasegawa M."/>
            <person name="Redi F."/>
            <person name="Crowther R.A."/>
            <person name="Pietrini P."/>
            <person name="Ghetti B."/>
            <person name="Goedert M."/>
        </authorList>
    </citation>
    <scope>VARIANT PIDB ARG-706</scope>
</reference>
<reference key="62">
    <citation type="journal article" date="1999" name="Neurology">
        <title>A mutation in the microtubule-associated protein tau in pallido-nigro-luysian degeneration.</title>
        <authorList>
            <person name="Yasuda M."/>
            <person name="Kawamata T."/>
            <person name="Komure O."/>
            <person name="Kuno S."/>
            <person name="D'Souza I."/>
            <person name="Poorkaj P."/>
            <person name="Kawai J."/>
            <person name="Tanimukai S."/>
            <person name="Yamamoto Y."/>
            <person name="Hasegawa H."/>
            <person name="Sasahara M."/>
            <person name="Hazama F."/>
            <person name="Schellenberg G.D."/>
            <person name="Tanaka C."/>
        </authorList>
    </citation>
    <scope>VARIANT FTD1 LYS-596</scope>
</reference>
<reference key="63">
    <citation type="journal article" date="1999" name="Neurology">
        <title>Mutational analysis of the tau gene in progressive supranuclear palsy.</title>
        <authorList>
            <person name="Higgins J.J."/>
            <person name="Adler R.L."/>
            <person name="Loveless J.M."/>
        </authorList>
    </citation>
    <scope>VARIANTS PSNP1 ASN-285 AND ALA-289</scope>
</reference>
<reference key="64">
    <citation type="journal article" date="1999" name="NeuroReport">
        <title>A distinct familial presenile dementia with a novel missense mutation in the tau gene.</title>
        <authorList>
            <person name="Iijima M."/>
            <person name="Tabira T."/>
            <person name="Poorkaj P."/>
            <person name="Schellenberg G.D."/>
            <person name="Trojanowski J.Q."/>
            <person name="Lee V.M.-Y."/>
            <person name="Schmidt M.L."/>
            <person name="Takahashi K."/>
            <person name="Nabika T."/>
            <person name="Matsumoto T."/>
            <person name="Yamashita Y."/>
            <person name="Yoshioka S."/>
            <person name="Ishino H."/>
        </authorList>
    </citation>
    <scope>VARIANT FTD1 ASN-622</scope>
</reference>
<reference key="65">
    <citation type="journal article" date="2000" name="Ann. Neurol.">
        <title>Frontotemporal dementia with novel tau pathology and a Glu342Val tau mutation.</title>
        <authorList>
            <person name="Lippa C.F."/>
            <person name="Zhukareva V."/>
            <person name="Kawarai T."/>
            <person name="Uryu K."/>
            <person name="Shafiq M."/>
            <person name="Nee L.E."/>
            <person name="Grafman J."/>
            <person name="Liang Y."/>
            <person name="St George-Hyslop P.H."/>
            <person name="Trojanowski J.Q."/>
            <person name="Lee V.M.-Y."/>
        </authorList>
    </citation>
    <scope>VARIANT FTD1 VAL-659</scope>
</reference>
<reference key="66">
    <citation type="journal article" date="2000" name="Ann. Neurol.">
        <title>Pick's disease is associated with mutations in the tau gene.</title>
        <authorList>
            <person name="Pickering-Brown S."/>
            <person name="Baker M."/>
            <person name="Yen S.-H."/>
            <person name="Liu W.-K."/>
            <person name="Hasegawa M."/>
            <person name="Cairns N."/>
            <person name="Lantos P.L."/>
            <person name="Rossor M."/>
            <person name="Iwatsubo T."/>
            <person name="Davies Y."/>
            <person name="Allsop D."/>
            <person name="Furlong R."/>
            <person name="Owen F."/>
            <person name="Hardy J."/>
            <person name="Mann D."/>
            <person name="Hutton M."/>
        </authorList>
    </citation>
    <scope>VARIANTS PIDB THR-574 AND ARG-706</scope>
    <scope>CHARACTERIZATION OF VARIANTS PIDB THR-574 AND ARG-706</scope>
</reference>
<reference key="67">
    <citation type="journal article" date="2000" name="J. Neuropathol. Exp. Neurol.">
        <title>Tau gene mutation K257T causes a tauopathy similar to Pick's disease.</title>
        <authorList>
            <person name="Rizzini C."/>
            <person name="Goedert M."/>
            <person name="Hodges J.R."/>
            <person name="Smith M.J."/>
            <person name="Jakes R."/>
            <person name="Hills R."/>
            <person name="Xuereb J.H."/>
            <person name="Crowther R.A."/>
            <person name="Spillantini M.G."/>
        </authorList>
    </citation>
    <scope>VARIANT PIDB THR-574</scope>
</reference>
<reference key="68">
    <citation type="journal article" date="2000" name="Neurology">
        <title>Two brothers with frontotemporal dementia and parkinsonism with an N279K mutation of the tau gene.</title>
        <authorList>
            <person name="Arima K."/>
            <person name="Kowalska A."/>
            <person name="Hasegawa M."/>
            <person name="Mukoyama M."/>
            <person name="Watanabe R."/>
            <person name="Kawai M."/>
            <person name="Takahashi K."/>
            <person name="Iwatsubo T."/>
            <person name="Tabira T."/>
            <person name="Sunohara N."/>
        </authorList>
    </citation>
    <scope>VARIANT FTD1 LYS-596</scope>
</reference>
<reference key="69">
    <citation type="journal article" date="2000" name="Neurology">
        <title>A Japanese patient with frontotemporal dementia and parkinsonism by a tau P301S mutation.</title>
        <authorList>
            <person name="Yasuda M."/>
            <person name="Yokoyama K."/>
            <person name="Nakayasu T."/>
            <person name="Nishimura Y."/>
            <person name="Matsui M."/>
            <person name="Yokoyama T."/>
            <person name="Miyoshi K."/>
            <person name="Tanaka C."/>
        </authorList>
    </citation>
    <scope>VARIANT FTD1 SER-618</scope>
</reference>
<reference key="70">
    <citation type="journal article" date="2001" name="Acta Neuropathol.">
        <title>Familial frontotemporal dementia and parkinsonism with a novel N296H mutation in exon 10 of the tau gene and a widespread tau accumulation in the glial cells.</title>
        <authorList>
            <person name="Iseki E."/>
            <person name="Matsumura T."/>
            <person name="Marui W."/>
            <person name="Hino H."/>
            <person name="Odawara T."/>
            <person name="Sugiyama N."/>
            <person name="Suzuki K."/>
            <person name="Sawada H."/>
            <person name="Arai T."/>
            <person name="Kosaka K."/>
        </authorList>
    </citation>
    <scope>VARIANT FTD1 HIS-613</scope>
</reference>
<reference key="71">
    <citation type="journal article" date="2001" name="Ann. Neurol.">
        <title>Familial atypical progressive supranuclear palsy associated with homozygosity for the delN296 mutation in the tau gene.</title>
        <authorList>
            <person name="Pastor P."/>
            <person name="Pastor E."/>
            <person name="Carnero C."/>
            <person name="Vela R."/>
            <person name="Garcia T."/>
            <person name="Amer G."/>
            <person name="Tolosa E."/>
            <person name="Oliva R."/>
        </authorList>
    </citation>
    <scope>VARIANT PSNP1 ASN-613 DEL</scope>
</reference>
<reference key="72">
    <citation type="journal article" date="2001" name="Ann. Neurol.">
        <title>Pick's disease associated with the novel Tau gene mutation K369I.</title>
        <authorList>
            <person name="Neumann M."/>
            <person name="Schulz-Schaeffer W."/>
            <person name="Crowther R.A."/>
            <person name="Smith M.J."/>
            <person name="Spillantini M.G."/>
            <person name="Goedert M."/>
            <person name="Kretzschmar H.A."/>
        </authorList>
    </citation>
    <scope>VARIANT PIDB ILE-686</scope>
    <scope>CHARACTERIZATION OF VARIANT PIDB ILE-686</scope>
</reference>
<reference key="73">
    <citation type="journal article" date="2001" name="FEBS Lett.">
        <title>Effects of FTDP-17 mutations on the in vitro phosphorylation of tau by glycogen synthase kinase 3beta identified by mass spectrometry demonstrate certain mutations exert long-range conformational changes.</title>
        <authorList>
            <person name="Connell J.W."/>
            <person name="Gibb G.M."/>
            <person name="Betts J.C."/>
            <person name="Blackstock W.P."/>
            <person name="Gallo J.-M."/>
            <person name="Lovestone S."/>
            <person name="Hutton M."/>
            <person name="Anderton B.H."/>
        </authorList>
    </citation>
    <scope>CHARACTERIZATION OF VARIANT FTD1 TRP-723</scope>
</reference>
<reference key="74">
    <citation type="journal article" date="2002" name="Neurology">
        <title>Clinical and genetic studies of families with the tau N279K mutation (FTDP-17).</title>
        <authorList>
            <person name="Tsuboi Y."/>
            <person name="Baker M."/>
            <person name="Hutton M.L."/>
            <person name="Uitti R.J."/>
            <person name="Rascol O."/>
            <person name="Delisle M.-B."/>
            <person name="Soulages X."/>
            <person name="Murrell J.R."/>
            <person name="Ghetti B."/>
            <person name="Yasuda M."/>
            <person name="Komure O."/>
            <person name="Kuno S."/>
            <person name="Arima K."/>
            <person name="Sunohara N."/>
            <person name="Kobayashi T."/>
            <person name="Mizuno Y."/>
            <person name="Wszolek Z.K."/>
        </authorList>
    </citation>
    <scope>VARIANT FTD1 LYS-596</scope>
</reference>
<reference key="75">
    <citation type="journal article" date="2002" name="Ann. Neurol.">
        <title>A novel tau mutation, S320F, causes a tauopathy with inclusions similar to those in Pick's disease.</title>
        <authorList>
            <person name="Rosso S.M."/>
            <person name="Van Herpen E."/>
            <person name="Deelen W."/>
            <person name="Kamphorst W."/>
            <person name="Severijnen L.-A."/>
            <person name="Willemsen R."/>
            <person name="Ravid R."/>
            <person name="Niermeijer M.F."/>
            <person name="Dooijes D."/>
            <person name="Smith M.J."/>
            <person name="Goedert M."/>
            <person name="Heutink P."/>
            <person name="Van Swieten J.C."/>
        </authorList>
    </citation>
    <scope>VARIANT PIDB PHE-637</scope>
    <scope>CHARACTERIZATION OF VARIANT PIDB PHE-637</scope>
</reference>
<reference key="76">
    <citation type="journal article" date="2002" name="Ann. Neurol.">
        <title>Late-onset frontotemporal dementia with a novel exon 1 (Arg5His) tau gene mutation.</title>
        <authorList>
            <person name="Hayashi S."/>
            <person name="Toyoshima Y."/>
            <person name="Hasegawa M."/>
            <person name="Umeda Y."/>
            <person name="Wakabayashi K."/>
            <person name="Tokiguchi S."/>
            <person name="Iwatsubo T."/>
            <person name="Takahashi H."/>
        </authorList>
    </citation>
    <scope>VARIANT FTD1 HIS-5</scope>
    <scope>CHARACTERIZATION OF VARIANT FTD1 HIS-5</scope>
</reference>
<reference key="77">
    <citation type="journal article" date="2002" name="Ann. Neurol.">
        <title>An R5L tau mutation in a subject with a progressive supranuclear palsy phenotype.</title>
        <authorList>
            <person name="Poorkaj P."/>
            <person name="Muma N.A."/>
            <person name="Zhukareva V."/>
            <person name="Cochran E.J."/>
            <person name="Shannon K.M."/>
            <person name="Hurtig H."/>
            <person name="Koller W.C."/>
            <person name="Bird T.D."/>
            <person name="Trojanowski J.Q."/>
            <person name="Lee V.M.-Y."/>
            <person name="Schellenberg G.D."/>
        </authorList>
    </citation>
    <scope>VARIANT PSNP1 LEU-5</scope>
    <scope>CHARACTERIZATION OF VARIANT PSNP1 LEU-5</scope>
</reference>
<reference key="78">
    <citation type="journal article" date="2002" name="J. Neurochem.">
        <title>Functional effects of tau gene mutations deltaN296 and N296H.</title>
        <authorList>
            <person name="Yoshida H."/>
            <person name="Crowther R.A."/>
            <person name="Goedert M."/>
        </authorList>
    </citation>
    <scope>CHARACTERIZATION OF VARIANTS FTD1 ASN-613 DEL AND HIS-613</scope>
</reference>
<reference key="79">
    <citation type="journal article" date="2002" name="Neurology">
        <title>Early-onset, rapidly progressive familial tauopathy with R406W mutation.</title>
        <authorList>
            <person name="Saito Y."/>
            <person name="Geyer A."/>
            <person name="Sasaki R."/>
            <person name="Kuzuhara S."/>
            <person name="Nanba E."/>
            <person name="Miyasaka T."/>
            <person name="Suzuki K."/>
            <person name="Murayama S."/>
        </authorList>
    </citation>
    <scope>VARIANT FTD1 TRP-723</scope>
</reference>
<reference key="80">
    <citation type="journal article" date="2003" name="Ann. Neurol.">
        <title>A novel L266V mutation of the tau gene causes frontotemporal dementia with a unique tau pathology.</title>
        <authorList>
            <person name="Kobayashi T."/>
            <person name="Ota S."/>
            <person name="Tanaka K."/>
            <person name="Ito Y."/>
            <person name="Hasegawa M."/>
            <person name="Umeda Y."/>
            <person name="Motoi Y."/>
            <person name="Takanashi M."/>
            <person name="Yasuhara M."/>
            <person name="Anno M."/>
            <person name="Mizuno Y."/>
            <person name="Mori H."/>
        </authorList>
    </citation>
    <scope>VARIANT FTD1 VAL-583</scope>
    <scope>CHARACTERIZATION OF VARIANT FTD1 VAL-583</scope>
</reference>
<reference key="81">
    <citation type="journal article" date="2003" name="Ann. Neurol.">
        <title>An English kindred with a novel recessive tauopathy and respiratory failure.</title>
        <authorList>
            <person name="Nicholl D.J."/>
            <person name="Greenstone M.A."/>
            <person name="Clarke C.E."/>
            <person name="Rizzu P."/>
            <person name="Crooks D."/>
            <person name="Crowe A."/>
            <person name="Trojanowski J.Q."/>
            <person name="Lee V.M.-Y."/>
            <person name="Heutink P."/>
        </authorList>
    </citation>
    <scope>VARIANT FATAL RESPIRATORY HYPOVENTILATION LEU-669</scope>
    <scope>CHARACTERIZATION OF VARIANT FATAL RESPIRATORY HYPOVENTILATION LEU-669</scope>
</reference>
<reference key="82">
    <citation type="journal article" date="2003" name="Hum. Mutat.">
        <title>Tau (MAPT) mutation arg406trp presenting clinically with Alzheimer disease does not share a common founder in western Europe.</title>
        <authorList>
            <person name="Rademakers R."/>
            <person name="Dermaut B."/>
            <person name="Peeters K."/>
            <person name="Cruts M."/>
            <person name="Heutink P."/>
            <person name="Goate A."/>
            <person name="Van Broeckhoven C."/>
        </authorList>
    </citation>
    <scope>VARIANT FTD1/ALZHEIMER DISEASE TRP-723</scope>
    <scope>INVOLVEMENT IN ALZHEIMER DISEASE</scope>
</reference>
<reference key="83">
    <citation type="journal article" date="2004" name="Ann. Neurol.">
        <title>Progressive supranuclear palsy and Parkinson's disease in a family with a new mutation in the tau gene.</title>
        <authorList>
            <person name="Rossi G."/>
            <person name="Gasparoli E."/>
            <person name="Pasquali C."/>
            <person name="Di Fede G."/>
            <person name="Testa D."/>
            <person name="Albanese A."/>
            <person name="Bracco F."/>
            <person name="Tagliavini F."/>
        </authorList>
    </citation>
    <scope>VARIANT ATYPICAL PSNP1 ASN-613 DEL</scope>
</reference>
<reference key="84">
    <citation type="journal article" date="2004" name="Ann. Neurol.">
        <title>Tau gene delN296 mutation, Parkinson's disease, and atypical supranuclear palsy.</title>
        <authorList>
            <person name="Oliva R."/>
            <person name="Pastor P."/>
        </authorList>
    </citation>
    <scope>VARIANT PSNP1/ATYPICAL PSNP1 ASN-613 DEL</scope>
</reference>
<reference key="85">
    <citation type="journal article" date="2005" name="Ann. Neurol.">
        <title>Phenotypic heterogeneity within a new family with the MAPT P301S mutation.</title>
        <authorList>
            <person name="Yasuda M."/>
            <person name="Nakamura Y."/>
            <person name="Kawamata T."/>
            <person name="Kaneyuki H."/>
            <person name="Maeda K."/>
            <person name="Komure O."/>
        </authorList>
    </citation>
    <scope>VARIANT FTD1 SER-618</scope>
</reference>
<reference key="86">
    <citation type="journal article" date="2005" name="Arch. Neurol.">
        <title>A new mutation of the tau gene, G303V, in early-onset familial progressive supranuclear palsy.</title>
        <authorList>
            <person name="Ros R."/>
            <person name="Thobois S."/>
            <person name="Streichenberger N."/>
            <person name="Kopp N."/>
            <person name="Sanchez M.P."/>
            <person name="Perez M."/>
            <person name="Hoenicka J."/>
            <person name="Avila J."/>
            <person name="Honnorat J."/>
            <person name="de Yebenes J.G."/>
        </authorList>
    </citation>
    <scope>VARIANT PSNP1 VAL-620</scope>
</reference>
<reference key="87">
    <citation type="journal article" date="2005" name="Neurology">
        <title>A novel mutation (K317M) in the MAPT gene causes FTDP and motor neuron disease.</title>
        <authorList>
            <person name="Zarranz J.J."/>
            <person name="Ferrer I."/>
            <person name="Lezcano E."/>
            <person name="Forcadas M.I."/>
            <person name="Eizaguirre B."/>
            <person name="Atares B."/>
            <person name="Puig B."/>
            <person name="Gomez-Esteban J.C."/>
            <person name="Fernandez-Maiztegui C."/>
            <person name="Rouco I."/>
            <person name="Perez-Concha T."/>
            <person name="Fernandez M."/>
            <person name="Rodriguez O."/>
            <person name="Rodriguez-Martinez A.B."/>
            <person name="de Pancorbo M.M."/>
            <person name="Pastor P."/>
            <person name="Perez-Tur J."/>
        </authorList>
    </citation>
    <scope>VARIANT FTD1 MET-634</scope>
</reference>
<reference key="88">
    <citation type="journal article" date="2010" name="Hum. Mutat.">
        <title>A thorough assessment of benign genetic variability in GRN and MAPT.</title>
        <authorList>
            <person name="Guerreiro R.J."/>
            <person name="Washecka N."/>
            <person name="Hardy J."/>
            <person name="Singleton A."/>
        </authorList>
    </citation>
    <scope>VARIANTS MET-17; ALA-30 AND ILE-617</scope>
</reference>
<reference key="89">
    <citation type="journal article" date="2015" name="Gene">
        <title>Homozygous MAPT R406W mutation causing FTDP phenotype: A unique instance of a unique mutation.</title>
        <authorList>
            <person name="Behnam M."/>
            <person name="Ghorbani F."/>
            <person name="Shin J.H."/>
            <person name="Kim D.S."/>
            <person name="Jang H."/>
            <person name="Nouri N."/>
            <person name="Sedghi M."/>
            <person name="Salehi M."/>
            <person name="Ansari B."/>
            <person name="Basiri K."/>
        </authorList>
    </citation>
    <scope>VARIANT FTD1/ALZHEIMER DISEASE TRP-723</scope>
</reference>
<reference key="90">
    <citation type="journal article" date="2020" name="Neurobiol. Dis.">
        <title>Fibrillation and molecular characteristics are coherent with clinical and pathological features of 4-repeat tauopathy caused by MAPT variant G273R.</title>
        <authorList>
            <person name="Sandberg A."/>
            <person name="Ling H."/>
            <person name="Gearing M."/>
            <person name="Dombroski B."/>
            <person name="Cantwell L."/>
            <person name="R'Bibo L."/>
            <person name="Levey A."/>
            <person name="Schellenberg G.D."/>
            <person name="Hardy J."/>
            <person name="Wood N."/>
            <person name="Fernius J."/>
            <person name="Nystroem S."/>
            <person name="Svensson S."/>
            <person name="Thor S."/>
            <person name="Hammarstroem P."/>
            <person name="Revesz T."/>
            <person name="Mok K.Y."/>
        </authorList>
    </citation>
    <scope>VARIANT FTD1 ARG-590</scope>
    <scope>CHARACTERIZATION OF VARIANT FTD1 ARG-590</scope>
    <scope>FUNCTION</scope>
</reference>
<name>TAU_HUMAN</name>
<feature type="initiator methionine" description="Removed" evidence="40">
    <location>
        <position position="1"/>
    </location>
</feature>
<feature type="chain" id="PRO_0000072739" description="Microtubule-associated protein tau">
    <location>
        <begin position="2"/>
        <end position="758"/>
    </location>
</feature>
<feature type="repeat" description="Tau/MAP 1" evidence="4 81">
    <location>
        <begin position="561"/>
        <end position="591"/>
    </location>
</feature>
<feature type="repeat" description="Tau/MAP 2" evidence="4 81">
    <location>
        <begin position="592"/>
        <end position="622"/>
    </location>
</feature>
<feature type="repeat" description="Tau/MAP 3" evidence="4 81">
    <location>
        <begin position="623"/>
        <end position="653"/>
    </location>
</feature>
<feature type="repeat" description="Tau/MAP 4" evidence="4 81">
    <location>
        <begin position="654"/>
        <end position="685"/>
    </location>
</feature>
<feature type="region of interest" description="Disordered" evidence="5">
    <location>
        <begin position="1"/>
        <end position="573"/>
    </location>
</feature>
<feature type="region of interest" description="Microtubule-binding domain" evidence="63">
    <location>
        <begin position="561"/>
        <end position="685"/>
    </location>
</feature>
<feature type="region of interest" description="Disordered" evidence="5">
    <location>
        <begin position="715"/>
        <end position="734"/>
    </location>
</feature>
<feature type="compositionally biased region" description="Basic and acidic residues" evidence="5">
    <location>
        <begin position="1"/>
        <end position="26"/>
    </location>
</feature>
<feature type="compositionally biased region" description="Polar residues" evidence="5">
    <location>
        <begin position="61"/>
        <end position="71"/>
    </location>
</feature>
<feature type="compositionally biased region" description="Basic and acidic residues" evidence="5">
    <location>
        <begin position="179"/>
        <end position="189"/>
    </location>
</feature>
<feature type="compositionally biased region" description="Basic and acidic residues" evidence="5">
    <location>
        <begin position="207"/>
        <end position="216"/>
    </location>
</feature>
<feature type="compositionally biased region" description="Acidic residues" evidence="5">
    <location>
        <begin position="217"/>
        <end position="228"/>
    </location>
</feature>
<feature type="compositionally biased region" description="Basic and acidic residues" evidence="5">
    <location>
        <begin position="314"/>
        <end position="323"/>
    </location>
</feature>
<feature type="compositionally biased region" description="Low complexity" evidence="5">
    <location>
        <begin position="324"/>
        <end position="340"/>
    </location>
</feature>
<feature type="compositionally biased region" description="Basic and acidic residues" evidence="5">
    <location>
        <begin position="344"/>
        <end position="356"/>
    </location>
</feature>
<feature type="compositionally biased region" description="Basic and acidic residues" evidence="5">
    <location>
        <begin position="381"/>
        <end position="393"/>
    </location>
</feature>
<feature type="compositionally biased region" description="Low complexity" evidence="5">
    <location>
        <begin position="442"/>
        <end position="453"/>
    </location>
</feature>
<feature type="compositionally biased region" description="Basic and acidic residues" evidence="5">
    <location>
        <begin position="455"/>
        <end position="466"/>
    </location>
</feature>
<feature type="compositionally biased region" description="Pro residues" evidence="5">
    <location>
        <begin position="491"/>
        <end position="503"/>
    </location>
</feature>
<feature type="compositionally biased region" description="Low complexity" evidence="5">
    <location>
        <begin position="504"/>
        <end position="531"/>
    </location>
</feature>
<feature type="compositionally biased region" description="Polar residues" evidence="5">
    <location>
        <begin position="718"/>
        <end position="733"/>
    </location>
</feature>
<feature type="site" description="Not glycated" evidence="65">
    <location>
        <position position="24"/>
    </location>
</feature>
<feature type="site" description="Not glycated" evidence="65">
    <location>
        <position position="44"/>
    </location>
</feature>
<feature type="site" description="Not glycated" evidence="65">
    <location>
        <position position="67"/>
    </location>
</feature>
<feature type="site" description="Not glycated" evidence="65">
    <location>
        <position position="381"/>
    </location>
</feature>
<feature type="site" description="Not glycated" evidence="65">
    <location>
        <position position="391"/>
    </location>
</feature>
<feature type="site" description="Not glycated" evidence="65">
    <location>
        <position position="392"/>
    </location>
</feature>
<feature type="site" description="Not glycated" evidence="65">
    <location>
        <position position="394"/>
    </location>
</feature>
<feature type="site" description="Not glycated" evidence="65">
    <location>
        <position position="465"/>
    </location>
</feature>
<feature type="site" description="Not glycated" evidence="65">
    <location>
        <position position="497"/>
    </location>
</feature>
<feature type="site" description="Not glycated" evidence="65">
    <location>
        <position position="507"/>
    </location>
</feature>
<feature type="site" description="Not glycated" evidence="65">
    <location>
        <position position="541"/>
    </location>
</feature>
<feature type="site" description="Not glycated" evidence="65">
    <location>
        <position position="557"/>
    </location>
</feature>
<feature type="site" description="Not glycated" evidence="65">
    <location>
        <position position="571"/>
    </location>
</feature>
<feature type="site" description="Not glycated" evidence="65">
    <location>
        <position position="574"/>
    </location>
</feature>
<feature type="site" description="Not glycated" evidence="65">
    <location>
        <position position="584"/>
    </location>
</feature>
<feature type="site" description="Not glycated" evidence="65">
    <location>
        <position position="591"/>
    </location>
</feature>
<feature type="site" description="Not glycated" evidence="65">
    <location>
        <position position="607"/>
    </location>
</feature>
<feature type="site" description="Not glycated" evidence="65">
    <location>
        <position position="611"/>
    </location>
</feature>
<feature type="site" description="Not glycated" evidence="65">
    <location>
        <position position="615"/>
    </location>
</feature>
<feature type="site" description="Not glycated" evidence="65">
    <location>
        <position position="628"/>
    </location>
</feature>
<feature type="site" description="Not glycated" evidence="65">
    <location>
        <position position="634"/>
    </location>
</feature>
<feature type="site" description="Not glycated" evidence="65">
    <location>
        <position position="638"/>
    </location>
</feature>
<feature type="site" description="Not glycated" evidence="65">
    <location>
        <position position="648"/>
    </location>
</feature>
<feature type="site" description="Not glycated" evidence="65">
    <location>
        <position position="657"/>
    </location>
</feature>
<feature type="site" description="Not glycated" evidence="65">
    <location>
        <position position="660"/>
    </location>
</feature>
<feature type="site" description="Not glycated" evidence="65">
    <location>
        <position position="687"/>
    </location>
</feature>
<feature type="site" description="Not glycated" evidence="65">
    <location>
        <position position="692"/>
    </location>
</feature>
<feature type="site" description="Not glycated" evidence="65">
    <location>
        <position position="700"/>
    </location>
</feature>
<feature type="site" description="Not glycated" evidence="65">
    <location>
        <position position="702"/>
    </location>
</feature>
<feature type="site" description="Not glycated" evidence="65">
    <location>
        <position position="712"/>
    </location>
</feature>
<feature type="site" description="Not glycated" evidence="65">
    <location>
        <position position="755"/>
    </location>
</feature>
<feature type="modified residue" description="N-acetylalanine" evidence="40">
    <location>
        <position position="2"/>
    </location>
</feature>
<feature type="modified residue" description="Phosphotyrosine; by FYN" evidence="39">
    <location>
        <position position="18"/>
    </location>
</feature>
<feature type="modified residue" description="Phosphotyrosine" evidence="2">
    <location>
        <position position="29"/>
    </location>
</feature>
<feature type="modified residue" description="Phosphoserine" evidence="3">
    <location>
        <position position="46"/>
    </location>
</feature>
<feature type="modified residue" description="Phosphoserine" evidence="3">
    <location>
        <position position="61"/>
    </location>
</feature>
<feature type="modified residue" description="Phosphothreonine" evidence="2">
    <location>
        <position position="69"/>
    </location>
</feature>
<feature type="modified residue" description="Phosphothreonine" evidence="3">
    <location>
        <position position="71"/>
    </location>
</feature>
<feature type="modified residue" description="Phosphothreonine" evidence="2">
    <location>
        <position position="111"/>
    </location>
</feature>
<feature type="modified residue" description="Phosphoserine; by SGK1" evidence="49">
    <location>
        <position position="214"/>
    </location>
</feature>
<feature type="modified residue" description="Phosphothreonine; by PDPK1" evidence="66">
    <location>
        <position position="470"/>
    </location>
</feature>
<feature type="modified residue" description="Omega-N-methylarginine" evidence="2">
    <location>
        <position position="472"/>
    </location>
</feature>
<feature type="modified residue" description="N6,N6-dimethyllysine; alternate" evidence="2">
    <location>
        <position position="480"/>
    </location>
</feature>
<feature type="modified residue" description="N6-acetyllysine; alternate" evidence="2">
    <location>
        <position position="480"/>
    </location>
</feature>
<feature type="modified residue" description="Deamidated asparagine; in tau and PHF-tau; partial" evidence="40">
    <location>
        <position position="484"/>
    </location>
</feature>
<feature type="modified residue" description="Phosphothreonine" evidence="2">
    <location>
        <position position="486"/>
    </location>
</feature>
<feature type="modified residue" description="Phosphothreonine" evidence="2">
    <location>
        <position position="492"/>
    </location>
</feature>
<feature type="modified residue" description="Phosphothreonine; by PDPK1" evidence="42">
    <location>
        <position position="498"/>
    </location>
</feature>
<feature type="modified residue" description="Phosphoserine" evidence="2">
    <location>
        <position position="502"/>
    </location>
</feature>
<feature type="modified residue" description="Phosphoserine" evidence="2">
    <location>
        <position position="508"/>
    </location>
</feature>
<feature type="modified residue" description="Phosphoserine" evidence="2">
    <location>
        <position position="512"/>
    </location>
</feature>
<feature type="modified residue" description="Phosphotyrosine; by TTBK1" evidence="48">
    <location>
        <position position="514"/>
    </location>
</feature>
<feature type="modified residue" description="Phosphoserine; by PDPK1 and TTBK1" evidence="48">
    <location>
        <position position="515"/>
    </location>
</feature>
<feature type="modified residue" description="Phosphoserine; by PDPK1 and TTBK1" evidence="42 48 52 66">
    <location>
        <position position="516"/>
    </location>
</feature>
<feature type="modified residue" description="Phosphoserine; by CK1, PDPK1 and TTBK1" evidence="36 42 48 52 55 66 83 85 86">
    <location>
        <position position="519"/>
    </location>
</feature>
<feature type="modified residue" description="Phosphothreonine; by CK1 and PDPK1" evidence="36 42 52">
    <location>
        <position position="522"/>
    </location>
</feature>
<feature type="modified residue" description="Phosphothreonine; by BRSK1, BRSK2, DYRK2 and PDPK1" evidence="42 50 52 56 66">
    <location>
        <position position="529"/>
    </location>
</feature>
<feature type="modified residue" description="Phosphoserine; by PKA" evidence="42 47 52 66">
    <location>
        <position position="531"/>
    </location>
</feature>
<feature type="modified residue" description="Phosphothreonine; by PDPK1" evidence="47 52">
    <location>
        <position position="534"/>
    </location>
</feature>
<feature type="modified residue" description="N6-acetyllysine" evidence="2">
    <location>
        <position position="542"/>
    </location>
</feature>
<feature type="modified residue" description="Phosphothreonine; by GSK3-beta and PDPK1" evidence="35 42 47 85">
    <location>
        <position position="548"/>
    </location>
</feature>
<feature type="modified residue" description="Phosphoserine; by PDPK1" evidence="42 47 66 85">
    <location>
        <position position="552"/>
    </location>
</feature>
<feature type="modified residue" description="Phosphoserine; by PHK" evidence="47 64">
    <location>
        <position position="554"/>
    </location>
</feature>
<feature type="modified residue" description="N6-acetyllysine; alternate" evidence="2">
    <location>
        <position position="576"/>
    </location>
</feature>
<feature type="modified residue" description="N6-methyllysine; alternate" evidence="2">
    <location>
        <position position="576"/>
    </location>
</feature>
<feature type="modified residue" description="Phosphoserine; by MARK1, MARK2, MARK3, MARK4, BRSK1, BRSK2 and PHK" evidence="42 47 52 56 57 63 64 66">
    <location>
        <position position="579"/>
    </location>
</feature>
<feature type="modified residue" description="Deamidated asparagine; in tau and PHF-tau; partial" evidence="40">
    <location>
        <position position="596"/>
    </location>
</feature>
<feature type="modified residue" description="N6-acetyllysine; alternate" evidence="2">
    <location>
        <position position="598"/>
    </location>
</feature>
<feature type="modified residue" description="Phosphoserine; by PHK" evidence="64">
    <location>
        <position position="602"/>
    </location>
</feature>
<feature type="modified residue" description="N6-acetyllysine" evidence="2">
    <location>
        <position position="607"/>
    </location>
</feature>
<feature type="modified residue" description="Phosphoserine" evidence="63">
    <location>
        <position position="610"/>
    </location>
</feature>
<feature type="modified residue" description="N6-acetyllysine; alternate" evidence="2">
    <location>
        <position position="615"/>
    </location>
</feature>
<feature type="modified residue" description="Phosphoserine; by PHK" evidence="63 64">
    <location>
        <position position="622"/>
    </location>
</feature>
<feature type="modified residue" description="N6,N6-dimethyllysine; alternate" evidence="2">
    <location>
        <position position="628"/>
    </location>
</feature>
<feature type="modified residue" description="N6-acetyllysine; alternate" evidence="2">
    <location>
        <position position="628"/>
    </location>
</feature>
<feature type="modified residue" description="N6-acetyllysine; alternate" evidence="2">
    <location>
        <position position="634"/>
    </location>
</feature>
<feature type="modified residue" description="N6-acetyllysine; alternate" evidence="2">
    <location>
        <position position="638"/>
    </location>
</feature>
<feature type="modified residue" description="Phosphoserine" evidence="63">
    <location>
        <position position="641"/>
    </location>
</feature>
<feature type="modified residue" description="N6-acetyllysine; alternate" evidence="2">
    <location>
        <position position="648"/>
    </location>
</feature>
<feature type="modified residue" description="N6-acetyllysine; alternate" evidence="2">
    <location>
        <position position="660"/>
    </location>
</feature>
<feature type="modified residue" description="N6-acetyllysine; alternate" evidence="2">
    <location>
        <position position="664"/>
    </location>
</feature>
<feature type="modified residue" description="Omega-N-methylarginine" evidence="2">
    <location>
        <position position="666"/>
    </location>
</feature>
<feature type="modified residue" description="Phosphoserine; by PHK" evidence="64">
    <location>
        <position position="669"/>
    </location>
</feature>
<feature type="modified residue" description="Phosphoserine" evidence="63">
    <location>
        <position position="673"/>
    </location>
</feature>
<feature type="modified residue" description="N6-acetyllysine; alternate" evidence="2">
    <location>
        <position position="686"/>
    </location>
</feature>
<feature type="modified residue" description="N6-acetyllysine; alternate" evidence="2">
    <location>
        <position position="702"/>
    </location>
</feature>
<feature type="modified residue" description="Phosphotyrosine" evidence="2">
    <location>
        <position position="711"/>
    </location>
</feature>
<feature type="modified residue" description="Phosphoserine; by CK1 and PDPK1" evidence="36 42 47 51 52 55 66 84 85">
    <location>
        <position position="713"/>
    </location>
</feature>
<feature type="modified residue" description="Phosphoserine; alternate" evidence="84">
    <location>
        <position position="717"/>
    </location>
</feature>
<feature type="modified residue" description="Phosphothreonine" evidence="2">
    <location>
        <position position="720"/>
    </location>
</feature>
<feature type="modified residue" description="Phosphoserine; by CK1 and PDPK1" evidence="36 42 52 55 66 84 85">
    <location>
        <position position="721"/>
    </location>
</feature>
<feature type="modified residue" description="Phosphoserine" evidence="42 84">
    <location>
        <position position="726"/>
    </location>
</feature>
<feature type="modified residue" description="Phosphoserine; by CaMK2 and TTBK1" evidence="48">
    <location>
        <position position="733"/>
    </location>
</feature>
<feature type="modified residue" description="Phosphoserine; by PDPK1 and TTBK1" evidence="47 48 52 66">
    <location>
        <position position="739"/>
    </location>
</feature>
<feature type="modified residue" description="Phosphothreonine; by TTBK1" evidence="48">
    <location>
        <position position="744"/>
    </location>
</feature>
<feature type="glycosylation site" description="N-linked (Glc) (glycation) lysine; in PHF-tau; in vitro" evidence="65">
    <location>
        <position position="87"/>
    </location>
</feature>
<feature type="glycosylation site" description="N-linked (Glc) (glycation) lysine; in PHF-tau; in vitro" evidence="65">
    <location>
        <position position="383"/>
    </location>
</feature>
<feature type="glycosylation site" description="N-linked (Glc) (glycation) lysine; in PHF-tau; in vitro" evidence="65">
    <location>
        <position position="467"/>
    </location>
</feature>
<feature type="glycosylation site" description="N-linked (Glc) (glycation) lysine; in PHF-tau; in vitro" evidence="65">
    <location>
        <position position="480"/>
    </location>
</feature>
<feature type="glycosylation site" description="N-linked (Glc) (glycation) lysine; in PHF-tau; in vitro" evidence="65">
    <location>
        <position position="491"/>
    </location>
</feature>
<feature type="glycosylation site" description="O-linked (GlcNAc) serine" evidence="55">
    <location>
        <position position="525"/>
    </location>
</feature>
<feature type="glycosylation site" description="N-linked (Glc) (glycation) lysine; in PHF-tau; in vitro" evidence="65">
    <location>
        <position position="542"/>
    </location>
</feature>
<feature type="glycosylation site" description="N-linked (Glc) (glycation) lysine; in PHF-tau; in vitro" evidence="65">
    <location>
        <position position="551"/>
    </location>
</feature>
<feature type="glycosylation site" description="O-linked (GlcNAc) serine" evidence="55">
    <location>
        <position position="555"/>
    </location>
</feature>
<feature type="glycosylation site" description="N-linked (Glc) (glycation) lysine; in PHF-tau; in vitro" evidence="65">
    <location>
        <position position="576"/>
    </location>
</feature>
<feature type="glycosylation site" description="N-linked (Glc) (glycation) lysine; in PHF-tau; in vitro" evidence="65">
    <location>
        <position position="597"/>
    </location>
</feature>
<feature type="glycosylation site" description="N-linked (Glc) (glycation) lysine; in PHF-tau; in vitro" evidence="65">
    <location>
        <position position="598"/>
    </location>
</feature>
<feature type="glycosylation site" description="N-linked (Glc) (glycation) lysine; in PHF-tau; in vitro" evidence="65">
    <location>
        <position position="664"/>
    </location>
</feature>
<feature type="glycosylation site" description="N-linked (Glc) (glycation) lysine; in PHF-tau; in vitro" evidence="65">
    <location>
        <position position="670"/>
    </location>
</feature>
<feature type="glycosylation site" description="N-linked (Glc) (glycation) lysine; in PHF-tau; in vitro" evidence="65">
    <location>
        <position position="686"/>
    </location>
</feature>
<feature type="glycosylation site" description="O-linked (GlcNAc) serine; alternate" evidence="55">
    <location>
        <position position="717"/>
    </location>
</feature>
<feature type="disulfide bond" evidence="1">
    <location>
        <begin position="608"/>
        <end position="639"/>
    </location>
</feature>
<feature type="cross-link" description="Glycyl lysine isopeptide (Lys-Gly) (interchain with G-Cter in ubiquitin)" evidence="2">
    <location>
        <position position="44"/>
    </location>
</feature>
<feature type="cross-link" description="Glycyl lysine isopeptide (Lys-Gly) (interchain with G-Cter in ubiquitin); in PHF-tau" evidence="47">
    <location>
        <position position="571"/>
    </location>
</feature>
<feature type="cross-link" description="Glycyl lysine isopeptide (Lys-Gly) (interchain with G-Cter in ubiquitin); alternate" evidence="2">
    <location>
        <position position="576"/>
    </location>
</feature>
<feature type="cross-link" description="Glycyl lysine isopeptide (Lys-Gly) (interchain with G-Cter in ubiquitin)" evidence="2">
    <location>
        <position position="584"/>
    </location>
</feature>
<feature type="cross-link" description="Glycyl lysine isopeptide (Lys-Gly) (interchain with G-Cter in ubiquitin); alternate" evidence="2">
    <location>
        <position position="598"/>
    </location>
</feature>
<feature type="cross-link" description="Glycyl lysine isopeptide (Lys-Gly) (interchain with G-Cter in ubiquitin); alternate" evidence="2">
    <location>
        <position position="615"/>
    </location>
</feature>
<feature type="cross-link" description="Glycyl lysine isopeptide (Lys-Gly) (interchain with G-Cter in ubiquitin); in PHF-tau" evidence="47">
    <location>
        <position position="628"/>
    </location>
</feature>
<feature type="cross-link" description="Glycyl lysine isopeptide (Lys-Gly) (interchain with G-Cter in ubiquitin); alternate" evidence="2">
    <location>
        <position position="634"/>
    </location>
</feature>
<feature type="cross-link" description="Glycyl lysine isopeptide (Lys-Gly) (interchain with G-Cter in ubiquitin); alternate" evidence="2">
    <location>
        <position position="638"/>
    </location>
</feature>
<feature type="cross-link" description="Glycyl lysine isopeptide (Lys-Gly) (interchain with G-Cter in ubiquitin); alternate" evidence="2">
    <location>
        <position position="648"/>
    </location>
</feature>
<feature type="cross-link" description="Glycyl lysine isopeptide (Lys-Gly) (interchain with G-Cter in ubiquitin); alternate" evidence="2">
    <location>
        <position position="660"/>
    </location>
</feature>
<feature type="cross-link" description="Glycyl lysine isopeptide (Lys-Gly) (interchain with G-Cter in ubiquitin); alternate" evidence="2">
    <location>
        <position position="664"/>
    </location>
</feature>
<feature type="cross-link" description="Glycyl lysine isopeptide (Lys-Gly) (interchain with G-Cter in ubiquitin); in PHF-tau" evidence="47">
    <location>
        <position position="670"/>
    </location>
</feature>
<feature type="cross-link" description="Glycyl lysine isopeptide (Lys-Gly) (interchain with G-Cter in ubiquitin); alternate" evidence="2">
    <location>
        <position position="686"/>
    </location>
</feature>
<feature type="cross-link" description="Glycyl lysine isopeptide (Lys-Gly) (interchain with G-Cter in ubiquitin)" evidence="2">
    <location>
        <position position="692"/>
    </location>
</feature>
<feature type="cross-link" description="Glycyl lysine isopeptide (Lys-Gly) (interchain with G-Cter in ubiquitin); alternate" evidence="2">
    <location>
        <position position="702"/>
    </location>
</feature>
<feature type="splice variant" id="VSP_003175" description="In isoform Tau-A." evidence="75">
    <original>MAEPRQEFEVMEDHAGTYGLGDRKDQGGYTMHQDQEGDTDAGLK</original>
    <variation>MLRALQQRKR</variation>
    <location>
        <begin position="1"/>
        <end position="44"/>
    </location>
</feature>
<feature type="splice variant" id="VSP_003176" description="In isoform Tau-A, isoform Tau-D and isoform Fetal-tau." evidence="72 74 75 76 79">
    <location>
        <begin position="45"/>
        <end position="73"/>
    </location>
</feature>
<feature type="splice variant" id="VSP_003177" description="In isoform Tau-A, isoform Tau-B, isoform Tau-D, isoform Tau-E and isoform Fetal-tau." evidence="72 73 74 75 76 78 79">
    <location>
        <begin position="74"/>
        <end position="102"/>
    </location>
</feature>
<feature type="splice variant" id="VSP_003178" description="In isoform Tau-A." evidence="75">
    <location>
        <begin position="103"/>
        <end position="104"/>
    </location>
</feature>
<feature type="splice variant" id="VSP_003179" description="In isoform Tau-A, isoform Tau-B, isoform Tau-C, isoform Tau-D, isoform Tau-E, isoform Tau-F and isoform Fetal-tau." evidence="72 73 74 75 76 78 79">
    <location>
        <begin position="125"/>
        <end position="375"/>
    </location>
</feature>
<feature type="splice variant" id="VSP_003180" description="In isoform Tau-A, isoform Tau-B, isoform Tau-C, isoform Tau-D, isoform Tau-E, isoform Tau-F and isoform Fetal-tau." evidence="72 73 74 75 76 78 79">
    <location>
        <begin position="395"/>
        <end position="460"/>
    </location>
</feature>
<feature type="splice variant" id="VSP_026780" description="In isoform Tau-G." evidence="80">
    <original>S</original>
    <variation>SATKQVQRRPPPAGPRSER</variation>
    <location>
        <position position="502"/>
    </location>
</feature>
<feature type="splice variant" id="VSP_003181" description="In isoform Tau-A, isoform Tau-B, isoform Tau-C and isoform Fetal-tau." evidence="72 73 75 76 79">
    <location>
        <begin position="592"/>
        <end position="622"/>
    </location>
</feature>
<feature type="sequence variant" id="VAR_019660" description="In FTD1; reduces the ability of tau to promote microtubule assembly and promotes fibril formation in vitro; dbSNP:rs63750959." evidence="28">
    <original>R</original>
    <variation>H</variation>
    <location>
        <position position="5"/>
    </location>
</feature>
<feature type="sequence variant" id="VAR_019661" description="In PSNP1; delays assembly initiation and lowers the mass of microtubules formed; but the assembly rate is increased compared to normal tau; dbSNP:rs63750959." evidence="29">
    <original>R</original>
    <variation>L</variation>
    <location>
        <position position="5"/>
    </location>
</feature>
<feature type="sequence variant" id="VAR_064622" description="In dbSNP:rs144611688." evidence="54">
    <original>T</original>
    <variation>M</variation>
    <location>
        <position position="17"/>
    </location>
</feature>
<feature type="sequence variant" id="VAR_064623" description="In dbSNP:rs748728879." evidence="54">
    <original>T</original>
    <variation>A</variation>
    <location>
        <position position="30"/>
    </location>
</feature>
<feature type="sequence variant" id="VAR_010340" description="Risk factor for PSNP1; dbSNP:rs62063786." evidence="11 67">
    <original>D</original>
    <variation>N</variation>
    <location>
        <position position="285"/>
    </location>
</feature>
<feature type="sequence variant" id="VAR_010341" description="Risk factor for PSNP1; dbSNP:rs62063787." evidence="11 67">
    <original>V</original>
    <variation>A</variation>
    <location>
        <position position="289"/>
    </location>
</feature>
<feature type="sequence variant" id="VAR_056121" description="In dbSNP:rs17651549.">
    <original>R</original>
    <variation>W</variation>
    <location>
        <position position="370"/>
    </location>
</feature>
<feature type="sequence variant" id="VAR_010342" description="In dbSNP:rs2258689." evidence="32 41 67">
    <original>Y</original>
    <variation>H</variation>
    <location>
        <position position="441"/>
    </location>
</feature>
<feature type="sequence variant" id="VAR_010343" description="In dbSNP:rs10445337." evidence="67">
    <original>S</original>
    <variation>P</variation>
    <location>
        <position position="447"/>
    </location>
</feature>
<feature type="sequence variant" id="VAR_010344" description="In PIDB; reduces the ability to promote microtubule assembly by 70%; dbSNP:rs63750129." evidence="17 19">
    <original>K</original>
    <variation>T</variation>
    <location>
        <position position="574"/>
    </location>
</feature>
<feature type="sequence variant" id="VAR_019662" description="In FTD1; less able to promote microtubule assembly than wild-type tau; dbSNP:rs63750349." evidence="31">
    <original>L</original>
    <variation>V</variation>
    <location>
        <position position="583"/>
    </location>
</feature>
<feature type="sequence variant" id="VAR_010345" description="In FTD1; dbSNP:rs63750376." evidence="68 71">
    <original>G</original>
    <variation>V</variation>
    <location>
        <position position="589"/>
    </location>
</feature>
<feature type="sequence variant" id="VAR_084361" description="In FTD1; increased aggregation propensity and altered binding affinity towards microtubules and F-actin; dbSNP:rs1247408229." evidence="62">
    <original>G</original>
    <variation>R</variation>
    <location>
        <position position="590"/>
    </location>
</feature>
<feature type="sequence variant" id="VAR_010346" description="In FTD1; with parkinsonism; dbSNP:rs63750756." evidence="9 10 15 30 70">
    <original>N</original>
    <variation>K</variation>
    <location>
        <position position="596"/>
    </location>
</feature>
<feature type="sequence variant" id="VAR_010347" description="In FTD1; dbSNP:rs63750688." evidence="71">
    <location>
        <position position="597"/>
    </location>
</feature>
<feature type="sequence variant" id="VAR_019663" description="In FTD1; reduced the ability of tau to promote microtubule assembly without having a significant effect on tau filament formation; effects at both the RNA and the protein level; dbSNP:rs63750416." evidence="23 27">
    <original>N</original>
    <variation>H</variation>
    <location>
        <position position="613"/>
    </location>
</feature>
<feature type="sequence variant" id="VAR_019664" description="In PSNP1/atypical PSNP1; heterozygosity may be a risk factor for both a PSNP1-like syndrome and Parkinson disease; reduced the ability of tau to promote microtubule assembly without having a significant effect on tau filament formation; effects at both the RNA and the protein level." evidence="20 27 37 38">
    <location>
        <position position="613"/>
    </location>
</feature>
<feature type="sequence variant" id="VAR_064624" description="In dbSNP:rs116733906." evidence="54">
    <original>V</original>
    <variation>I</variation>
    <location>
        <position position="617"/>
    </location>
</feature>
<feature type="sequence variant" id="VAR_010348" description="In FTD1; most common mutation; reduction in the ability to promote microtubule assembly; accelerates aggregation of tau into filaments; dbSNP:rs63751273." evidence="7 68 69 70 71">
    <original>P</original>
    <variation>L</variation>
    <location>
        <position position="618"/>
    </location>
</feature>
<feature type="sequence variant" id="VAR_010349" description="In FTD1 and CBD; reduction in the ability to promote microtubule assembly; dbSNP:rs63751438." evidence="8 12 16 46">
    <original>P</original>
    <variation>S</variation>
    <location>
        <position position="618"/>
    </location>
</feature>
<feature type="sequence variant" id="VAR_037439" description="In PSNP1; dbSNP:rs63751391." evidence="45">
    <original>G</original>
    <variation>V</variation>
    <location>
        <position position="620"/>
    </location>
</feature>
<feature type="sequence variant" id="VAR_010350" description="In FTD1; minimal parkinsonism; very early age of onset; dbSNP:rs63751165." evidence="6">
    <original>S</original>
    <variation>N</variation>
    <location>
        <position position="622"/>
    </location>
</feature>
<feature type="sequence variant" id="VAR_037440" description="In FTD1; dbSNP:rs63750092." evidence="43">
    <original>K</original>
    <variation>M</variation>
    <location>
        <position position="634"/>
    </location>
</feature>
<feature type="sequence variant" id="VAR_019665" description="In PIDB; markedly reduced ability of tau to promote microtubule assembly; dbSNP:rs63750635." evidence="26">
    <original>S</original>
    <variation>F</variation>
    <location>
        <position position="637"/>
    </location>
</feature>
<feature type="sequence variant" id="VAR_010351" description="In FTD1; ultrastructural and biochemical characteristics indistinguishable from Alzheimer disease; accelerates aggregation of tau into filaments; dbSNP:rs63750570." evidence="7 67">
    <original>V</original>
    <variation>M</variation>
    <location>
        <position position="654"/>
    </location>
</feature>
<feature type="sequence variant" id="VAR_019666" description="In FTD1; dbSNP:rs63750711." evidence="18">
    <original>E</original>
    <variation>V</variation>
    <location>
        <position position="659"/>
    </location>
</feature>
<feature type="sequence variant" id="VAR_019667" description="In fatal respiratory hypoventilation; unusual apparent autosomal recessive inheritance; reduced binding to microtubules as well as increased fibrillization and aggregation; dbSNP:rs63750425." evidence="34">
    <original>S</original>
    <variation>L</variation>
    <location>
        <position position="669"/>
    </location>
</feature>
<feature type="sequence variant" id="VAR_019668" description="In PIDB; 90% reduction in the rate of microtubule assembly; dbSNP:rs63751264." evidence="24">
    <original>K</original>
    <variation>I</variation>
    <location>
        <position position="686"/>
    </location>
</feature>
<feature type="sequence variant" id="VAR_010352" description="In PIDB; in vitro the mutation reduces the ability of tau to promote microtubule assembly by 25 to 30%; dbSNP:rs63750512." evidence="13 19">
    <original>G</original>
    <variation>R</variation>
    <location>
        <position position="706"/>
    </location>
</feature>
<feature type="sequence variant" id="VAR_010353" description="In FTD1/Alzheimer disease; accelerates aggregation of tau into filaments; reduces tau phosphorylation in cells compared to both the wild-type and other mutant forms; dbSNP:rs63750424." evidence="7 21 25 33 59 68 71">
    <original>R</original>
    <variation>W</variation>
    <location>
        <position position="723"/>
    </location>
</feature>
<feature type="mutagenesis site" description="No association with plasma membrane.">
    <original>S</original>
    <variation>E</variation>
    <location>
        <position position="515"/>
    </location>
</feature>
<feature type="mutagenesis site" description="No association with plasma membrane.">
    <original>S</original>
    <variation>E</variation>
    <location>
        <position position="516"/>
    </location>
</feature>
<feature type="mutagenesis site" description="No association with plasma membrane.">
    <original>S</original>
    <variation>E</variation>
    <location>
        <position position="519"/>
    </location>
</feature>
<feature type="mutagenesis site" description="No decrease in microtubule-binding and nucleation activity after in vitro phosphorylation of mutant protein.">
    <original>S</original>
    <variation>A</variation>
    <location>
        <position position="531"/>
    </location>
</feature>
<feature type="mutagenesis site" description="50% Decrease in microtubule-binding after in vitro phosphorylation of mutant protein.">
    <original>T</original>
    <variation>A</variation>
    <location>
        <position position="548"/>
    </location>
</feature>
<feature type="mutagenesis site" description="No association with plasma membrane.">
    <original>T</original>
    <variation>E</variation>
    <location>
        <position position="548"/>
    </location>
</feature>
<feature type="mutagenesis site" description="70% decrease in microtubule-binding after in vitro phosphorylation of mutant protein.">
    <original>S</original>
    <variation>A</variation>
    <location>
        <position position="552"/>
    </location>
</feature>
<feature type="mutagenesis site" description="No association with plasma membrane.">
    <original>S</original>
    <variation>E</variation>
    <location>
        <position position="552"/>
    </location>
</feature>
<feature type="mutagenesis site" description="8% decrease in microtubule-binding after in vitro phosphorylation of mutant protein.">
    <original>S</original>
    <variation>A</variation>
    <location>
        <position position="579"/>
    </location>
</feature>
<feature type="mutagenesis site" description="No association with plasma membrane.">
    <original>S</original>
    <variation>E</variation>
    <location>
        <position position="713"/>
    </location>
</feature>
<feature type="mutagenesis site" description="No association with plasma membrane.">
    <original>S</original>
    <variation>E</variation>
    <location>
        <position position="721"/>
    </location>
</feature>
<feature type="mutagenesis site" description="No association with plasma membrane.">
    <original>S</original>
    <variation>E</variation>
    <location>
        <position position="726"/>
    </location>
</feature>
<feature type="mutagenesis site" description="No association with plasma membrane.">
    <original>S</original>
    <variation>E</variation>
    <location>
        <position position="730"/>
    </location>
</feature>
<feature type="mutagenesis site" description="No association with plasma membrane.">
    <original>S</original>
    <variation>E</variation>
    <location>
        <position position="739"/>
    </location>
</feature>
<feature type="sequence conflict" description="In Ref. 6; AAU45390." evidence="80" ref="6">
    <original>L</original>
    <variation>P</variation>
    <location>
        <position position="48"/>
    </location>
</feature>
<feature type="sequence conflict" description="In Ref. 5; AAC04277." evidence="80" ref="5">
    <original>H</original>
    <variation>L</variation>
    <location>
        <position position="414"/>
    </location>
</feature>
<feature type="sequence conflict" description="In Ref. 12; AAS17881." evidence="80" ref="12">
    <original>K</original>
    <variation>M</variation>
    <location>
        <position position="557"/>
    </location>
</feature>
<feature type="sequence conflict" description="In Ref. 12; AAS17881." evidence="80" ref="12">
    <original>K</original>
    <variation>S</variation>
    <location>
        <position position="591"/>
    </location>
</feature>
<feature type="sequence conflict" description="In Ref. 17; AA sequence." evidence="80" ref="17">
    <original>V</original>
    <variation>Q</variation>
    <location>
        <position position="617"/>
    </location>
</feature>
<feature type="sequence conflict" description="In Ref. 17; AA sequence." evidence="80" ref="17">
    <original>S</original>
    <variation>K</variation>
    <location>
        <position position="622"/>
    </location>
</feature>
<feature type="strand" evidence="91">
    <location>
        <begin position="7"/>
        <end position="9"/>
    </location>
</feature>
<feature type="helix" evidence="89">
    <location>
        <begin position="60"/>
        <end position="62"/>
    </location>
</feature>
<feature type="turn" evidence="89">
    <location>
        <begin position="63"/>
        <end position="65"/>
    </location>
</feature>
<feature type="turn" evidence="90">
    <location>
        <begin position="579"/>
        <end position="582"/>
    </location>
</feature>
<feature type="strand" evidence="88">
    <location>
        <begin position="587"/>
        <end position="590"/>
    </location>
</feature>
<feature type="strand" evidence="92">
    <location>
        <begin position="592"/>
        <end position="610"/>
    </location>
</feature>
<feature type="strand" evidence="93">
    <location>
        <begin position="613"/>
        <end position="615"/>
    </location>
</feature>
<feature type="strand" evidence="87">
    <location>
        <begin position="618"/>
        <end position="620"/>
    </location>
</feature>
<feature type="strand" evidence="99">
    <location>
        <begin position="624"/>
        <end position="626"/>
    </location>
</feature>
<feature type="strand" evidence="95">
    <location>
        <begin position="629"/>
        <end position="631"/>
    </location>
</feature>
<feature type="strand" evidence="100">
    <location>
        <begin position="634"/>
        <end position="643"/>
    </location>
</feature>
<feature type="strand" evidence="100">
    <location>
        <begin position="645"/>
        <end position="648"/>
    </location>
</feature>
<feature type="strand" evidence="100">
    <location>
        <begin position="654"/>
        <end position="660"/>
    </location>
</feature>
<feature type="strand" evidence="100">
    <location>
        <begin position="662"/>
        <end position="665"/>
    </location>
</feature>
<feature type="strand" evidence="100">
    <location>
        <begin position="667"/>
        <end position="671"/>
    </location>
</feature>
<feature type="strand" evidence="100">
    <location>
        <begin position="673"/>
        <end position="679"/>
    </location>
</feature>
<feature type="strand" evidence="92">
    <location>
        <begin position="682"/>
        <end position="684"/>
    </location>
</feature>
<feature type="strand" evidence="100">
    <location>
        <begin position="685"/>
        <end position="695"/>
    </location>
</feature>
<feature type="strand" evidence="96">
    <location>
        <begin position="698"/>
        <end position="703"/>
    </location>
</feature>
<feature type="strand" evidence="94">
    <location>
        <begin position="709"/>
        <end position="712"/>
    </location>
</feature>
<feature type="strand" evidence="97">
    <location>
        <begin position="716"/>
        <end position="720"/>
    </location>
</feature>
<feature type="strand" evidence="94">
    <location>
        <begin position="723"/>
        <end position="732"/>
    </location>
</feature>
<feature type="strand" evidence="98">
    <location>
        <begin position="734"/>
        <end position="736"/>
    </location>
</feature>
<feature type="strand" evidence="94">
    <location>
        <begin position="741"/>
        <end position="751"/>
    </location>
</feature>
<feature type="strand" evidence="94">
    <location>
        <begin position="753"/>
        <end position="755"/>
    </location>
</feature>
<keyword id="KW-0002">3D-structure</keyword>
<keyword id="KW-0007">Acetylation</keyword>
<keyword id="KW-0025">Alternative splicing</keyword>
<keyword id="KW-0026">Alzheimer disease</keyword>
<keyword id="KW-1003">Cell membrane</keyword>
<keyword id="KW-0966">Cell projection</keyword>
<keyword id="KW-0963">Cytoplasm</keyword>
<keyword id="KW-0206">Cytoskeleton</keyword>
<keyword id="KW-0903">Direct protein sequencing</keyword>
<keyword id="KW-0225">Disease variant</keyword>
<keyword id="KW-1015">Disulfide bond</keyword>
<keyword id="KW-0971">Glycation</keyword>
<keyword id="KW-0325">Glycoprotein</keyword>
<keyword id="KW-1017">Isopeptide bond</keyword>
<keyword id="KW-0472">Membrane</keyword>
<keyword id="KW-0488">Methylation</keyword>
<keyword id="KW-0493">Microtubule</keyword>
<keyword id="KW-0523">Neurodegeneration</keyword>
<keyword id="KW-0908">Parkinsonism</keyword>
<keyword id="KW-0597">Phosphoprotein</keyword>
<keyword id="KW-1267">Proteomics identification</keyword>
<keyword id="KW-1185">Reference proteome</keyword>
<keyword id="KW-0677">Repeat</keyword>
<keyword id="KW-0964">Secreted</keyword>
<keyword id="KW-0832">Ubl conjugation</keyword>